<dbReference type="EMBL" id="V00494">
    <property type="protein sequence ID" value="CAA23753.1"/>
    <property type="molecule type" value="mRNA"/>
</dbReference>
<dbReference type="EMBL" id="V00495">
    <property type="protein sequence ID" value="CAA23754.1"/>
    <property type="molecule type" value="mRNA"/>
</dbReference>
<dbReference type="EMBL" id="M12523">
    <property type="protein sequence ID" value="AAA98797.1"/>
    <property type="molecule type" value="Genomic_DNA"/>
</dbReference>
<dbReference type="EMBL" id="M12523">
    <property type="protein sequence ID" value="AAA98798.1"/>
    <property type="molecule type" value="Genomic_DNA"/>
</dbReference>
<dbReference type="EMBL" id="AF190168">
    <property type="protein sequence ID" value="AAF01333.1"/>
    <property type="molecule type" value="mRNA"/>
</dbReference>
<dbReference type="EMBL" id="AF542069">
    <property type="protein sequence ID" value="AAN17825.1"/>
    <property type="molecule type" value="mRNA"/>
</dbReference>
<dbReference type="EMBL" id="A06977">
    <property type="protein sequence ID" value="CAA00606.1"/>
    <property type="molecule type" value="mRNA"/>
</dbReference>
<dbReference type="EMBL" id="AY728024">
    <property type="protein sequence ID" value="AAU21642.1"/>
    <property type="molecule type" value="mRNA"/>
</dbReference>
<dbReference type="EMBL" id="DQ986150">
    <property type="protein sequence ID" value="ABJ16448.1"/>
    <property type="molecule type" value="mRNA"/>
</dbReference>
<dbReference type="EMBL" id="AY544124">
    <property type="protein sequence ID" value="AAT11155.1"/>
    <property type="molecule type" value="mRNA"/>
</dbReference>
<dbReference type="EMBL" id="AY550967">
    <property type="protein sequence ID" value="AAT52213.1"/>
    <property type="molecule type" value="mRNA"/>
</dbReference>
<dbReference type="EMBL" id="AF116645">
    <property type="protein sequence ID" value="AAF71067.1"/>
    <property type="molecule type" value="mRNA"/>
</dbReference>
<dbReference type="EMBL" id="AF118090">
    <property type="protein sequence ID" value="AAF22034.1"/>
    <property type="status" value="ALT_INIT"/>
    <property type="molecule type" value="mRNA"/>
</dbReference>
<dbReference type="EMBL" id="AF119840">
    <property type="protein sequence ID" value="AAF69594.1"/>
    <property type="molecule type" value="mRNA"/>
</dbReference>
<dbReference type="EMBL" id="AF119890">
    <property type="protein sequence ID" value="AAF69644.1"/>
    <property type="status" value="ALT_INIT"/>
    <property type="molecule type" value="mRNA"/>
</dbReference>
<dbReference type="EMBL" id="AF130077">
    <property type="protein sequence ID" value="AAG35503.1"/>
    <property type="status" value="ALT_INIT"/>
    <property type="molecule type" value="mRNA"/>
</dbReference>
<dbReference type="EMBL" id="CR749331">
    <property type="protein sequence ID" value="CAH18185.1"/>
    <property type="molecule type" value="mRNA"/>
</dbReference>
<dbReference type="EMBL" id="EF649953">
    <property type="protein sequence ID" value="ABS29264.1"/>
    <property type="molecule type" value="Genomic_DNA"/>
</dbReference>
<dbReference type="EMBL" id="AC108157">
    <property type="status" value="NOT_ANNOTATED_CDS"/>
    <property type="molecule type" value="Genomic_DNA"/>
</dbReference>
<dbReference type="EMBL" id="CH471057">
    <property type="protein sequence ID" value="EAX05676.1"/>
    <property type="molecule type" value="Genomic_DNA"/>
</dbReference>
<dbReference type="EMBL" id="BC014308">
    <property type="protein sequence ID" value="AAH14308.1"/>
    <property type="molecule type" value="mRNA"/>
</dbReference>
<dbReference type="EMBL" id="BC034023">
    <property type="protein sequence ID" value="AAH34023.1"/>
    <property type="molecule type" value="mRNA"/>
</dbReference>
<dbReference type="EMBL" id="BC035969">
    <property type="protein sequence ID" value="AAH35969.1"/>
    <property type="molecule type" value="mRNA"/>
</dbReference>
<dbReference type="EMBL" id="BC036003">
    <property type="protein sequence ID" value="AAH36003.1"/>
    <property type="molecule type" value="mRNA"/>
</dbReference>
<dbReference type="EMBL" id="BC041789">
    <property type="protein sequence ID" value="AAH41789.1"/>
    <property type="molecule type" value="mRNA"/>
</dbReference>
<dbReference type="EMBL" id="U22961">
    <property type="protein sequence ID" value="AAA64922.1"/>
    <property type="molecule type" value="mRNA"/>
</dbReference>
<dbReference type="EMBL" id="AY358313">
    <property type="protein sequence ID" value="AAQ89947.1"/>
    <property type="molecule type" value="mRNA"/>
</dbReference>
<dbReference type="EMBL" id="AH002596">
    <property type="protein sequence ID" value="AAA51688.1"/>
    <property type="molecule type" value="Genomic_DNA"/>
</dbReference>
<dbReference type="CCDS" id="CCDS3555.1">
    <molecule id="P02768-1"/>
</dbReference>
<dbReference type="PIR" id="A93743">
    <property type="entry name" value="ABHUS"/>
</dbReference>
<dbReference type="RefSeq" id="NP_000468.1">
    <molecule id="P02768-1"/>
    <property type="nucleotide sequence ID" value="NM_000477.7"/>
</dbReference>
<dbReference type="PDB" id="1AO6">
    <property type="method" value="X-ray"/>
    <property type="resolution" value="2.50 A"/>
    <property type="chains" value="A/B=25-609"/>
</dbReference>
<dbReference type="PDB" id="1BJ5">
    <property type="method" value="X-ray"/>
    <property type="resolution" value="2.50 A"/>
    <property type="chains" value="A=25-609"/>
</dbReference>
<dbReference type="PDB" id="1BKE">
    <property type="method" value="X-ray"/>
    <property type="resolution" value="3.15 A"/>
    <property type="chains" value="A=28-608"/>
</dbReference>
<dbReference type="PDB" id="1BM0">
    <property type="method" value="X-ray"/>
    <property type="resolution" value="2.50 A"/>
    <property type="chains" value="A/B=25-609"/>
</dbReference>
<dbReference type="PDB" id="1E78">
    <property type="method" value="X-ray"/>
    <property type="resolution" value="2.60 A"/>
    <property type="chains" value="A/B=25-609"/>
</dbReference>
<dbReference type="PDB" id="1E7A">
    <property type="method" value="X-ray"/>
    <property type="resolution" value="2.20 A"/>
    <property type="chains" value="A/B=25-609"/>
</dbReference>
<dbReference type="PDB" id="1E7B">
    <property type="method" value="X-ray"/>
    <property type="resolution" value="2.38 A"/>
    <property type="chains" value="A/B=25-609"/>
</dbReference>
<dbReference type="PDB" id="1E7C">
    <property type="method" value="X-ray"/>
    <property type="resolution" value="2.40 A"/>
    <property type="chains" value="A=25-609"/>
</dbReference>
<dbReference type="PDB" id="1E7E">
    <property type="method" value="X-ray"/>
    <property type="resolution" value="2.50 A"/>
    <property type="chains" value="A=25-609"/>
</dbReference>
<dbReference type="PDB" id="1E7F">
    <property type="method" value="X-ray"/>
    <property type="resolution" value="2.43 A"/>
    <property type="chains" value="A=25-609"/>
</dbReference>
<dbReference type="PDB" id="1E7G">
    <property type="method" value="X-ray"/>
    <property type="resolution" value="2.50 A"/>
    <property type="chains" value="A=25-609"/>
</dbReference>
<dbReference type="PDB" id="1E7H">
    <property type="method" value="X-ray"/>
    <property type="resolution" value="2.43 A"/>
    <property type="chains" value="A=25-609"/>
</dbReference>
<dbReference type="PDB" id="1E7I">
    <property type="method" value="X-ray"/>
    <property type="resolution" value="2.70 A"/>
    <property type="chains" value="A=25-609"/>
</dbReference>
<dbReference type="PDB" id="1GNI">
    <property type="method" value="X-ray"/>
    <property type="resolution" value="2.40 A"/>
    <property type="chains" value="A=25-609"/>
</dbReference>
<dbReference type="PDB" id="1GNJ">
    <property type="method" value="X-ray"/>
    <property type="resolution" value="2.60 A"/>
    <property type="chains" value="A=25-609"/>
</dbReference>
<dbReference type="PDB" id="1H9Z">
    <property type="method" value="X-ray"/>
    <property type="resolution" value="2.50 A"/>
    <property type="chains" value="A=25-609"/>
</dbReference>
<dbReference type="PDB" id="1HA2">
    <property type="method" value="X-ray"/>
    <property type="resolution" value="2.50 A"/>
    <property type="chains" value="A=25-609"/>
</dbReference>
<dbReference type="PDB" id="1HK1">
    <property type="method" value="X-ray"/>
    <property type="resolution" value="2.65 A"/>
    <property type="chains" value="A=25-609"/>
</dbReference>
<dbReference type="PDB" id="1HK2">
    <property type="method" value="X-ray"/>
    <property type="resolution" value="2.80 A"/>
    <property type="chains" value="A=25-609"/>
</dbReference>
<dbReference type="PDB" id="1HK3">
    <property type="method" value="X-ray"/>
    <property type="resolution" value="2.80 A"/>
    <property type="chains" value="A=25-609"/>
</dbReference>
<dbReference type="PDB" id="1HK4">
    <property type="method" value="X-ray"/>
    <property type="resolution" value="2.40 A"/>
    <property type="chains" value="A=25-609"/>
</dbReference>
<dbReference type="PDB" id="1HK5">
    <property type="method" value="X-ray"/>
    <property type="resolution" value="2.70 A"/>
    <property type="chains" value="A=25-609"/>
</dbReference>
<dbReference type="PDB" id="1N5U">
    <property type="method" value="X-ray"/>
    <property type="resolution" value="1.90 A"/>
    <property type="chains" value="A=25-609"/>
</dbReference>
<dbReference type="PDB" id="1O9X">
    <property type="method" value="X-ray"/>
    <property type="resolution" value="3.20 A"/>
    <property type="chains" value="A=25-609"/>
</dbReference>
<dbReference type="PDB" id="1TF0">
    <property type="method" value="X-ray"/>
    <property type="resolution" value="2.70 A"/>
    <property type="chains" value="A=25-596"/>
</dbReference>
<dbReference type="PDB" id="1UOR">
    <property type="method" value="X-ray"/>
    <property type="resolution" value="2.80 A"/>
    <property type="chains" value="A=25-609"/>
</dbReference>
<dbReference type="PDB" id="1YSX">
    <property type="method" value="NMR"/>
    <property type="chains" value="A=409-609"/>
</dbReference>
<dbReference type="PDB" id="2BX8">
    <property type="method" value="X-ray"/>
    <property type="resolution" value="2.70 A"/>
    <property type="chains" value="A/B=25-609"/>
</dbReference>
<dbReference type="PDB" id="2BXA">
    <property type="method" value="X-ray"/>
    <property type="resolution" value="2.35 A"/>
    <property type="chains" value="A/B=25-609"/>
</dbReference>
<dbReference type="PDB" id="2BXB">
    <property type="method" value="X-ray"/>
    <property type="resolution" value="3.20 A"/>
    <property type="chains" value="A/B=25-609"/>
</dbReference>
<dbReference type="PDB" id="2BXC">
    <property type="method" value="X-ray"/>
    <property type="resolution" value="3.10 A"/>
    <property type="chains" value="A/B=25-609"/>
</dbReference>
<dbReference type="PDB" id="2BXD">
    <property type="method" value="X-ray"/>
    <property type="resolution" value="3.05 A"/>
    <property type="chains" value="A/B=25-609"/>
</dbReference>
<dbReference type="PDB" id="2BXE">
    <property type="method" value="X-ray"/>
    <property type="resolution" value="2.95 A"/>
    <property type="chains" value="A/B=25-609"/>
</dbReference>
<dbReference type="PDB" id="2BXF">
    <property type="method" value="X-ray"/>
    <property type="resolution" value="2.95 A"/>
    <property type="chains" value="A/B=25-609"/>
</dbReference>
<dbReference type="PDB" id="2BXG">
    <property type="method" value="X-ray"/>
    <property type="resolution" value="2.70 A"/>
    <property type="chains" value="A/B=25-609"/>
</dbReference>
<dbReference type="PDB" id="2BXH">
    <property type="method" value="X-ray"/>
    <property type="resolution" value="2.25 A"/>
    <property type="chains" value="A/B=25-609"/>
</dbReference>
<dbReference type="PDB" id="2BXI">
    <property type="method" value="X-ray"/>
    <property type="resolution" value="2.50 A"/>
    <property type="chains" value="A=25-609"/>
</dbReference>
<dbReference type="PDB" id="2BXK">
    <property type="method" value="X-ray"/>
    <property type="resolution" value="2.40 A"/>
    <property type="chains" value="A=25-609"/>
</dbReference>
<dbReference type="PDB" id="2BXL">
    <property type="method" value="X-ray"/>
    <property type="resolution" value="2.60 A"/>
    <property type="chains" value="A=25-609"/>
</dbReference>
<dbReference type="PDB" id="2BXM">
    <property type="method" value="X-ray"/>
    <property type="resolution" value="2.50 A"/>
    <property type="chains" value="A=25-609"/>
</dbReference>
<dbReference type="PDB" id="2BXN">
    <property type="method" value="X-ray"/>
    <property type="resolution" value="2.65 A"/>
    <property type="chains" value="A=25-609"/>
</dbReference>
<dbReference type="PDB" id="2BXO">
    <property type="method" value="X-ray"/>
    <property type="resolution" value="2.60 A"/>
    <property type="chains" value="A=25-609"/>
</dbReference>
<dbReference type="PDB" id="2BXP">
    <property type="method" value="X-ray"/>
    <property type="resolution" value="2.30 A"/>
    <property type="chains" value="A=25-609"/>
</dbReference>
<dbReference type="PDB" id="2BXQ">
    <property type="method" value="X-ray"/>
    <property type="resolution" value="2.60 A"/>
    <property type="chains" value="A=25-609"/>
</dbReference>
<dbReference type="PDB" id="2ESG">
    <property type="method" value="X-ray"/>
    <property type="chains" value="C=25-609"/>
</dbReference>
<dbReference type="PDB" id="2I2Z">
    <property type="method" value="X-ray"/>
    <property type="resolution" value="2.70 A"/>
    <property type="chains" value="A=25-609"/>
</dbReference>
<dbReference type="PDB" id="2I30">
    <property type="method" value="X-ray"/>
    <property type="resolution" value="2.90 A"/>
    <property type="chains" value="A=25-609"/>
</dbReference>
<dbReference type="PDB" id="2N0X">
    <property type="method" value="NMR"/>
    <property type="chains" value="A=432-447"/>
</dbReference>
<dbReference type="PDB" id="2VDB">
    <property type="method" value="X-ray"/>
    <property type="resolution" value="2.52 A"/>
    <property type="chains" value="A=30-608"/>
</dbReference>
<dbReference type="PDB" id="2VUE">
    <property type="method" value="X-ray"/>
    <property type="resolution" value="2.42 A"/>
    <property type="chains" value="A/B=25-609"/>
</dbReference>
<dbReference type="PDB" id="2VUF">
    <property type="method" value="X-ray"/>
    <property type="resolution" value="3.05 A"/>
    <property type="chains" value="A/B=25-609"/>
</dbReference>
<dbReference type="PDB" id="2XSI">
    <property type="method" value="X-ray"/>
    <property type="resolution" value="2.70 A"/>
    <property type="chains" value="A=25-609"/>
</dbReference>
<dbReference type="PDB" id="2XVQ">
    <property type="method" value="X-ray"/>
    <property type="resolution" value="2.90 A"/>
    <property type="chains" value="A/B=25-609"/>
</dbReference>
<dbReference type="PDB" id="2XVU">
    <property type="method" value="X-ray"/>
    <property type="resolution" value="2.60 A"/>
    <property type="chains" value="A/B=25-609"/>
</dbReference>
<dbReference type="PDB" id="2XVV">
    <property type="method" value="X-ray"/>
    <property type="resolution" value="2.40 A"/>
    <property type="chains" value="A=25-609"/>
</dbReference>
<dbReference type="PDB" id="2XVW">
    <property type="method" value="X-ray"/>
    <property type="resolution" value="2.65 A"/>
    <property type="chains" value="A=25-609"/>
</dbReference>
<dbReference type="PDB" id="2XW0">
    <property type="method" value="X-ray"/>
    <property type="resolution" value="2.40 A"/>
    <property type="chains" value="A/B=25-609"/>
</dbReference>
<dbReference type="PDB" id="2XW1">
    <property type="method" value="X-ray"/>
    <property type="resolution" value="2.50 A"/>
    <property type="chains" value="A/B=25-609"/>
</dbReference>
<dbReference type="PDB" id="2YDF">
    <property type="method" value="X-ray"/>
    <property type="resolution" value="2.75 A"/>
    <property type="chains" value="A/B=25-609"/>
</dbReference>
<dbReference type="PDB" id="3A73">
    <property type="method" value="X-ray"/>
    <property type="resolution" value="2.19 A"/>
    <property type="chains" value="A/B=25-609"/>
</dbReference>
<dbReference type="PDB" id="3B9L">
    <property type="method" value="X-ray"/>
    <property type="resolution" value="2.60 A"/>
    <property type="chains" value="A=25-609"/>
</dbReference>
<dbReference type="PDB" id="3B9M">
    <property type="method" value="X-ray"/>
    <property type="resolution" value="2.70 A"/>
    <property type="chains" value="A=25-609"/>
</dbReference>
<dbReference type="PDB" id="3CX9">
    <property type="method" value="X-ray"/>
    <property type="resolution" value="2.80 A"/>
    <property type="chains" value="A=27-608"/>
</dbReference>
<dbReference type="PDB" id="3JQZ">
    <property type="method" value="X-ray"/>
    <property type="resolution" value="3.30 A"/>
    <property type="chains" value="A/B=25-609"/>
</dbReference>
<dbReference type="PDB" id="3JRY">
    <property type="method" value="X-ray"/>
    <property type="resolution" value="2.30 A"/>
    <property type="chains" value="A/B=25-609"/>
</dbReference>
<dbReference type="PDB" id="3LU6">
    <property type="method" value="X-ray"/>
    <property type="resolution" value="2.70 A"/>
    <property type="chains" value="A/B=25-609"/>
</dbReference>
<dbReference type="PDB" id="3LU7">
    <property type="method" value="X-ray"/>
    <property type="resolution" value="2.80 A"/>
    <property type="chains" value="A/B=25-609"/>
</dbReference>
<dbReference type="PDB" id="3LU8">
    <property type="method" value="X-ray"/>
    <property type="resolution" value="2.60 A"/>
    <property type="chains" value="A/B=25-609"/>
</dbReference>
<dbReference type="PDB" id="3SQJ">
    <property type="method" value="X-ray"/>
    <property type="resolution" value="2.05 A"/>
    <property type="chains" value="A/B=27-608"/>
</dbReference>
<dbReference type="PDB" id="3TDL">
    <property type="method" value="X-ray"/>
    <property type="resolution" value="2.60 A"/>
    <property type="chains" value="A=25-609"/>
</dbReference>
<dbReference type="PDB" id="3UIV">
    <property type="method" value="X-ray"/>
    <property type="resolution" value="2.20 A"/>
    <property type="chains" value="A/H=25-609"/>
</dbReference>
<dbReference type="PDB" id="4BKE">
    <property type="method" value="X-ray"/>
    <property type="resolution" value="2.35 A"/>
    <property type="chains" value="A=1-609"/>
</dbReference>
<dbReference type="PDB" id="4E99">
    <property type="method" value="X-ray"/>
    <property type="resolution" value="2.30 A"/>
    <property type="chains" value="A=25-609"/>
</dbReference>
<dbReference type="PDB" id="4EMX">
    <property type="method" value="X-ray"/>
    <property type="resolution" value="2.30 A"/>
    <property type="chains" value="A/B=25-609"/>
</dbReference>
<dbReference type="PDB" id="4G03">
    <property type="method" value="X-ray"/>
    <property type="resolution" value="2.22 A"/>
    <property type="chains" value="A/B=25-609"/>
</dbReference>
<dbReference type="PDB" id="4G04">
    <property type="method" value="X-ray"/>
    <property type="resolution" value="2.30 A"/>
    <property type="chains" value="A/B=25-609"/>
</dbReference>
<dbReference type="PDB" id="4HGK">
    <property type="method" value="X-ray"/>
    <property type="resolution" value="3.04 A"/>
    <property type="chains" value="A/B=25-609"/>
</dbReference>
<dbReference type="PDB" id="4HGM">
    <property type="method" value="X-ray"/>
    <property type="resolution" value="2.34 A"/>
    <property type="chains" value="B=25-609"/>
</dbReference>
<dbReference type="PDB" id="4IW1">
    <property type="method" value="X-ray"/>
    <property type="resolution" value="2.56 A"/>
    <property type="chains" value="A=25-609"/>
</dbReference>
<dbReference type="PDB" id="4IW2">
    <property type="method" value="X-ray"/>
    <property type="resolution" value="2.41 A"/>
    <property type="chains" value="A=25-609"/>
</dbReference>
<dbReference type="PDB" id="4K2C">
    <property type="method" value="X-ray"/>
    <property type="resolution" value="3.23 A"/>
    <property type="chains" value="A/B=25-609"/>
</dbReference>
<dbReference type="PDB" id="4K71">
    <property type="method" value="X-ray"/>
    <property type="resolution" value="2.40 A"/>
    <property type="chains" value="A/D=25-609"/>
</dbReference>
<dbReference type="PDB" id="4L8U">
    <property type="method" value="X-ray"/>
    <property type="resolution" value="2.01 A"/>
    <property type="chains" value="A=25-609"/>
</dbReference>
<dbReference type="PDB" id="4L9K">
    <property type="method" value="X-ray"/>
    <property type="resolution" value="2.40 A"/>
    <property type="chains" value="A/B=25-609"/>
</dbReference>
<dbReference type="PDB" id="4L9Q">
    <property type="method" value="X-ray"/>
    <property type="resolution" value="2.70 A"/>
    <property type="chains" value="A/B=25-609"/>
</dbReference>
<dbReference type="PDB" id="4LA0">
    <property type="method" value="X-ray"/>
    <property type="resolution" value="2.40 A"/>
    <property type="chains" value="A/B=25-609"/>
</dbReference>
<dbReference type="PDB" id="4LB2">
    <property type="method" value="X-ray"/>
    <property type="resolution" value="2.80 A"/>
    <property type="chains" value="A/B=25-609"/>
</dbReference>
<dbReference type="PDB" id="4LB9">
    <property type="method" value="X-ray"/>
    <property type="resolution" value="2.70 A"/>
    <property type="chains" value="A=25-609"/>
</dbReference>
<dbReference type="PDB" id="4N0F">
    <property type="method" value="X-ray"/>
    <property type="resolution" value="3.02 A"/>
    <property type="chains" value="D/G/J/M=25-609"/>
</dbReference>
<dbReference type="PDB" id="4N0U">
    <property type="method" value="X-ray"/>
    <property type="resolution" value="3.80 A"/>
    <property type="chains" value="D=27-609"/>
</dbReference>
<dbReference type="PDB" id="4S1Y">
    <property type="method" value="X-ray"/>
    <property type="resolution" value="3.16 A"/>
    <property type="chains" value="A=25-609"/>
</dbReference>
<dbReference type="PDB" id="4Z69">
    <property type="method" value="X-ray"/>
    <property type="resolution" value="2.19 A"/>
    <property type="chains" value="A/I=25-609"/>
</dbReference>
<dbReference type="PDB" id="5FUO">
    <property type="method" value="X-ray"/>
    <property type="resolution" value="3.60 A"/>
    <property type="chains" value="A=25-609"/>
</dbReference>
<dbReference type="PDB" id="5GIX">
    <property type="method" value="X-ray"/>
    <property type="resolution" value="2.80 A"/>
    <property type="chains" value="A/B=27-607"/>
</dbReference>
<dbReference type="PDB" id="5GIY">
    <property type="method" value="X-ray"/>
    <property type="resolution" value="2.54 A"/>
    <property type="chains" value="A=27-607"/>
</dbReference>
<dbReference type="PDB" id="5ID7">
    <property type="method" value="X-ray"/>
    <property type="resolution" value="2.26 A"/>
    <property type="chains" value="A/B=25-609"/>
</dbReference>
<dbReference type="PDB" id="5IFO">
    <property type="method" value="X-ray"/>
    <property type="resolution" value="3.20 A"/>
    <property type="chains" value="A=25-609"/>
</dbReference>
<dbReference type="PDB" id="5IJF">
    <property type="method" value="X-ray"/>
    <property type="resolution" value="2.65 A"/>
    <property type="chains" value="A=25-609"/>
</dbReference>
<dbReference type="PDB" id="5UJB">
    <property type="method" value="X-ray"/>
    <property type="resolution" value="2.70 A"/>
    <property type="chains" value="A/B=1-609"/>
</dbReference>
<dbReference type="PDB" id="5VNW">
    <property type="method" value="X-ray"/>
    <property type="resolution" value="2.60 A"/>
    <property type="chains" value="A/B=25-609"/>
</dbReference>
<dbReference type="PDB" id="5X52">
    <property type="method" value="X-ray"/>
    <property type="resolution" value="3.00 A"/>
    <property type="chains" value="A/B=25-609"/>
</dbReference>
<dbReference type="PDB" id="5YB1">
    <property type="method" value="X-ray"/>
    <property type="resolution" value="2.62 A"/>
    <property type="chains" value="A/B=27-607"/>
</dbReference>
<dbReference type="PDB" id="5YOQ">
    <property type="method" value="X-ray"/>
    <property type="resolution" value="2.65 A"/>
    <property type="chains" value="A/B=25-609"/>
</dbReference>
<dbReference type="PDB" id="5Z0B">
    <property type="method" value="X-ray"/>
    <property type="resolution" value="2.17 A"/>
    <property type="chains" value="A/B/C=25-609"/>
</dbReference>
<dbReference type="PDB" id="6A7P">
    <property type="method" value="X-ray"/>
    <property type="resolution" value="2.28 A"/>
    <property type="chains" value="A/B=25-609"/>
</dbReference>
<dbReference type="PDB" id="6EZQ">
    <property type="method" value="X-ray"/>
    <property type="resolution" value="2.39 A"/>
    <property type="chains" value="A=25-609"/>
</dbReference>
<dbReference type="PDB" id="6JE7">
    <property type="method" value="X-ray"/>
    <property type="resolution" value="3.90 A"/>
    <property type="chains" value="A=26-608"/>
</dbReference>
<dbReference type="PDB" id="6L4K">
    <property type="method" value="X-ray"/>
    <property type="resolution" value="2.09 A"/>
    <property type="chains" value="A/I=27-607"/>
</dbReference>
<dbReference type="PDB" id="6M4R">
    <property type="method" value="X-ray"/>
    <property type="resolution" value="2.49 A"/>
    <property type="chains" value="A/B=25-609"/>
</dbReference>
<dbReference type="PDB" id="6M58">
    <property type="method" value="X-ray"/>
    <property type="resolution" value="2.95 A"/>
    <property type="chains" value="A/B=25-609"/>
</dbReference>
<dbReference type="PDB" id="6M5D">
    <property type="method" value="X-ray"/>
    <property type="resolution" value="2.60 A"/>
    <property type="chains" value="A=28-606"/>
</dbReference>
<dbReference type="PDB" id="6M5E">
    <property type="method" value="X-ray"/>
    <property type="resolution" value="2.80 A"/>
    <property type="chains" value="A/B/C=25-609"/>
</dbReference>
<dbReference type="PDB" id="6QIO">
    <property type="method" value="X-ray"/>
    <property type="resolution" value="1.95 A"/>
    <property type="chains" value="A=25-609"/>
</dbReference>
<dbReference type="PDB" id="6QIP">
    <property type="method" value="X-ray"/>
    <property type="resolution" value="2.45 A"/>
    <property type="chains" value="A=25-609"/>
</dbReference>
<dbReference type="PDB" id="6R7S">
    <property type="method" value="X-ray"/>
    <property type="resolution" value="2.21 A"/>
    <property type="chains" value="A=25-609"/>
</dbReference>
<dbReference type="PDB" id="6WUW">
    <property type="method" value="X-ray"/>
    <property type="resolution" value="2.20 A"/>
    <property type="chains" value="A/B=25-609"/>
</dbReference>
<dbReference type="PDB" id="6XV0">
    <property type="method" value="X-ray"/>
    <property type="resolution" value="3.00 A"/>
    <property type="chains" value="A=25-609"/>
</dbReference>
<dbReference type="PDB" id="6YG9">
    <property type="method" value="X-ray"/>
    <property type="resolution" value="1.89 A"/>
    <property type="chains" value="A=25-609"/>
</dbReference>
<dbReference type="PDB" id="6ZL1">
    <property type="method" value="X-ray"/>
    <property type="resolution" value="3.27 A"/>
    <property type="chains" value="A/B=1-609"/>
</dbReference>
<dbReference type="PDB" id="7A9C">
    <property type="method" value="X-ray"/>
    <property type="resolution" value="2.75 A"/>
    <property type="chains" value="AAA=25-609"/>
</dbReference>
<dbReference type="PDB" id="7AAE">
    <property type="method" value="X-ray"/>
    <property type="resolution" value="2.27 A"/>
    <property type="chains" value="AAA=26-609"/>
</dbReference>
<dbReference type="PDB" id="7AAI">
    <property type="method" value="X-ray"/>
    <property type="resolution" value="2.10 A"/>
    <property type="chains" value="AAA=26-609"/>
</dbReference>
<dbReference type="PDB" id="7D6J">
    <property type="method" value="X-ray"/>
    <property type="resolution" value="3.29 A"/>
    <property type="chains" value="A/B=25-609"/>
</dbReference>
<dbReference type="PDB" id="7DJN">
    <property type="method" value="X-ray"/>
    <property type="resolution" value="2.04 A"/>
    <property type="chains" value="A/B=25-609"/>
</dbReference>
<dbReference type="PDB" id="7DL4">
    <property type="method" value="X-ray"/>
    <property type="resolution" value="2.40 A"/>
    <property type="chains" value="A=25-609"/>
</dbReference>
<dbReference type="PDB" id="7EEK">
    <property type="method" value="X-ray"/>
    <property type="resolution" value="2.50 A"/>
    <property type="chains" value="A/B=26-608"/>
</dbReference>
<dbReference type="PDB" id="7FFR">
    <property type="method" value="X-ray"/>
    <property type="resolution" value="2.31 A"/>
    <property type="chains" value="A=25-609"/>
</dbReference>
<dbReference type="PDB" id="7FFS">
    <property type="method" value="X-ray"/>
    <property type="resolution" value="2.05 A"/>
    <property type="chains" value="A=25-609"/>
</dbReference>
<dbReference type="PDB" id="7JWN">
    <property type="method" value="X-ray"/>
    <property type="resolution" value="2.60 A"/>
    <property type="chains" value="A=26-609"/>
</dbReference>
<dbReference type="PDB" id="7QFE">
    <property type="method" value="X-ray"/>
    <property type="resolution" value="2.20 A"/>
    <property type="chains" value="A=25-609"/>
</dbReference>
<dbReference type="PDB" id="7VR0">
    <property type="method" value="X-ray"/>
    <property type="resolution" value="1.98 A"/>
    <property type="chains" value="A=25-609"/>
</dbReference>
<dbReference type="PDB" id="7VR9">
    <property type="method" value="X-ray"/>
    <property type="resolution" value="2.30 A"/>
    <property type="chains" value="A/B=25-609"/>
</dbReference>
<dbReference type="PDB" id="7WKZ">
    <property type="method" value="X-ray"/>
    <property type="resolution" value="2.99 A"/>
    <property type="chains" value="A/B=25-609"/>
</dbReference>
<dbReference type="PDB" id="7WLF">
    <property type="method" value="X-ray"/>
    <property type="resolution" value="2.40 A"/>
    <property type="chains" value="A=25-609"/>
</dbReference>
<dbReference type="PDB" id="7WOJ">
    <property type="method" value="X-ray"/>
    <property type="resolution" value="2.89 A"/>
    <property type="chains" value="A=1-609"/>
</dbReference>
<dbReference type="PDB" id="7WOK">
    <property type="method" value="X-ray"/>
    <property type="resolution" value="2.90 A"/>
    <property type="chains" value="A/B=1-609"/>
</dbReference>
<dbReference type="PDB" id="7WZ9">
    <property type="method" value="X-ray"/>
    <property type="resolution" value="2.83 A"/>
    <property type="chains" value="A=27-607"/>
</dbReference>
<dbReference type="PDB" id="7X7X">
    <property type="method" value="X-ray"/>
    <property type="resolution" value="2.10 A"/>
    <property type="chains" value="A/B=25-609"/>
</dbReference>
<dbReference type="PDB" id="7Y2D">
    <property type="method" value="X-ray"/>
    <property type="resolution" value="2.00 A"/>
    <property type="chains" value="A=27-607"/>
</dbReference>
<dbReference type="PDB" id="7Z57">
    <property type="method" value="X-ray"/>
    <property type="resolution" value="2.20 A"/>
    <property type="chains" value="A=26-609"/>
</dbReference>
<dbReference type="PDB" id="8A9Q">
    <property type="method" value="X-ray"/>
    <property type="resolution" value="2.00 A"/>
    <property type="chains" value="A/B=25-609"/>
</dbReference>
<dbReference type="PDB" id="8CKS">
    <property type="method" value="X-ray"/>
    <property type="resolution" value="2.60 A"/>
    <property type="chains" value="A=25-609"/>
</dbReference>
<dbReference type="PDB" id="8EW4">
    <property type="method" value="X-ray"/>
    <property type="resolution" value="2.40 A"/>
    <property type="chains" value="A=25-609"/>
</dbReference>
<dbReference type="PDB" id="8EW7">
    <property type="method" value="X-ray"/>
    <property type="resolution" value="3.30 A"/>
    <property type="chains" value="A=25-609"/>
</dbReference>
<dbReference type="PDB" id="8EY5">
    <property type="method" value="X-ray"/>
    <property type="resolution" value="3.10 A"/>
    <property type="chains" value="A=25-609"/>
</dbReference>
<dbReference type="PDB" id="8H0O">
    <property type="method" value="X-ray"/>
    <property type="resolution" value="2.48 A"/>
    <property type="chains" value="A=25-609"/>
</dbReference>
<dbReference type="PDB" id="8ISM">
    <property type="method" value="X-ray"/>
    <property type="resolution" value="2.76 A"/>
    <property type="chains" value="A=27-607"/>
</dbReference>
<dbReference type="PDB" id="8ITR">
    <property type="method" value="X-ray"/>
    <property type="resolution" value="2.44 A"/>
    <property type="chains" value="A=27-608"/>
</dbReference>
<dbReference type="PDB" id="8ITT">
    <property type="method" value="X-ray"/>
    <property type="resolution" value="3.03 A"/>
    <property type="chains" value="A/B=27-606"/>
</dbReference>
<dbReference type="PDB" id="8J8E">
    <property type="method" value="X-ray"/>
    <property type="resolution" value="2.50 A"/>
    <property type="chains" value="A/I=25-609"/>
</dbReference>
<dbReference type="PDB" id="8K1Y">
    <property type="method" value="X-ray"/>
    <property type="resolution" value="2.15 A"/>
    <property type="chains" value="A=25-609"/>
</dbReference>
<dbReference type="PDB" id="8OI2">
    <property type="method" value="X-ray"/>
    <property type="resolution" value="3.30 A"/>
    <property type="chains" value="A=27-607"/>
</dbReference>
<dbReference type="PDB" id="8Q3F">
    <property type="method" value="EM"/>
    <property type="resolution" value="3.77 A"/>
    <property type="chains" value="A=25-609"/>
</dbReference>
<dbReference type="PDB" id="8RCO">
    <property type="method" value="X-ray"/>
    <property type="resolution" value="1.90 A"/>
    <property type="chains" value="A/B=1-609"/>
</dbReference>
<dbReference type="PDB" id="8RCP">
    <property type="method" value="X-ray"/>
    <property type="resolution" value="1.90 A"/>
    <property type="chains" value="A/B=1-609"/>
</dbReference>
<dbReference type="PDB" id="8RGK">
    <property type="method" value="X-ray"/>
    <property type="resolution" value="1.90 A"/>
    <property type="chains" value="A/B=1-609"/>
</dbReference>
<dbReference type="PDB" id="8RGL">
    <property type="method" value="X-ray"/>
    <property type="resolution" value="1.90 A"/>
    <property type="chains" value="A/B=1-609"/>
</dbReference>
<dbReference type="PDB" id="8VAC">
    <property type="method" value="EM"/>
    <property type="resolution" value="3.40 A"/>
    <property type="chains" value="A=25-609"/>
</dbReference>
<dbReference type="PDB" id="8VAE">
    <property type="method" value="EM"/>
    <property type="resolution" value="3.70 A"/>
    <property type="chains" value="A=25-609"/>
</dbReference>
<dbReference type="PDB" id="8VAF">
    <property type="method" value="EM"/>
    <property type="resolution" value="3.50 A"/>
    <property type="chains" value="A=25-609"/>
</dbReference>
<dbReference type="PDB" id="8Y9S">
    <property type="method" value="X-ray"/>
    <property type="resolution" value="2.88 A"/>
    <property type="chains" value="A/C=19-609"/>
</dbReference>
<dbReference type="PDB" id="8Y9T">
    <property type="method" value="X-ray"/>
    <property type="resolution" value="2.40 A"/>
    <property type="chains" value="A=19-609"/>
</dbReference>
<dbReference type="PDB" id="8Y9U">
    <property type="method" value="X-ray"/>
    <property type="resolution" value="3.10 A"/>
    <property type="chains" value="A/C=19-609"/>
</dbReference>
<dbReference type="PDB" id="8YG7">
    <property type="method" value="X-ray"/>
    <property type="resolution" value="2.09 A"/>
    <property type="chains" value="A/I=27-607"/>
</dbReference>
<dbReference type="PDB" id="8YXA">
    <property type="method" value="X-ray"/>
    <property type="resolution" value="2.50 A"/>
    <property type="chains" value="A/B=25-609"/>
</dbReference>
<dbReference type="PDB" id="8YXB">
    <property type="method" value="X-ray"/>
    <property type="resolution" value="2.20 A"/>
    <property type="chains" value="A/B=25-609"/>
</dbReference>
<dbReference type="PDB" id="8Z8V">
    <property type="method" value="X-ray"/>
    <property type="resolution" value="2.05 A"/>
    <property type="chains" value="A=25-609"/>
</dbReference>
<dbReference type="PDB" id="9CSG">
    <property type="method" value="X-ray"/>
    <property type="resolution" value="1.91 A"/>
    <property type="chains" value="A=27-608"/>
</dbReference>
<dbReference type="PDBsum" id="1AO6"/>
<dbReference type="PDBsum" id="1BJ5"/>
<dbReference type="PDBsum" id="1BKE"/>
<dbReference type="PDBsum" id="1BM0"/>
<dbReference type="PDBsum" id="1E78"/>
<dbReference type="PDBsum" id="1E7A"/>
<dbReference type="PDBsum" id="1E7B"/>
<dbReference type="PDBsum" id="1E7C"/>
<dbReference type="PDBsum" id="1E7E"/>
<dbReference type="PDBsum" id="1E7F"/>
<dbReference type="PDBsum" id="1E7G"/>
<dbReference type="PDBsum" id="1E7H"/>
<dbReference type="PDBsum" id="1E7I"/>
<dbReference type="PDBsum" id="1GNI"/>
<dbReference type="PDBsum" id="1GNJ"/>
<dbReference type="PDBsum" id="1H9Z"/>
<dbReference type="PDBsum" id="1HA2"/>
<dbReference type="PDBsum" id="1HK1"/>
<dbReference type="PDBsum" id="1HK2"/>
<dbReference type="PDBsum" id="1HK3"/>
<dbReference type="PDBsum" id="1HK4"/>
<dbReference type="PDBsum" id="1HK5"/>
<dbReference type="PDBsum" id="1N5U"/>
<dbReference type="PDBsum" id="1O9X"/>
<dbReference type="PDBsum" id="1TF0"/>
<dbReference type="PDBsum" id="1UOR"/>
<dbReference type="PDBsum" id="1YSX"/>
<dbReference type="PDBsum" id="2BX8"/>
<dbReference type="PDBsum" id="2BXA"/>
<dbReference type="PDBsum" id="2BXB"/>
<dbReference type="PDBsum" id="2BXC"/>
<dbReference type="PDBsum" id="2BXD"/>
<dbReference type="PDBsum" id="2BXE"/>
<dbReference type="PDBsum" id="2BXF"/>
<dbReference type="PDBsum" id="2BXG"/>
<dbReference type="PDBsum" id="2BXH"/>
<dbReference type="PDBsum" id="2BXI"/>
<dbReference type="PDBsum" id="2BXK"/>
<dbReference type="PDBsum" id="2BXL"/>
<dbReference type="PDBsum" id="2BXM"/>
<dbReference type="PDBsum" id="2BXN"/>
<dbReference type="PDBsum" id="2BXO"/>
<dbReference type="PDBsum" id="2BXP"/>
<dbReference type="PDBsum" id="2BXQ"/>
<dbReference type="PDBsum" id="2ESG"/>
<dbReference type="PDBsum" id="2I2Z"/>
<dbReference type="PDBsum" id="2I30"/>
<dbReference type="PDBsum" id="2N0X"/>
<dbReference type="PDBsum" id="2VDB"/>
<dbReference type="PDBsum" id="2VUE"/>
<dbReference type="PDBsum" id="2VUF"/>
<dbReference type="PDBsum" id="2XSI"/>
<dbReference type="PDBsum" id="2XVQ"/>
<dbReference type="PDBsum" id="2XVU"/>
<dbReference type="PDBsum" id="2XVV"/>
<dbReference type="PDBsum" id="2XVW"/>
<dbReference type="PDBsum" id="2XW0"/>
<dbReference type="PDBsum" id="2XW1"/>
<dbReference type="PDBsum" id="2YDF"/>
<dbReference type="PDBsum" id="3A73"/>
<dbReference type="PDBsum" id="3B9L"/>
<dbReference type="PDBsum" id="3B9M"/>
<dbReference type="PDBsum" id="3CX9"/>
<dbReference type="PDBsum" id="3JQZ"/>
<dbReference type="PDBsum" id="3JRY"/>
<dbReference type="PDBsum" id="3LU6"/>
<dbReference type="PDBsum" id="3LU7"/>
<dbReference type="PDBsum" id="3LU8"/>
<dbReference type="PDBsum" id="3SQJ"/>
<dbReference type="PDBsum" id="3TDL"/>
<dbReference type="PDBsum" id="3UIV"/>
<dbReference type="PDBsum" id="4BKE"/>
<dbReference type="PDBsum" id="4E99"/>
<dbReference type="PDBsum" id="4EMX"/>
<dbReference type="PDBsum" id="4G03"/>
<dbReference type="PDBsum" id="4G04"/>
<dbReference type="PDBsum" id="4HGK"/>
<dbReference type="PDBsum" id="4HGM"/>
<dbReference type="PDBsum" id="4IW1"/>
<dbReference type="PDBsum" id="4IW2"/>
<dbReference type="PDBsum" id="4K2C"/>
<dbReference type="PDBsum" id="4K71"/>
<dbReference type="PDBsum" id="4L8U"/>
<dbReference type="PDBsum" id="4L9K"/>
<dbReference type="PDBsum" id="4L9Q"/>
<dbReference type="PDBsum" id="4LA0"/>
<dbReference type="PDBsum" id="4LB2"/>
<dbReference type="PDBsum" id="4LB9"/>
<dbReference type="PDBsum" id="4N0F"/>
<dbReference type="PDBsum" id="4N0U"/>
<dbReference type="PDBsum" id="4S1Y"/>
<dbReference type="PDBsum" id="4Z69"/>
<dbReference type="PDBsum" id="5FUO"/>
<dbReference type="PDBsum" id="5GIX"/>
<dbReference type="PDBsum" id="5GIY"/>
<dbReference type="PDBsum" id="5ID7"/>
<dbReference type="PDBsum" id="5IFO"/>
<dbReference type="PDBsum" id="5IJF"/>
<dbReference type="PDBsum" id="5UJB"/>
<dbReference type="PDBsum" id="5VNW"/>
<dbReference type="PDBsum" id="5X52"/>
<dbReference type="PDBsum" id="5YB1"/>
<dbReference type="PDBsum" id="5YOQ"/>
<dbReference type="PDBsum" id="5Z0B"/>
<dbReference type="PDBsum" id="6A7P"/>
<dbReference type="PDBsum" id="6EZQ"/>
<dbReference type="PDBsum" id="6JE7"/>
<dbReference type="PDBsum" id="6L4K"/>
<dbReference type="PDBsum" id="6M4R"/>
<dbReference type="PDBsum" id="6M58"/>
<dbReference type="PDBsum" id="6M5D"/>
<dbReference type="PDBsum" id="6M5E"/>
<dbReference type="PDBsum" id="6QIO"/>
<dbReference type="PDBsum" id="6QIP"/>
<dbReference type="PDBsum" id="6R7S"/>
<dbReference type="PDBsum" id="6WUW"/>
<dbReference type="PDBsum" id="6XV0"/>
<dbReference type="PDBsum" id="6YG9"/>
<dbReference type="PDBsum" id="6ZL1"/>
<dbReference type="PDBsum" id="7A9C"/>
<dbReference type="PDBsum" id="7AAE"/>
<dbReference type="PDBsum" id="7AAI"/>
<dbReference type="PDBsum" id="7D6J"/>
<dbReference type="PDBsum" id="7DJN"/>
<dbReference type="PDBsum" id="7DL4"/>
<dbReference type="PDBsum" id="7EEK"/>
<dbReference type="PDBsum" id="7FFR"/>
<dbReference type="PDBsum" id="7FFS"/>
<dbReference type="PDBsum" id="7JWN"/>
<dbReference type="PDBsum" id="7QFE"/>
<dbReference type="PDBsum" id="7VR0"/>
<dbReference type="PDBsum" id="7VR9"/>
<dbReference type="PDBsum" id="7WKZ"/>
<dbReference type="PDBsum" id="7WLF"/>
<dbReference type="PDBsum" id="7WOJ"/>
<dbReference type="PDBsum" id="7WOK"/>
<dbReference type="PDBsum" id="7WZ9"/>
<dbReference type="PDBsum" id="7X7X"/>
<dbReference type="PDBsum" id="7Y2D"/>
<dbReference type="PDBsum" id="7Z57"/>
<dbReference type="PDBsum" id="8A9Q"/>
<dbReference type="PDBsum" id="8CKS"/>
<dbReference type="PDBsum" id="8EW4"/>
<dbReference type="PDBsum" id="8EW7"/>
<dbReference type="PDBsum" id="8EY5"/>
<dbReference type="PDBsum" id="8H0O"/>
<dbReference type="PDBsum" id="8ISM"/>
<dbReference type="PDBsum" id="8ITR"/>
<dbReference type="PDBsum" id="8ITT"/>
<dbReference type="PDBsum" id="8J8E"/>
<dbReference type="PDBsum" id="8K1Y"/>
<dbReference type="PDBsum" id="8OI2"/>
<dbReference type="PDBsum" id="8Q3F"/>
<dbReference type="PDBsum" id="8RCO"/>
<dbReference type="PDBsum" id="8RCP"/>
<dbReference type="PDBsum" id="8RGK"/>
<dbReference type="PDBsum" id="8RGL"/>
<dbReference type="PDBsum" id="8VAC"/>
<dbReference type="PDBsum" id="8VAE"/>
<dbReference type="PDBsum" id="8VAF"/>
<dbReference type="PDBsum" id="8Y9S"/>
<dbReference type="PDBsum" id="8Y9T"/>
<dbReference type="PDBsum" id="8Y9U"/>
<dbReference type="PDBsum" id="8YG7"/>
<dbReference type="PDBsum" id="8YXA"/>
<dbReference type="PDBsum" id="8YXB"/>
<dbReference type="PDBsum" id="8Z8V"/>
<dbReference type="PDBsum" id="9CSG"/>
<dbReference type="BMRB" id="P02768"/>
<dbReference type="EMDB" id="EMD-18126"/>
<dbReference type="EMDB" id="EMD-43088"/>
<dbReference type="EMDB" id="EMD-43089"/>
<dbReference type="EMDB" id="EMD-43090"/>
<dbReference type="PCDDB" id="P02768"/>
<dbReference type="SASBDB" id="P02768"/>
<dbReference type="SMR" id="P02768"/>
<dbReference type="BioGRID" id="106715">
    <property type="interactions" value="431"/>
</dbReference>
<dbReference type="CORUM" id="P02768"/>
<dbReference type="DIP" id="DIP-29902N"/>
<dbReference type="FunCoup" id="P02768">
    <property type="interactions" value="840"/>
</dbReference>
<dbReference type="IntAct" id="P02768">
    <property type="interactions" value="255"/>
</dbReference>
<dbReference type="MINT" id="P02768"/>
<dbReference type="STRING" id="9606.ENSP00000295897"/>
<dbReference type="BindingDB" id="P02768"/>
<dbReference type="ChEMBL" id="CHEMBL3253"/>
<dbReference type="DrugBank" id="DB08496">
    <property type="generic name" value="(R)-warfarin"/>
</dbReference>
<dbReference type="DrugBank" id="DB07517">
    <property type="generic name" value="3-CARBOXY-4-METHYL-5-PROPYL-2-FURANPROPIONIC"/>
</dbReference>
<dbReference type="DrugBank" id="DB12001">
    <property type="generic name" value="Abemaciclib"/>
</dbReference>
<dbReference type="DrugBank" id="DB05812">
    <property type="generic name" value="Abiraterone"/>
</dbReference>
<dbReference type="DrugBank" id="DB14973">
    <property type="generic name" value="Abrocitinib"/>
</dbReference>
<dbReference type="DrugBank" id="DB11703">
    <property type="generic name" value="Acalabrutinib"/>
</dbReference>
<dbReference type="DrugBank" id="DB01418">
    <property type="generic name" value="Acenocoumarol"/>
</dbReference>
<dbReference type="DrugBank" id="DB01614">
    <property type="generic name" value="Acepromazine"/>
</dbReference>
<dbReference type="DrugBank" id="DB00316">
    <property type="generic name" value="Acetaminophen"/>
</dbReference>
<dbReference type="DrugBank" id="DB00414">
    <property type="generic name" value="Acetohexamide"/>
</dbReference>
<dbReference type="DrugBank" id="DB09347">
    <property type="generic name" value="Acetrizoic acid"/>
</dbReference>
<dbReference type="DrugBank" id="DB06151">
    <property type="generic name" value="Acetylcysteine"/>
</dbReference>
<dbReference type="DrugBank" id="DB00459">
    <property type="generic name" value="Acitretin"/>
</dbReference>
<dbReference type="DrugBank" id="DB00787">
    <property type="generic name" value="Acyclovir"/>
</dbReference>
<dbReference type="DrugBank" id="DB00640">
    <property type="generic name" value="Adenosine"/>
</dbReference>
<dbReference type="DrugBank" id="DB00802">
    <property type="generic name" value="Alfentanil"/>
</dbReference>
<dbReference type="DrugBank" id="DB00346">
    <property type="generic name" value="Alfuzosin"/>
</dbReference>
<dbReference type="DrugBank" id="DB00404">
    <property type="generic name" value="Alprazolam"/>
</dbReference>
<dbReference type="DrugBank" id="DB00770">
    <property type="generic name" value="Alprostadil"/>
</dbReference>
<dbReference type="DrugBank" id="DB01370">
    <property type="generic name" value="Aluminium"/>
</dbReference>
<dbReference type="DrugBank" id="DB14517">
    <property type="generic name" value="Aluminium phosphate"/>
</dbReference>
<dbReference type="DrugBank" id="DB14518">
    <property type="generic name" value="Aluminum acetate"/>
</dbReference>
<dbReference type="DrugBank" id="DB01118">
    <property type="generic name" value="Amiodarone"/>
</dbReference>
<dbReference type="DrugBank" id="DB00321">
    <property type="generic name" value="Amitriptyline"/>
</dbReference>
<dbReference type="DrugBank" id="DB01060">
    <property type="generic name" value="Amoxicillin"/>
</dbReference>
<dbReference type="DrugBank" id="DB00415">
    <property type="generic name" value="Ampicillin"/>
</dbReference>
<dbReference type="DrugBank" id="DB00276">
    <property type="generic name" value="Amsacrine"/>
</dbReference>
<dbReference type="DrugBank" id="DB06728">
    <property type="generic name" value="Aniline"/>
</dbReference>
<dbReference type="DrugBank" id="DB11901">
    <property type="generic name" value="Apalutamide"/>
</dbReference>
<dbReference type="DrugBank" id="DB00714">
    <property type="generic name" value="Apomorphine"/>
</dbReference>
<dbReference type="DrugBank" id="DB15059">
    <property type="generic name" value="Aprocitentan"/>
</dbReference>
<dbReference type="DrugBank" id="DB04557">
    <property type="generic name" value="Arachidonic Acid"/>
</dbReference>
<dbReference type="DrugBank" id="DB09229">
    <property type="generic name" value="Aranidipine"/>
</dbReference>
<dbReference type="DrugBank" id="DB11217">
    <property type="generic name" value="Arbutin"/>
</dbReference>
<dbReference type="DrugBank" id="DB00278">
    <property type="generic name" value="Argatroban"/>
</dbReference>
<dbReference type="DrugBank" id="DB01238">
    <property type="generic name" value="Aripiprazole"/>
</dbReference>
<dbReference type="DrugBank" id="DB14185">
    <property type="generic name" value="Aripiprazole lauroxil"/>
</dbReference>
<dbReference type="DrugBank" id="DB09204">
    <property type="generic name" value="Arotinolol"/>
</dbReference>
<dbReference type="DrugBank" id="DB01169">
    <property type="generic name" value="Arsenic trioxide"/>
</dbReference>
<dbReference type="DrugBank" id="DB11638">
    <property type="generic name" value="Artenimol"/>
</dbReference>
<dbReference type="DrugBank" id="DB09274">
    <property type="generic name" value="Artesunate"/>
</dbReference>
<dbReference type="DrugBank" id="DB00126">
    <property type="generic name" value="Ascorbic acid"/>
</dbReference>
<dbReference type="DrugBank" id="DB06216">
    <property type="generic name" value="Asenapine"/>
</dbReference>
<dbReference type="DrugBank" id="DB01072">
    <property type="generic name" value="Atazanavir"/>
</dbReference>
<dbReference type="DrugBank" id="DB00335">
    <property type="generic name" value="Atenolol"/>
</dbReference>
<dbReference type="DrugBank" id="DB00289">
    <property type="generic name" value="Atomoxetine"/>
</dbReference>
<dbReference type="DrugBank" id="DB01076">
    <property type="generic name" value="Atorvastatin"/>
</dbReference>
<dbReference type="DrugBank" id="DB00995">
    <property type="generic name" value="Auranofin"/>
</dbReference>
<dbReference type="DrugBank" id="DB06237">
    <property type="generic name" value="Avanafil"/>
</dbReference>
<dbReference type="DrugBank" id="DB07402">
    <property type="generic name" value="Azapropazone"/>
</dbReference>
<dbReference type="DrugBank" id="DB00993">
    <property type="generic name" value="Azathioprine"/>
</dbReference>
<dbReference type="DrugBank" id="DB08822">
    <property type="generic name" value="Azilsartan medoxomil"/>
</dbReference>
<dbReference type="DrugBank" id="DB08903">
    <property type="generic name" value="Bedaquiline"/>
</dbReference>
<dbReference type="DrugBank" id="DB16703">
    <property type="generic name" value="Belumosudil"/>
</dbReference>
<dbReference type="DrugBank" id="DB00245">
    <property type="generic name" value="Benzatropine"/>
</dbReference>
<dbReference type="DrugBank" id="DB01086">
    <property type="generic name" value="Benzocaine"/>
</dbReference>
<dbReference type="DrugBank" id="DB01053">
    <property type="generic name" value="Benzylpenicillin"/>
</dbReference>
<dbReference type="DrugBank" id="DB00443">
    <property type="generic name" value="Betamethasone"/>
</dbReference>
<dbReference type="DrugBank" id="DB14669">
    <property type="generic name" value="Betamethasone phosphate"/>
</dbReference>
<dbReference type="DrugBank" id="DB11967">
    <property type="generic name" value="Binimetinib"/>
</dbReference>
<dbReference type="DrugBank" id="DB13909">
    <property type="generic name" value="Bismuth subgallate"/>
</dbReference>
<dbReference type="DrugBank" id="DB01294">
    <property type="generic name" value="Bismuth subsalicylate"/>
</dbReference>
<dbReference type="DrugBank" id="DB09223">
    <property type="generic name" value="Blonanserin"/>
</dbReference>
<dbReference type="DrugBank" id="DB00083">
    <property type="generic name" value="Botulinum toxin type A"/>
</dbReference>
<dbReference type="DrugBank" id="DB09128">
    <property type="generic name" value="Brexpiprazole"/>
</dbReference>
<dbReference type="DrugBank" id="DB01222">
    <property type="generic name" value="Budesonide"/>
</dbReference>
<dbReference type="DrugBank" id="DB15248">
    <property type="generic name" value="Bulevirtide"/>
</dbReference>
<dbReference type="DrugBank" id="DB00490">
    <property type="generic name" value="Buspirone"/>
</dbReference>
<dbReference type="DrugBank" id="DB00237">
    <property type="generic name" value="Butabarbital"/>
</dbReference>
<dbReference type="DrugBank" id="DB11148">
    <property type="generic name" value="Butamben"/>
</dbReference>
<dbReference type="DrugBank" id="DB06772">
    <property type="generic name" value="Cabazitaxel"/>
</dbReference>
<dbReference type="DrugBank" id="DB11751">
    <property type="generic name" value="Cabotegravir"/>
</dbReference>
<dbReference type="DrugBank" id="DB11093">
    <property type="generic name" value="Calcium citrate"/>
</dbReference>
<dbReference type="DrugBank" id="DB11348">
    <property type="generic name" value="Calcium Phosphate"/>
</dbReference>
<dbReference type="DrugBank" id="DB14481">
    <property type="generic name" value="Calcium phosphate dihydrate"/>
</dbReference>
<dbReference type="DrugBank" id="DB04690">
    <property type="generic name" value="Camptothecin"/>
</dbReference>
<dbReference type="DrugBank" id="DB01101">
    <property type="generic name" value="Capecitabine"/>
</dbReference>
<dbReference type="DrugBank" id="DB03600">
    <property type="generic name" value="Capric acid"/>
</dbReference>
<dbReference type="DrugBank" id="DB01197">
    <property type="generic name" value="Captopril"/>
</dbReference>
<dbReference type="DrugBank" id="DB01136">
    <property type="generic name" value="Carvedilol"/>
</dbReference>
<dbReference type="DrugBank" id="DB00456">
    <property type="generic name" value="Cefalotin"/>
</dbReference>
<dbReference type="DrugBank" id="DB01327">
    <property type="generic name" value="Cefazolin"/>
</dbReference>
<dbReference type="DrugBank" id="DB14879">
    <property type="generic name" value="Cefiderocol"/>
</dbReference>
<dbReference type="DrugBank" id="DB00274">
    <property type="generic name" value="Cefmetazole"/>
</dbReference>
<dbReference type="DrugBank" id="DB01328">
    <property type="generic name" value="Cefonicid"/>
</dbReference>
<dbReference type="DrugBank" id="DB01329">
    <property type="generic name" value="Cefoperazone"/>
</dbReference>
<dbReference type="DrugBank" id="DB00493">
    <property type="generic name" value="Cefotaxime"/>
</dbReference>
<dbReference type="DrugBank" id="DB01330">
    <property type="generic name" value="Cefotetan"/>
</dbReference>
<dbReference type="DrugBank" id="DB00430">
    <property type="generic name" value="Cefpiramide"/>
</dbReference>
<dbReference type="DrugBank" id="DB00438">
    <property type="generic name" value="Ceftazidime"/>
</dbReference>
<dbReference type="DrugBank" id="DB01212">
    <property type="generic name" value="Ceftriaxone"/>
</dbReference>
<dbReference type="DrugBank" id="DB06119">
    <property type="generic name" value="Cenobamate"/>
</dbReference>
<dbReference type="DrugBank" id="DB00567">
    <property type="generic name" value="Cephalexin"/>
</dbReference>
<dbReference type="DrugBank" id="DB07565">
    <property type="generic name" value="Chloramphenicol succinate"/>
</dbReference>
<dbReference type="DrugBank" id="DB08936">
    <property type="generic name" value="Chlorcyclizine"/>
</dbReference>
<dbReference type="DrugBank" id="DB00878">
    <property type="generic name" value="Chlorhexidine"/>
</dbReference>
<dbReference type="DrugBank" id="DB00608">
    <property type="generic name" value="Chloroquine"/>
</dbReference>
<dbReference type="DrugBank" id="DB00477">
    <property type="generic name" value="Chlorpromazine"/>
</dbReference>
<dbReference type="DrugBank" id="DB09093">
    <property type="generic name" value="Chlortetracycline"/>
</dbReference>
<dbReference type="DrugBank" id="DB00310">
    <property type="generic name" value="Chlorthalidone"/>
</dbReference>
<dbReference type="DrugBank" id="DB00501">
    <property type="generic name" value="Cimetidine"/>
</dbReference>
<dbReference type="DrugBank" id="DB00568">
    <property type="generic name" value="Cinnarizine"/>
</dbReference>
<dbReference type="DrugBank" id="DB00537">
    <property type="generic name" value="Ciprofloxacin"/>
</dbReference>
<dbReference type="DrugBank" id="DB00515">
    <property type="generic name" value="Cisplatin"/>
</dbReference>
<dbReference type="DrugBank" id="DB00349">
    <property type="generic name" value="Clobazam"/>
</dbReference>
<dbReference type="DrugBank" id="DB01013">
    <property type="generic name" value="Clobetasol propionate"/>
</dbReference>
<dbReference type="DrugBank" id="DB00845">
    <property type="generic name" value="Clofazimine"/>
</dbReference>
<dbReference type="DrugBank" id="DB01242">
    <property type="generic name" value="Clomipramine"/>
</dbReference>
<dbReference type="DrugBank" id="DB01068">
    <property type="generic name" value="Clonazepam"/>
</dbReference>
<dbReference type="DrugBank" id="DB00575">
    <property type="generic name" value="Clonidine"/>
</dbReference>
<dbReference type="DrugBank" id="DB00758">
    <property type="generic name" value="Clopidogrel"/>
</dbReference>
<dbReference type="DrugBank" id="DB01147">
    <property type="generic name" value="Cloxacillin"/>
</dbReference>
<dbReference type="DrugBank" id="DB00363">
    <property type="generic name" value="Clozapine"/>
</dbReference>
<dbReference type="DrugBank" id="DB15534">
    <property type="generic name" value="Colchiceine"/>
</dbReference>
<dbReference type="DrugBank" id="DB01394">
    <property type="generic name" value="Colchicine"/>
</dbReference>
<dbReference type="DrugBank" id="DB00286">
    <property type="generic name" value="Conjugated estrogens"/>
</dbReference>
<dbReference type="DrugBank" id="DB12483">
    <property type="generic name" value="Copanlisib"/>
</dbReference>
<dbReference type="DrugBank" id="DB09130">
    <property type="generic name" value="Copper"/>
</dbReference>
<dbReference type="DrugBank" id="DB01380">
    <property type="generic name" value="Cortisone acetate"/>
</dbReference>
<dbReference type="DrugBank" id="DB08865">
    <property type="generic name" value="Crizotinib"/>
</dbReference>
<dbReference type="DrugBank" id="DB11134">
    <property type="generic name" value="Cupric oxide"/>
</dbReference>
<dbReference type="DrugBank" id="DB06778">
    <property type="generic name" value="Cupric sulfate"/>
</dbReference>
<dbReference type="DrugBank" id="DB01176">
    <property type="generic name" value="Cyclizine"/>
</dbReference>
<dbReference type="DrugBank" id="DB00924">
    <property type="generic name" value="Cyclobenzaprine"/>
</dbReference>
<dbReference type="DrugBank" id="DB00434">
    <property type="generic name" value="Cyproheptadine"/>
</dbReference>
<dbReference type="DrugBank" id="DB00847">
    <property type="generic name" value="Cysteamine"/>
</dbReference>
<dbReference type="DrugBank" id="DB01914">
    <property type="generic name" value="D-glucose"/>
</dbReference>
<dbReference type="DrugBank" id="DB06695">
    <property type="generic name" value="Dabigatran etexilate"/>
</dbReference>
<dbReference type="DrugBank" id="DB08912">
    <property type="generic name" value="Dabrafenib"/>
</dbReference>
<dbReference type="DrugBank" id="DB11963">
    <property type="generic name" value="Dacomitinib"/>
</dbReference>
<dbReference type="DrugBank" id="DB04816">
    <property type="generic name" value="Dantron"/>
</dbReference>
<dbReference type="DrugBank" id="DB00080">
    <property type="generic name" value="Daptomycin"/>
</dbReference>
<dbReference type="DrugBank" id="DB12941">
    <property type="generic name" value="Darolutamide"/>
</dbReference>
<dbReference type="DrugBank" id="DB01264">
    <property type="generic name" value="Darunavir"/>
</dbReference>
<dbReference type="DrugBank" id="DB11943">
    <property type="generic name" value="Delafloxacin"/>
</dbReference>
<dbReference type="DrugBank" id="DB11637">
    <property type="generic name" value="Delamanid"/>
</dbReference>
<dbReference type="DrugBank" id="DB01189">
    <property type="generic name" value="Desflurane"/>
</dbReference>
<dbReference type="DrugBank" id="DB00304">
    <property type="generic name" value="Desogestrel"/>
</dbReference>
<dbReference type="DrugBank" id="DB01234">
    <property type="generic name" value="Dexamethasone"/>
</dbReference>
<dbReference type="DrugBank" id="DB14649">
    <property type="generic name" value="Dexamethasone acetate"/>
</dbReference>
<dbReference type="DrugBank" id="DB09213">
    <property type="generic name" value="Dexibuprofen"/>
</dbReference>
<dbReference type="DrugBank" id="DB00829">
    <property type="generic name" value="Diazepam"/>
</dbReference>
<dbReference type="DrugBank" id="DB01119">
    <property type="generic name" value="Diazoxide"/>
</dbReference>
<dbReference type="DrugBank" id="DB11397">
    <property type="generic name" value="Dichlorvos"/>
</dbReference>
<dbReference type="DrugBank" id="DB00586">
    <property type="generic name" value="Diclofenac"/>
</dbReference>
<dbReference type="DrugBank" id="DB00485">
    <property type="generic name" value="Dicloxacillin"/>
</dbReference>
<dbReference type="DrugBank" id="DB00266">
    <property type="generic name" value="Dicoumarol"/>
</dbReference>
<dbReference type="DrugBank" id="DB00900">
    <property type="generic name" value="Didanosine"/>
</dbReference>
<dbReference type="DrugBank" id="DB00861">
    <property type="generic name" value="Diflunisal"/>
</dbReference>
<dbReference type="DrugBank" id="DB01396">
    <property type="generic name" value="Digitoxin"/>
</dbReference>
<dbReference type="DrugBank" id="DB00343">
    <property type="generic name" value="Diltiazem"/>
</dbReference>
<dbReference type="DrugBank" id="DB08995">
    <property type="generic name" value="Diosmin"/>
</dbReference>
<dbReference type="DrugBank" id="DB08930">
    <property type="generic name" value="Dolutegravir"/>
</dbReference>
<dbReference type="DrugBank" id="DB01142">
    <property type="generic name" value="Doxepin"/>
</dbReference>
<dbReference type="DrugBank" id="DB00997">
    <property type="generic name" value="Doxorubicin"/>
</dbReference>
<dbReference type="DrugBank" id="DB00254">
    <property type="generic name" value="Doxycycline"/>
</dbReference>
<dbReference type="DrugBank" id="DB00366">
    <property type="generic name" value="Doxylamine"/>
</dbReference>
<dbReference type="DrugBank" id="DB04855">
    <property type="generic name" value="Dronedarone"/>
</dbReference>
<dbReference type="DrugBank" id="DB00476">
    <property type="generic name" value="Duloxetine"/>
</dbReference>
<dbReference type="DrugBank" id="DB01126">
    <property type="generic name" value="Dutasteride"/>
</dbReference>
<dbReference type="DrugBank" id="DB12610">
    <property type="generic name" value="Ebselen"/>
</dbReference>
<dbReference type="DrugBank" id="DB01057">
    <property type="generic name" value="Echothiophate"/>
</dbReference>
<dbReference type="DrugBank" id="DB12243">
    <property type="generic name" value="Edaravone"/>
</dbReference>
<dbReference type="DrugBank" id="DB13421">
    <property type="generic name" value="Edoxudine"/>
</dbReference>
<dbReference type="DrugBank" id="DB00625">
    <property type="generic name" value="Efavirenz"/>
</dbReference>
<dbReference type="DrugBank" id="DB05187">
    <property type="generic name" value="Elafibranor"/>
</dbReference>
<dbReference type="DrugBank" id="DB15444">
    <property type="generic name" value="Elexacaftor"/>
</dbReference>
<dbReference type="DrugBank" id="DB00879">
    <property type="generic name" value="Emtricitabine"/>
</dbReference>
<dbReference type="DrugBank" id="DB00584">
    <property type="generic name" value="Enalapril"/>
</dbReference>
<dbReference type="DrugBank" id="DB13874">
    <property type="generic name" value="Enasidenib"/>
</dbReference>
<dbReference type="DrugBank" id="DB11718">
    <property type="generic name" value="Encorafenib"/>
</dbReference>
<dbReference type="DrugBank" id="DB00228">
    <property type="generic name" value="Enflurane"/>
</dbReference>
<dbReference type="DrugBank" id="DB08899">
    <property type="generic name" value="Enzalutamide"/>
</dbReference>
<dbReference type="DrugBank" id="DB01364">
    <property type="generic name" value="Ephedrine"/>
</dbReference>
<dbReference type="DrugBank" id="DB00530">
    <property type="generic name" value="Erlotinib"/>
</dbReference>
<dbReference type="DrugBank" id="DB00303">
    <property type="generic name" value="Ertapenem"/>
</dbReference>
<dbReference type="DrugBank" id="DB11827">
    <property type="generic name" value="Ertugliflozin"/>
</dbReference>
<dbReference type="DrugBank" id="DB12235">
    <property type="generic name" value="Estetrol"/>
</dbReference>
<dbReference type="DrugBank" id="DB00783">
    <property type="generic name" value="Estradiol"/>
</dbReference>
<dbReference type="DrugBank" id="DB13952">
    <property type="generic name" value="Estradiol acetate"/>
</dbReference>
<dbReference type="DrugBank" id="DB13953">
    <property type="generic name" value="Estradiol benzoate"/>
</dbReference>
<dbReference type="DrugBank" id="DB13954">
    <property type="generic name" value="Estradiol cypionate"/>
</dbReference>
<dbReference type="DrugBank" id="DB13955">
    <property type="generic name" value="Estradiol dienanthate"/>
</dbReference>
<dbReference type="DrugBank" id="DB13956">
    <property type="generic name" value="Estradiol valerate"/>
</dbReference>
<dbReference type="DrugBank" id="DB00655">
    <property type="generic name" value="Estrone"/>
</dbReference>
<dbReference type="DrugBank" id="DB04574">
    <property type="generic name" value="Estrone sulfate"/>
</dbReference>
<dbReference type="DrugBank" id="DB00903">
    <property type="generic name" value="Etacrynic acid"/>
</dbReference>
<dbReference type="DrugBank" id="DB00977">
    <property type="generic name" value="Ethinylestradiol"/>
</dbReference>
<dbReference type="DrugBank" id="DB00749">
    <property type="generic name" value="Etodolac"/>
</dbReference>
<dbReference type="DrugBank" id="DB00294">
    <property type="generic name" value="Etonogestrel"/>
</dbReference>
<dbReference type="DrugBank" id="DB09361">
    <property type="generic name" value="Evans blue"/>
</dbReference>
<dbReference type="DrugBank" id="DB01276">
    <property type="generic name" value="Exenatide"/>
</dbReference>
<dbReference type="DrugBank" id="DB12466">
    <property type="generic name" value="Favipiravir"/>
</dbReference>
<dbReference type="DrugBank" id="DB04854">
    <property type="generic name" value="Febuxostat"/>
</dbReference>
<dbReference type="DrugBank" id="DB01039">
    <property type="generic name" value="Fenofibrate"/>
</dbReference>
<dbReference type="DrugBank" id="DB00573">
    <property type="generic name" value="Fenoprofen"/>
</dbReference>
<dbReference type="DrugBank" id="DB00813">
    <property type="generic name" value="Fentanyl"/>
</dbReference>
<dbReference type="DrugBank" id="DB00950">
    <property type="generic name" value="Fexofenadine"/>
</dbReference>
<dbReference type="DrugBank" id="DB16165">
    <property type="generic name" value="Finerenone"/>
</dbReference>
<dbReference type="DrugBank" id="DB01195">
    <property type="generic name" value="Flecainide"/>
</dbReference>
<dbReference type="DrugBank" id="DB00687">
    <property type="generic name" value="Fludrocortisone"/>
</dbReference>
<dbReference type="DrugBank" id="DB15690">
    <property type="generic name" value="Fluoroestradiol F-18"/>
</dbReference>
<dbReference type="DrugBank" id="DB00544">
    <property type="generic name" value="Fluorouracil"/>
</dbReference>
<dbReference type="DrugBank" id="DB00472">
    <property type="generic name" value="Fluoxetine"/>
</dbReference>
<dbReference type="DrugBank" id="DB00712">
    <property type="generic name" value="Flurbiprofen"/>
</dbReference>
<dbReference type="DrugBank" id="DB08906">
    <property type="generic name" value="Fluticasone furoate"/>
</dbReference>
<dbReference type="DrugBank" id="DB00983">
    <property type="generic name" value="Formoterol"/>
</dbReference>
<dbReference type="DrugBank" id="DB01320">
    <property type="generic name" value="Fosphenytoin"/>
</dbReference>
<dbReference type="DrugBank" id="DB06716">
    <property type="generic name" value="Fospropofol"/>
</dbReference>
<dbReference type="DrugBank" id="DB11796">
    <property type="generic name" value="Fostemsavir"/>
</dbReference>
<dbReference type="DrugBank" id="DB00695">
    <property type="generic name" value="Furosemide"/>
</dbReference>
<dbReference type="DrugBank" id="DB15149">
    <property type="generic name" value="Futibatinib"/>
</dbReference>
<dbReference type="DrugBank" id="DB00743">
    <property type="generic name" value="Gadobenic acid"/>
</dbReference>
<dbReference type="DrugBank" id="DB06705">
    <property type="generic name" value="Gadofosveset trisodium"/>
</dbReference>
<dbReference type="DrugBank" id="DB01044">
    <property type="generic name" value="Gatifloxacin"/>
</dbReference>
<dbReference type="DrugBank" id="DB00317">
    <property type="generic name" value="Gefitinib"/>
</dbReference>
<dbReference type="DrugBank" id="DB01241">
    <property type="generic name" value="Gemfibrozil"/>
</dbReference>
<dbReference type="DrugBank" id="DB12141">
    <property type="generic name" value="Gilteritinib"/>
</dbReference>
<dbReference type="DrugBank" id="DB11978">
    <property type="generic name" value="Glasdegib"/>
</dbReference>
<dbReference type="DrugBank" id="DB01120">
    <property type="generic name" value="Gliclazide"/>
</dbReference>
<dbReference type="DrugBank" id="DB01067">
    <property type="generic name" value="Glipizide"/>
</dbReference>
<dbReference type="DrugBank" id="DB01016">
    <property type="generic name" value="Glyburide"/>
</dbReference>
<dbReference type="DrugBank" id="DB00986">
    <property type="generic name" value="Glycopyrronium"/>
</dbReference>
<dbReference type="DrugBank" id="DB13751">
    <property type="generic name" value="Glycyrrhizic acid"/>
</dbReference>
<dbReference type="DrugBank" id="DB04539">
    <property type="generic name" value="Glyphosate"/>
</dbReference>
<dbReference type="DrugBank" id="DB12836">
    <property type="generic name" value="Grapiprant"/>
</dbReference>
<dbReference type="DrugBank" id="DB11575">
    <property type="generic name" value="Grazoprevir"/>
</dbReference>
<dbReference type="DrugBank" id="DB11359">
    <property type="generic name" value="Guaiacol"/>
</dbReference>
<dbReference type="DrugBank" id="DB01159">
    <property type="generic name" value="Halothane"/>
</dbReference>
<dbReference type="DrugBank" id="DB14999">
    <property type="generic name" value="Human interferon beta"/>
</dbReference>
<dbReference type="DrugBank" id="DB00070">
    <property type="generic name" value="Hyaluronidase (ovine)"/>
</dbReference>
<dbReference type="DrugBank" id="DB01275">
    <property type="generic name" value="Hydralazine"/>
</dbReference>
<dbReference type="DrugBank" id="DB00999">
    <property type="generic name" value="Hydrochlorothiazide"/>
</dbReference>
<dbReference type="DrugBank" id="DB00774">
    <property type="generic name" value="Hydroflumethiazide"/>
</dbReference>
<dbReference type="DrugBank" id="DB00327">
    <property type="generic name" value="Hydromorphone"/>
</dbReference>
<dbReference type="DrugBank" id="DB09526">
    <property type="generic name" value="Hydroquinone"/>
</dbReference>
<dbReference type="DrugBank" id="DB01611">
    <property type="generic name" value="Hydroxychloroquine"/>
</dbReference>
<dbReference type="DrugBank" id="DB01005">
    <property type="generic name" value="Hydroxyurea"/>
</dbReference>
<dbReference type="DrugBank" id="DB00557">
    <property type="generic name" value="Hydroxyzine"/>
</dbReference>
<dbReference type="DrugBank" id="DB13014">
    <property type="generic name" value="Hypericin"/>
</dbReference>
<dbReference type="DrugBank" id="DB12471">
    <property type="generic name" value="Ibrexafungerp"/>
</dbReference>
<dbReference type="DrugBank" id="DB09053">
    <property type="generic name" value="Ibrutinib"/>
</dbReference>
<dbReference type="DrugBank" id="DB01050">
    <property type="generic name" value="Ibuprofen"/>
</dbReference>
<dbReference type="DrugBank" id="DB00159">
    <property type="generic name" value="Icosapent"/>
</dbReference>
<dbReference type="DrugBank" id="DB01088">
    <property type="generic name" value="Iloprost"/>
</dbReference>
<dbReference type="DrugBank" id="DB00619">
    <property type="generic name" value="Imatinib"/>
</dbReference>
<dbReference type="DrugBank" id="DB09262">
    <property type="generic name" value="Imidafenacin"/>
</dbReference>
<dbReference type="DrugBank" id="DB00458">
    <property type="generic name" value="Imipramine"/>
</dbReference>
<dbReference type="DrugBank" id="DB00808">
    <property type="generic name" value="Indapamide"/>
</dbReference>
<dbReference type="DrugBank" id="DB00328">
    <property type="generic name" value="Indomethacin"/>
</dbReference>
<dbReference type="DrugBank" id="DB07992">
    <property type="generic name" value="Indoxyl sulfate"/>
</dbReference>
<dbReference type="DrugBank" id="DB09564">
    <property type="generic name" value="Insulin degludec"/>
</dbReference>
<dbReference type="DrugBank" id="DB01307">
    <property type="generic name" value="Insulin detemir"/>
</dbReference>
<dbReference type="DrugBank" id="DB16693">
    <property type="generic name" value="Insulin icodec"/>
</dbReference>
<dbReference type="DrugBank" id="DB05382">
    <property type="generic name" value="Iodine"/>
</dbReference>
<dbReference type="DrugBank" id="DB04711">
    <property type="generic name" value="Iodipamide"/>
</dbReference>
<dbReference type="DrugBank" id="DB09333">
    <property type="generic name" value="Iopodic acid"/>
</dbReference>
<dbReference type="DrugBank" id="DB00332">
    <property type="generic name" value="Ipratropium"/>
</dbReference>
<dbReference type="DrugBank" id="DB16200">
    <property type="generic name" value="Iptacopan"/>
</dbReference>
<dbReference type="DrugBank" id="DB01029">
    <property type="generic name" value="Irbesartan"/>
</dbReference>
<dbReference type="DrugBank" id="DB00762">
    <property type="generic name" value="Irinotecan"/>
</dbReference>
<dbReference type="DrugBank" id="DB06636">
    <property type="generic name" value="Isavuconazonium"/>
</dbReference>
<dbReference type="DrugBank" id="DB00753">
    <property type="generic name" value="Isoflurane"/>
</dbReference>
<dbReference type="DrugBank" id="DB00677">
    <property type="generic name" value="Isoflurophate"/>
</dbReference>
<dbReference type="DrugBank" id="DB00951">
    <property type="generic name" value="Isoniazid"/>
</dbReference>
<dbReference type="DrugBank" id="DB01064">
    <property type="generic name" value="Isoprenaline"/>
</dbReference>
<dbReference type="DrugBank" id="DB00982">
    <property type="generic name" value="Isotretinoin"/>
</dbReference>
<dbReference type="DrugBank" id="DB11757">
    <property type="generic name" value="Istradefylline"/>
</dbReference>
<dbReference type="DrugBank" id="DB01167">
    <property type="generic name" value="Itraconazole"/>
</dbReference>
<dbReference type="DrugBank" id="DB08820">
    <property type="generic name" value="Ivacaftor"/>
</dbReference>
<dbReference type="DrugBank" id="DB01587">
    <property type="generic name" value="Ketazolam"/>
</dbReference>
<dbReference type="DrugBank" id="DB01026">
    <property type="generic name" value="Ketoconazole"/>
</dbReference>
<dbReference type="DrugBank" id="DB01009">
    <property type="generic name" value="Ketoprofen"/>
</dbReference>
<dbReference type="DrugBank" id="DB00598">
    <property type="generic name" value="Labetalol"/>
</dbReference>
<dbReference type="DrugBank" id="DB09236">
    <property type="generic name" value="Lacidipine"/>
</dbReference>
<dbReference type="DrugBank" id="DB00709">
    <property type="generic name" value="Lamivudine"/>
</dbReference>
<dbReference type="DrugBank" id="DB00555">
    <property type="generic name" value="Lamotrigine"/>
</dbReference>
<dbReference type="DrugBank" id="DB03017">
    <property type="generic name" value="Lauric acid"/>
</dbReference>
<dbReference type="DrugBank" id="DB01006">
    <property type="generic name" value="Letrozole"/>
</dbReference>
<dbReference type="DrugBank" id="DB09237">
    <property type="generic name" value="Levamlodipine"/>
</dbReference>
<dbReference type="DrugBank" id="DB06282">
    <property type="generic name" value="Levocetirizine"/>
</dbReference>
<dbReference type="DrugBank" id="DB01235">
    <property type="generic name" value="Levodopa"/>
</dbReference>
<dbReference type="DrugBank" id="DB01137">
    <property type="generic name" value="Levofloxacin"/>
</dbReference>
<dbReference type="DrugBank" id="DB00451">
    <property type="generic name" value="Levothyroxine"/>
</dbReference>
<dbReference type="DrugBank" id="DB00601">
    <property type="generic name" value="Linezolid"/>
</dbReference>
<dbReference type="DrugBank" id="DB17083">
    <property type="generic name" value="Linzagolix"/>
</dbReference>
<dbReference type="DrugBank" id="DB00279">
    <property type="generic name" value="Liothyronine"/>
</dbReference>
<dbReference type="DrugBank" id="DB01583">
    <property type="generic name" value="Liotrix"/>
</dbReference>
<dbReference type="DrugBank" id="DB06655">
    <property type="generic name" value="Liraglutide"/>
</dbReference>
<dbReference type="DrugBank" id="DB01601">
    <property type="generic name" value="Lopinavir"/>
</dbReference>
<dbReference type="DrugBank" id="DB09195">
    <property type="generic name" value="Lorpiprazole"/>
</dbReference>
<dbReference type="DrugBank" id="DB00678">
    <property type="generic name" value="Losartan"/>
</dbReference>
<dbReference type="DrugBank" id="DB00227">
    <property type="generic name" value="Lovastatin"/>
</dbReference>
<dbReference type="DrugBank" id="DB09280">
    <property type="generic name" value="Lumacaftor"/>
</dbReference>
<dbReference type="DrugBank" id="DB15935">
    <property type="generic name" value="Lumasiran"/>
</dbReference>
<dbReference type="DrugBank" id="DB12674">
    <property type="generic name" value="Lurbinectedin"/>
</dbReference>
<dbReference type="DrugBank" id="DB00137">
    <property type="generic name" value="Lutein"/>
</dbReference>
<dbReference type="DrugBank" id="DB08932">
    <property type="generic name" value="Macitentan"/>
</dbReference>
<dbReference type="DrugBank" id="DB14513">
    <property type="generic name" value="Magnesium"/>
</dbReference>
<dbReference type="DrugBank" id="DB01397">
    <property type="generic name" value="Magnesium salicylate"/>
</dbReference>
<dbReference type="DrugBank" id="DB06796">
    <property type="generic name" value="Mangafodipir"/>
</dbReference>
<dbReference type="DrugBank" id="DB06757">
    <property type="generic name" value="Manganese cation"/>
</dbReference>
<dbReference type="DrugBank" id="DB06234">
    <property type="generic name" value="Maribavir"/>
</dbReference>
<dbReference type="DrugBank" id="DB00737">
    <property type="generic name" value="Meclizine"/>
</dbReference>
<dbReference type="DrugBank" id="DB13959">
    <property type="generic name" value="Medium-chain triglycerides"/>
</dbReference>
<dbReference type="DrugBank" id="DB09124">
    <property type="generic name" value="Medrogestone"/>
</dbReference>
<dbReference type="DrugBank" id="DB00603">
    <property type="generic name" value="Medroxyprogesterone acetate"/>
</dbReference>
<dbReference type="DrugBank" id="DB00784">
    <property type="generic name" value="Mefenamic acid"/>
</dbReference>
<dbReference type="DrugBank" id="DB00814">
    <property type="generic name" value="Meloxicam"/>
</dbReference>
<dbReference type="DrugBank" id="DB01042">
    <property type="generic name" value="Melphalan"/>
</dbReference>
<dbReference type="DrugBank" id="DB00454">
    <property type="generic name" value="Meperidine"/>
</dbReference>
<dbReference type="DrugBank" id="DB09383">
    <property type="generic name" value="Meprednisone"/>
</dbReference>
<dbReference type="DrugBank" id="DB00931">
    <property type="generic name" value="Metacycline"/>
</dbReference>
<dbReference type="DrugBank" id="DB00333">
    <property type="generic name" value="Methadone"/>
</dbReference>
<dbReference type="DrugBank" id="DB00563">
    <property type="generic name" value="Methotrexate"/>
</dbReference>
<dbReference type="DrugBank" id="DB00968">
    <property type="generic name" value="Methyldopa"/>
</dbReference>
<dbReference type="DrugBank" id="DB09241">
    <property type="generic name" value="Methylene blue"/>
</dbReference>
<dbReference type="DrugBank" id="DB00959">
    <property type="generic name" value="Methylprednisolone"/>
</dbReference>
<dbReference type="DrugBank" id="DB06710">
    <property type="generic name" value="Methyltestosterone"/>
</dbReference>
<dbReference type="DrugBank" id="DB00264">
    <property type="generic name" value="Metoprolol"/>
</dbReference>
<dbReference type="DrugBank" id="DB01110">
    <property type="generic name" value="Miconazole"/>
</dbReference>
<dbReference type="DrugBank" id="DB00683">
    <property type="generic name" value="Midazolam"/>
</dbReference>
<dbReference type="DrugBank" id="DB08893">
    <property type="generic name" value="Mirabegron"/>
</dbReference>
<dbReference type="DrugBank" id="DB00295">
    <property type="generic name" value="Morphine"/>
</dbReference>
<dbReference type="DrugBank" id="DB01024">
    <property type="generic name" value="Mycophenolic acid"/>
</dbReference>
<dbReference type="DrugBank" id="DB08231">
    <property type="generic name" value="Myristic acid"/>
</dbReference>
<dbReference type="DrugBank" id="DB00461">
    <property type="generic name" value="Nabumetone"/>
</dbReference>
<dbReference type="DrugBank" id="DB00607">
    <property type="generic name" value="Nafcillin"/>
</dbReference>
<dbReference type="DrugBank" id="DB01183">
    <property type="generic name" value="Naloxone"/>
</dbReference>
<dbReference type="DrugBank" id="DB00788">
    <property type="generic name" value="Naproxen"/>
</dbReference>
<dbReference type="DrugBank" id="DB00731">
    <property type="generic name" value="Nateglinide"/>
</dbReference>
<dbReference type="DrugBank" id="DB04861">
    <property type="generic name" value="Nebivolol"/>
</dbReference>
<dbReference type="DrugBank" id="DB00220">
    <property type="generic name" value="Nelfinavir"/>
</dbReference>
<dbReference type="DrugBank" id="DB11828">
    <property type="generic name" value="Neratinib"/>
</dbReference>
<dbReference type="DrugBank" id="DB00238">
    <property type="generic name" value="Nevirapine"/>
</dbReference>
<dbReference type="DrugBank" id="DB01115">
    <property type="generic name" value="Nifedipine"/>
</dbReference>
<dbReference type="DrugBank" id="DB11820">
    <property type="generic name" value="Nifurtimox"/>
</dbReference>
<dbReference type="DrugBank" id="DB09079">
    <property type="generic name" value="Nintedanib"/>
</dbReference>
<dbReference type="DrugBank" id="DB11793">
    <property type="generic name" value="Niraparib"/>
</dbReference>
<dbReference type="DrugBank" id="DB12005">
    <property type="generic name" value="Nirogacestat"/>
</dbReference>
<dbReference type="DrugBank" id="DB06713">
    <property type="generic name" value="Norelgestromin"/>
</dbReference>
<dbReference type="DrugBank" id="DB00717">
    <property type="generic name" value="Norethisterone"/>
</dbReference>
<dbReference type="DrugBank" id="DB00957">
    <property type="generic name" value="Norgestimate"/>
</dbReference>
<dbReference type="DrugBank" id="DB00540">
    <property type="generic name" value="Nortriptyline"/>
</dbReference>
<dbReference type="DrugBank" id="DB00104">
    <property type="generic name" value="Octreotide"/>
</dbReference>
<dbReference type="DrugBank" id="DB00334">
    <property type="generic name" value="Olanzapine"/>
</dbReference>
<dbReference type="DrugBank" id="DB09074">
    <property type="generic name" value="Olaparib"/>
</dbReference>
<dbReference type="DrugBank" id="DB04224">
    <property type="generic name" value="Oleic Acid"/>
</dbReference>
<dbReference type="DrugBank" id="DB00768">
    <property type="generic name" value="Olopatadine"/>
</dbReference>
<dbReference type="DrugBank" id="DB12455">
    <property type="generic name" value="Omadacycline"/>
</dbReference>
<dbReference type="DrugBank" id="DB11130">
    <property type="generic name" value="Opium"/>
</dbReference>
<dbReference type="DrugBank" id="DB04911">
    <property type="generic name" value="Oritavancin"/>
</dbReference>
<dbReference type="DrugBank" id="DB01083">
    <property type="generic name" value="Orlistat"/>
</dbReference>
<dbReference type="DrugBank" id="DB13310">
    <property type="generic name" value="Ormeloxifene"/>
</dbReference>
<dbReference type="DrugBank" id="DB01173">
    <property type="generic name" value="Orphenadrine"/>
</dbReference>
<dbReference type="DrugBank" id="DB00526">
    <property type="generic name" value="Oxaliplatin"/>
</dbReference>
<dbReference type="DrugBank" id="DB00842">
    <property type="generic name" value="Oxazepam"/>
</dbReference>
<dbReference type="DrugBank" id="DB00776">
    <property type="generic name" value="Oxcarbazepine"/>
</dbReference>
<dbReference type="DrugBank" id="DB01062">
    <property type="generic name" value="Oxybutynin"/>
</dbReference>
<dbReference type="DrugBank" id="DB00497">
    <property type="generic name" value="Oxycodone"/>
</dbReference>
<dbReference type="DrugBank" id="DB06412">
    <property type="generic name" value="Oxymetholone"/>
</dbReference>
<dbReference type="DrugBank" id="DB03585">
    <property type="generic name" value="Oxyphenbutazone"/>
</dbReference>
<dbReference type="DrugBank" id="DB00595">
    <property type="generic name" value="Oxytetracycline"/>
</dbReference>
<dbReference type="DrugBank" id="DB15575">
    <property type="generic name" value="Padeliporfin"/>
</dbReference>
<dbReference type="DrugBank" id="DB09073">
    <property type="generic name" value="Palbociclib"/>
</dbReference>
<dbReference type="DrugBank" id="DB03796">
    <property type="generic name" value="Palmitic Acid"/>
</dbReference>
<dbReference type="DrugBank" id="DB13967">
    <property type="generic name" value="Patent Blue"/>
</dbReference>
<dbReference type="DrugBank" id="DB14582">
    <property type="generic name" value="Patisiran"/>
</dbReference>
<dbReference type="DrugBank" id="DB00642">
    <property type="generic name" value="Pemetrexed"/>
</dbReference>
<dbReference type="DrugBank" id="DB00850">
    <property type="generic name" value="Perphenazine"/>
</dbReference>
<dbReference type="DrugBank" id="DB12978">
    <property type="generic name" value="Pexidartinib"/>
</dbReference>
<dbReference type="DrugBank" id="DB01619">
    <property type="generic name" value="Phenindamine"/>
</dbReference>
<dbReference type="DrugBank" id="DB03255">
    <property type="generic name" value="Phenol"/>
</dbReference>
<dbReference type="DrugBank" id="DB00946">
    <property type="generic name" value="Phenprocoumon"/>
</dbReference>
<dbReference type="DrugBank" id="DB00252">
    <property type="generic name" value="Phenytoin"/>
</dbReference>
<dbReference type="DrugBank" id="DB01132">
    <property type="generic name" value="Pioglitazone"/>
</dbReference>
<dbReference type="DrugBank" id="DB01621">
    <property type="generic name" value="Pipotiazine"/>
</dbReference>
<dbReference type="DrugBank" id="DB04951">
    <property type="generic name" value="Pirfenidone"/>
</dbReference>
<dbReference type="DrugBank" id="DB00554">
    <property type="generic name" value="Piroxicam"/>
</dbReference>
<dbReference type="DrugBank" id="DB08860">
    <property type="generic name" value="Pitavastatin"/>
</dbReference>
<dbReference type="DrugBank" id="DB11642">
    <property type="generic name" value="Pitolisant"/>
</dbReference>
<dbReference type="DrugBank" id="DB01324">
    <property type="generic name" value="Polythiazide"/>
</dbReference>
<dbReference type="DrugBank" id="DB09087">
    <property type="generic name" value="Potassium alum"/>
</dbReference>
<dbReference type="DrugBank" id="DB09418">
    <property type="generic name" value="Potassium perchlorate"/>
</dbReference>
<dbReference type="DrugBank" id="DB06813">
    <property type="generic name" value="Pralatrexate"/>
</dbReference>
<dbReference type="DrugBank" id="DB13514">
    <property type="generic name" value="Pranoprofen"/>
</dbReference>
<dbReference type="DrugBank" id="DB06209">
    <property type="generic name" value="Prasugrel"/>
</dbReference>
<dbReference type="DrugBank" id="DB01058">
    <property type="generic name" value="Praziquantel"/>
</dbReference>
<dbReference type="DrugBank" id="DB00860">
    <property type="generic name" value="Prednisolone"/>
</dbReference>
<dbReference type="DrugBank" id="DB15566">
    <property type="generic name" value="Prednisolone acetate"/>
</dbReference>
<dbReference type="DrugBank" id="DB14631">
    <property type="generic name" value="Prednisolone phosphate"/>
</dbReference>
<dbReference type="DrugBank" id="DB00635">
    <property type="generic name" value="Prednisone"/>
</dbReference>
<dbReference type="DrugBank" id="DB01032">
    <property type="generic name" value="Probenecid"/>
</dbReference>
<dbReference type="DrugBank" id="DB01069">
    <property type="generic name" value="Promethazine"/>
</dbReference>
<dbReference type="DrugBank" id="DB09348">
    <property type="generic name" value="Propiolactone"/>
</dbReference>
<dbReference type="DrugBank" id="DB00818">
    <property type="generic name" value="Propofol"/>
</dbReference>
<dbReference type="DrugBank" id="DB00571">
    <property type="generic name" value="Propranolol"/>
</dbReference>
<dbReference type="DrugBank" id="DB06480">
    <property type="generic name" value="Prucalopride"/>
</dbReference>
<dbReference type="DrugBank" id="DB00852">
    <property type="generic name" value="Pseudoephedrine"/>
</dbReference>
<dbReference type="DrugBank" id="DB00165">
    <property type="generic name" value="Pyridoxine"/>
</dbReference>
<dbReference type="DrugBank" id="DB04216">
    <property type="generic name" value="Quercetin"/>
</dbReference>
<dbReference type="DrugBank" id="DB00881">
    <property type="generic name" value="Quinapril"/>
</dbReference>
<dbReference type="DrugBank" id="DB00908">
    <property type="generic name" value="Quinidine"/>
</dbReference>
<dbReference type="DrugBank" id="DB12874">
    <property type="generic name" value="Quizartinib"/>
</dbReference>
<dbReference type="DrugBank" id="DB08735">
    <property type="generic name" value="R,S-Warfarin alcohol"/>
</dbReference>
<dbReference type="DrugBank" id="DB00481">
    <property type="generic name" value="Raloxifene"/>
</dbReference>
<dbReference type="DrugBank" id="DB11853">
    <property type="generic name" value="Relugolix"/>
</dbReference>
<dbReference type="DrugBank" id="DB12404">
    <property type="generic name" value="Remimazolam"/>
</dbReference>
<dbReference type="DrugBank" id="DB00912">
    <property type="generic name" value="Repaglinide"/>
</dbReference>
<dbReference type="DrugBank" id="DB02709">
    <property type="generic name" value="Resveratrol"/>
</dbReference>
<dbReference type="DrugBank" id="DB11855">
    <property type="generic name" value="Revefenacin"/>
</dbReference>
<dbReference type="DrugBank" id="DB18515">
    <property type="generic name" value="Revumenib"/>
</dbReference>
<dbReference type="DrugBank" id="DB01045">
    <property type="generic name" value="Rifampin"/>
</dbReference>
<dbReference type="DrugBank" id="DB11753">
    <property type="generic name" value="Rifamycin"/>
</dbReference>
<dbReference type="DrugBank" id="DB08864">
    <property type="generic name" value="Rilpivirine"/>
</dbReference>
<dbReference type="DrugBank" id="DB08931">
    <property type="generic name" value="Riociguat"/>
</dbReference>
<dbReference type="DrugBank" id="DB14840">
    <property type="generic name" value="Ripretinib"/>
</dbReference>
<dbReference type="DrugBank" id="DB15305">
    <property type="generic name" value="Risdiplam"/>
</dbReference>
<dbReference type="DrugBank" id="DB00734">
    <property type="generic name" value="Risperidone"/>
</dbReference>
<dbReference type="DrugBank" id="DB00503">
    <property type="generic name" value="Ritonavir"/>
</dbReference>
<dbReference type="DrugBank" id="DB11182">
    <property type="generic name" value="Rose bengal"/>
</dbReference>
<dbReference type="DrugBank" id="DB00412">
    <property type="generic name" value="Rosiglitazone"/>
</dbReference>
<dbReference type="DrugBank" id="DB01098">
    <property type="generic name" value="Rosuvastatin"/>
</dbReference>
<dbReference type="DrugBank" id="DB04847">
    <property type="generic name" value="Roxadustat"/>
</dbReference>
<dbReference type="DrugBank" id="DB06201">
    <property type="generic name" value="Rufinamide"/>
</dbReference>
<dbReference type="DrugBank" id="DB08877">
    <property type="generic name" value="Ruxolitinib"/>
</dbReference>
<dbReference type="DrugBank" id="DB08736">
    <property type="generic name" value="S,R-Warfarin alcohol"/>
</dbReference>
<dbReference type="DrugBank" id="DB00936">
    <property type="generic name" value="Salicylic acid"/>
</dbReference>
<dbReference type="DrugBank" id="DB00938">
    <property type="generic name" value="Salmeterol"/>
</dbReference>
<dbReference type="DrugBank" id="DB01232">
    <property type="generic name" value="Saquinavir"/>
</dbReference>
<dbReference type="DrugBank" id="DB11689">
    <property type="generic name" value="Selumetinib"/>
</dbReference>
<dbReference type="DrugBank" id="DB13928">
    <property type="generic name" value="Semaglutide"/>
</dbReference>
<dbReference type="DrugBank" id="DB01104">
    <property type="generic name" value="Sertraline"/>
</dbReference>
<dbReference type="DrugBank" id="DB01236">
    <property type="generic name" value="Sevoflurane"/>
</dbReference>
<dbReference type="DrugBank" id="DB12965">
    <property type="generic name" value="Silver"/>
</dbReference>
<dbReference type="DrugBank" id="DB06290">
    <property type="generic name" value="Simeprevir"/>
</dbReference>
<dbReference type="DrugBank" id="DB00877">
    <property type="generic name" value="Sirolimus"/>
</dbReference>
<dbReference type="DrugBank" id="DB00815">
    <property type="generic name" value="Sodium lauryl sulfate"/>
</dbReference>
<dbReference type="DrugBank" id="DB15093">
    <property type="generic name" value="Somapacitan"/>
</dbReference>
<dbReference type="DrugBank" id="DB00421">
    <property type="generic name" value="Spironolactone"/>
</dbReference>
<dbReference type="DrugBank" id="DB00649">
    <property type="generic name" value="Stavudine"/>
</dbReference>
<dbReference type="DrugBank" id="DB03193">
    <property type="generic name" value="Stearic acid"/>
</dbReference>
<dbReference type="DrugBank" id="DB06150">
    <property type="generic name" value="Sulfadimethoxine"/>
</dbReference>
<dbReference type="DrugBank" id="DB01581">
    <property type="generic name" value="Sulfamerazine"/>
</dbReference>
<dbReference type="DrugBank" id="DB01582">
    <property type="generic name" value="Sulfamethazine"/>
</dbReference>
<dbReference type="DrugBank" id="DB00576">
    <property type="generic name" value="Sulfamethizole"/>
</dbReference>
<dbReference type="DrugBank" id="DB01015">
    <property type="generic name" value="Sulfamethoxazole"/>
</dbReference>
<dbReference type="DrugBank" id="DB00795">
    <property type="generic name" value="Sulfasalazine"/>
</dbReference>
<dbReference type="DrugBank" id="DB00605">
    <property type="generic name" value="Sulindac"/>
</dbReference>
<dbReference type="DrugBank" id="DB00391">
    <property type="generic name" value="Sulpiride"/>
</dbReference>
<dbReference type="DrugBank" id="DB00870">
    <property type="generic name" value="Suprofen"/>
</dbReference>
<dbReference type="DrugBank" id="DB00864">
    <property type="generic name" value="Tacrolimus"/>
</dbReference>
<dbReference type="DrugBank" id="DB00675">
    <property type="generic name" value="Tamoxifen"/>
</dbReference>
<dbReference type="DrugBank" id="DB05134">
    <property type="generic name" value="Tanespimycin"/>
</dbReference>
<dbReference type="DrugBank" id="DB09139">
    <property type="generic name" value="Technetium Tc-99m oxidronate"/>
</dbReference>
<dbReference type="DrugBank" id="DB05521">
    <property type="generic name" value="Telaprevir"/>
</dbReference>
<dbReference type="DrugBank" id="DB00853">
    <property type="generic name" value="Temozolomide"/>
</dbReference>
<dbReference type="DrugBank" id="DB14126">
    <property type="generic name" value="Tenofovir"/>
</dbReference>
<dbReference type="DrugBank" id="DB09299">
    <property type="generic name" value="Tenofovir alafenamide"/>
</dbReference>
<dbReference type="DrugBank" id="DB15133">
    <property type="generic name" value="Tepotinib"/>
</dbReference>
<dbReference type="DrugBank" id="DB00857">
    <property type="generic name" value="Terbinafine"/>
</dbReference>
<dbReference type="DrugBank" id="DB00342">
    <property type="generic name" value="Terfenadine"/>
</dbReference>
<dbReference type="DrugBank" id="DB00624">
    <property type="generic name" value="Testosterone"/>
</dbReference>
<dbReference type="DrugBank" id="DB13943">
    <property type="generic name" value="Testosterone cypionate"/>
</dbReference>
<dbReference type="DrugBank" id="DB13944">
    <property type="generic name" value="Testosterone enanthate"/>
</dbReference>
<dbReference type="DrugBank" id="DB01420">
    <property type="generic name" value="Testosterone propionate"/>
</dbReference>
<dbReference type="DrugBank" id="DB13946">
    <property type="generic name" value="Testosterone undecanoate"/>
</dbReference>
<dbReference type="DrugBank" id="DB00759">
    <property type="generic name" value="Tetracycline"/>
</dbReference>
<dbReference type="DrugBank" id="DB00152">
    <property type="generic name" value="Thiamine"/>
</dbReference>
<dbReference type="DrugBank" id="DB11590">
    <property type="generic name" value="Thimerosal"/>
</dbReference>
<dbReference type="DrugBank" id="DB01622">
    <property type="generic name" value="Thioproperazine"/>
</dbReference>
<dbReference type="DrugBank" id="DB01623">
    <property type="generic name" value="Thiothixene"/>
</dbReference>
<dbReference type="DrugBank" id="DB09100">
    <property type="generic name" value="Thyroid, porcine"/>
</dbReference>
<dbReference type="DrugBank" id="DB09070">
    <property type="generic name" value="Tibolone"/>
</dbReference>
<dbReference type="DrugBank" id="DB08816">
    <property type="generic name" value="Ticagrelor"/>
</dbReference>
<dbReference type="DrugBank" id="DB01133">
    <property type="generic name" value="Tiludronic acid"/>
</dbReference>
<dbReference type="DrugBank" id="DB15171">
    <property type="generic name" value="Tirzepatide"/>
</dbReference>
<dbReference type="DrugBank" id="DB11800">
    <property type="generic name" value="Tivozanib"/>
</dbReference>
<dbReference type="DrugBank" id="DB01056">
    <property type="generic name" value="Tocainide"/>
</dbReference>
<dbReference type="DrugBank" id="DB08895">
    <property type="generic name" value="Tofacitinib"/>
</dbReference>
<dbReference type="DrugBank" id="DB01124">
    <property type="generic name" value="Tolbutamide"/>
</dbReference>
<dbReference type="DrugBank" id="DB00500">
    <property type="generic name" value="Tolmetin"/>
</dbReference>
<dbReference type="DrugBank" id="DB00273">
    <property type="generic name" value="Topiramate"/>
</dbReference>
<dbReference type="DrugBank" id="DB01685">
    <property type="generic name" value="Topiroxostat"/>
</dbReference>
<dbReference type="DrugBank" id="DB00214">
    <property type="generic name" value="Torasemide"/>
</dbReference>
<dbReference type="DrugBank" id="DB00755">
    <property type="generic name" value="Tretinoin"/>
</dbReference>
<dbReference type="DrugBank" id="DB00620">
    <property type="generic name" value="Triamcinolone"/>
</dbReference>
<dbReference type="DrugBank" id="DB00432">
    <property type="generic name" value="Trifluridine"/>
</dbReference>
<dbReference type="DrugBank" id="DB08814">
    <property type="generic name" value="Triflusal"/>
</dbReference>
<dbReference type="DrugBank" id="DB11677">
    <property type="generic name" value="Triheptanoin"/>
</dbReference>
<dbReference type="DrugBank" id="DB00376">
    <property type="generic name" value="Trihexyphenidyl"/>
</dbReference>
<dbReference type="DrugBank" id="DB09069">
    <property type="generic name" value="Trimetazidine"/>
</dbReference>
<dbReference type="DrugBank" id="DB00792">
    <property type="generic name" value="Tripelennamine"/>
</dbReference>
<dbReference type="DrugBank" id="DB00427">
    <property type="generic name" value="Triprolidine"/>
</dbReference>
<dbReference type="DrugBank" id="DB08867">
    <property type="generic name" value="Ulipristal"/>
</dbReference>
<dbReference type="DrugBank" id="DB09076">
    <property type="generic name" value="Umeclidinium"/>
</dbReference>
<dbReference type="DrugBank" id="DB12255">
    <property type="generic name" value="Vadadustat"/>
</dbReference>
<dbReference type="DrugBank" id="DB00313">
    <property type="generic name" value="Valproic acid"/>
</dbReference>
<dbReference type="DrugBank" id="DB00512">
    <property type="generic name" value="Vancomycin"/>
</dbReference>
<dbReference type="DrugBank" id="DB05294">
    <property type="generic name" value="Vandetanib"/>
</dbReference>
<dbReference type="DrugBank" id="DB08881">
    <property type="generic name" value="Vemurafenib"/>
</dbReference>
<dbReference type="DrugBank" id="DB00661">
    <property type="generic name" value="Verapamil"/>
</dbReference>
<dbReference type="DrugBank" id="DB15456">
    <property type="generic name" value="Vericiguat"/>
</dbReference>
<dbReference type="DrugBank" id="DB11641">
    <property type="generic name" value="Vinflunine"/>
</dbReference>
<dbReference type="DrugBank" id="DB08828">
    <property type="generic name" value="Vismodegib"/>
</dbReference>
<dbReference type="DrugBank" id="DB00162">
    <property type="generic name" value="Vitamin A"/>
</dbReference>
<dbReference type="DrugBank" id="DB11739">
    <property type="generic name" value="Vonoprazan"/>
</dbReference>
<dbReference type="DrugBank" id="DB16699">
    <property type="generic name" value="Vutrisiran"/>
</dbReference>
<dbReference type="DrugBank" id="DB00682">
    <property type="generic name" value="Warfarin"/>
</dbReference>
<dbReference type="DrugBank" id="DB00943">
    <property type="generic name" value="Zalcitabine"/>
</dbReference>
<dbReference type="DrugBank" id="DB00495">
    <property type="generic name" value="Zidovudine"/>
</dbReference>
<dbReference type="DrugBank" id="DB00744">
    <property type="generic name" value="Zileuton"/>
</dbReference>
<dbReference type="DrugBank" id="DB14533">
    <property type="generic name" value="Zinc chloride"/>
</dbReference>
<dbReference type="DrugBank" id="DB14548">
    <property type="generic name" value="Zinc sulfate, unspecified form"/>
</dbReference>
<dbReference type="DrugBank" id="DB00246">
    <property type="generic name" value="Ziprasidone"/>
</dbReference>
<dbReference type="DrugBank" id="DB04828">
    <property type="generic name" value="Zomepirac"/>
</dbReference>
<dbReference type="DrugCentral" id="P02768"/>
<dbReference type="Allergome" id="763">
    <property type="allergen name" value="Hom s HSA"/>
</dbReference>
<dbReference type="CarbonylDB" id="P02768"/>
<dbReference type="GlyConnect" id="559">
    <property type="glycosylation" value="2 N-Linked glycans (2 sites), 3 O-Linked glycans (2 sites)"/>
</dbReference>
<dbReference type="GlyCosmos" id="P02768">
    <property type="glycosylation" value="32 sites, 10 glycans"/>
</dbReference>
<dbReference type="GlyGen" id="P02768">
    <property type="glycosylation" value="14 sites, 2 N-linked glycans (1 site), 6 O-linked glycans (8 sites)"/>
</dbReference>
<dbReference type="iPTMnet" id="P02768"/>
<dbReference type="MetOSite" id="P02768"/>
<dbReference type="PhosphoSitePlus" id="P02768"/>
<dbReference type="SwissPalm" id="P02768"/>
<dbReference type="BioMuta" id="ALB"/>
<dbReference type="DMDM" id="113576"/>
<dbReference type="OGP" id="P02768"/>
<dbReference type="REPRODUCTION-2DPAGE" id="IPI00384697"/>
<dbReference type="REPRODUCTION-2DPAGE" id="IPI00745872"/>
<dbReference type="REPRODUCTION-2DPAGE" id="P02768"/>
<dbReference type="CPTAC" id="non-CPTAC-1160"/>
<dbReference type="jPOST" id="P02768"/>
<dbReference type="MassIVE" id="P02768"/>
<dbReference type="PaxDb" id="9606-ENSP00000295897"/>
<dbReference type="PeptideAtlas" id="P02768"/>
<dbReference type="PRIDE" id="P02768"/>
<dbReference type="ProteomicsDB" id="51587">
    <molecule id="P02768-1"/>
</dbReference>
<dbReference type="ProteomicsDB" id="51588">
    <molecule id="P02768-2"/>
</dbReference>
<dbReference type="ProteomicsDB" id="70582"/>
<dbReference type="ABCD" id="P02768">
    <property type="antibodies" value="101 sequenced antibodies"/>
</dbReference>
<dbReference type="Antibodypedia" id="3342">
    <property type="antibodies" value="3386 antibodies from 55 providers"/>
</dbReference>
<dbReference type="DNASU" id="213"/>
<dbReference type="Ensembl" id="ENST00000295897.9">
    <molecule id="P02768-1"/>
    <property type="protein sequence ID" value="ENSP00000295897.4"/>
    <property type="gene ID" value="ENSG00000163631.19"/>
</dbReference>
<dbReference type="GeneID" id="213"/>
<dbReference type="KEGG" id="hsa:213"/>
<dbReference type="MANE-Select" id="ENST00000295897.9">
    <property type="protein sequence ID" value="ENSP00000295897.4"/>
    <property type="RefSeq nucleotide sequence ID" value="NM_000477.7"/>
    <property type="RefSeq protein sequence ID" value="NP_000468.1"/>
</dbReference>
<dbReference type="UCSC" id="uc003hgs.5">
    <molecule id="P02768-1"/>
    <property type="organism name" value="human"/>
</dbReference>
<dbReference type="UCSC" id="uc062xfr.1">
    <property type="organism name" value="human"/>
</dbReference>
<dbReference type="AGR" id="HGNC:399"/>
<dbReference type="CTD" id="213"/>
<dbReference type="DisGeNET" id="213"/>
<dbReference type="GeneCards" id="ALB"/>
<dbReference type="HGNC" id="HGNC:399">
    <property type="gene designation" value="ALB"/>
</dbReference>
<dbReference type="HPA" id="ENSG00000163631">
    <property type="expression patterns" value="Tissue enriched (liver)"/>
</dbReference>
<dbReference type="MalaCards" id="ALB"/>
<dbReference type="MIM" id="103600">
    <property type="type" value="gene"/>
</dbReference>
<dbReference type="MIM" id="615999">
    <property type="type" value="phenotype"/>
</dbReference>
<dbReference type="MIM" id="616000">
    <property type="type" value="phenotype"/>
</dbReference>
<dbReference type="neXtProt" id="NX_P02768"/>
<dbReference type="OpenTargets" id="ENSG00000163631"/>
<dbReference type="Orphanet" id="86816">
    <property type="disease" value="Congenital analbuminemia"/>
</dbReference>
<dbReference type="PharmGKB" id="PA24690"/>
<dbReference type="VEuPathDB" id="HostDB:ENSG00000163631"/>
<dbReference type="eggNOG" id="ENOG502R7EA">
    <property type="taxonomic scope" value="Eukaryota"/>
</dbReference>
<dbReference type="GeneTree" id="ENSGT00390000000113"/>
<dbReference type="InParanoid" id="P02768"/>
<dbReference type="OMA" id="ADPHACY"/>
<dbReference type="OrthoDB" id="9875082at2759"/>
<dbReference type="PAN-GO" id="P02768">
    <property type="GO annotations" value="4 GO annotations based on evolutionary models"/>
</dbReference>
<dbReference type="PhylomeDB" id="P02768"/>
<dbReference type="TreeFam" id="TF335561"/>
<dbReference type="PathwayCommons" id="P02768"/>
<dbReference type="Reactome" id="R-HSA-114608">
    <property type="pathway name" value="Platelet degranulation"/>
</dbReference>
<dbReference type="Reactome" id="R-HSA-159418">
    <property type="pathway name" value="Recycling of bile acids and salts"/>
</dbReference>
<dbReference type="Reactome" id="R-HSA-189451">
    <property type="pathway name" value="Heme biosynthesis"/>
</dbReference>
<dbReference type="Reactome" id="R-HSA-189483">
    <property type="pathway name" value="Heme degradation"/>
</dbReference>
<dbReference type="Reactome" id="R-HSA-2168880">
    <property type="pathway name" value="Scavenging of heme from plasma"/>
</dbReference>
<dbReference type="Reactome" id="R-HSA-381426">
    <property type="pathway name" value="Regulation of Insulin-like Growth Factor (IGF) transport and uptake by Insulin-like Growth Factor Binding Proteins (IGFBPs)"/>
</dbReference>
<dbReference type="Reactome" id="R-HSA-8957275">
    <property type="pathway name" value="Post-translational protein phosphorylation"/>
</dbReference>
<dbReference type="Reactome" id="R-HSA-8964058">
    <property type="pathway name" value="HDL remodeling"/>
</dbReference>
<dbReference type="Reactome" id="R-HSA-9707564">
    <property type="pathway name" value="Cytoprotection by HMOX1"/>
</dbReference>
<dbReference type="Reactome" id="R-HSA-9749641">
    <property type="pathway name" value="Aspirin ADME"/>
</dbReference>
<dbReference type="Reactome" id="R-HSA-9757110">
    <property type="pathway name" value="Prednisone ADME"/>
</dbReference>
<dbReference type="Reactome" id="R-HSA-9793528">
    <property type="pathway name" value="Ciprofloxacin ADME"/>
</dbReference>
<dbReference type="SignaLink" id="P02768"/>
<dbReference type="SIGNOR" id="P02768"/>
<dbReference type="BioGRID-ORCS" id="213">
    <property type="hits" value="8 hits in 1149 CRISPR screens"/>
</dbReference>
<dbReference type="CD-CODE" id="232F8A39">
    <property type="entry name" value="P-body"/>
</dbReference>
<dbReference type="ChiTaRS" id="ALB">
    <property type="organism name" value="human"/>
</dbReference>
<dbReference type="EvolutionaryTrace" id="P02768"/>
<dbReference type="GeneWiki" id="Serum_albumin"/>
<dbReference type="GenomeRNAi" id="213"/>
<dbReference type="Pharos" id="P02768">
    <property type="development level" value="Tchem"/>
</dbReference>
<dbReference type="PRO" id="PR:P02768"/>
<dbReference type="Proteomes" id="UP000005640">
    <property type="component" value="Chromosome 4"/>
</dbReference>
<dbReference type="RNAct" id="P02768">
    <property type="molecule type" value="protein"/>
</dbReference>
<dbReference type="Bgee" id="ENSG00000163631">
    <property type="expression patterns" value="Expressed in liver and 114 other cell types or tissues"/>
</dbReference>
<dbReference type="ExpressionAtlas" id="P02768">
    <property type="expression patterns" value="baseline and differential"/>
</dbReference>
<dbReference type="GO" id="GO:0072562">
    <property type="term" value="C:blood microparticle"/>
    <property type="evidence" value="ECO:0007005"/>
    <property type="project" value="UniProtKB"/>
</dbReference>
<dbReference type="GO" id="GO:0005737">
    <property type="term" value="C:cytoplasm"/>
    <property type="evidence" value="ECO:0000318"/>
    <property type="project" value="GO_Central"/>
</dbReference>
<dbReference type="GO" id="GO:0005783">
    <property type="term" value="C:endoplasmic reticulum"/>
    <property type="evidence" value="ECO:0000314"/>
    <property type="project" value="HPA"/>
</dbReference>
<dbReference type="GO" id="GO:0005788">
    <property type="term" value="C:endoplasmic reticulum lumen"/>
    <property type="evidence" value="ECO:0000304"/>
    <property type="project" value="Reactome"/>
</dbReference>
<dbReference type="GO" id="GO:0070062">
    <property type="term" value="C:extracellular exosome"/>
    <property type="evidence" value="ECO:0000314"/>
    <property type="project" value="UniProtKB"/>
</dbReference>
<dbReference type="GO" id="GO:0005576">
    <property type="term" value="C:extracellular region"/>
    <property type="evidence" value="ECO:0000304"/>
    <property type="project" value="Reactome"/>
</dbReference>
<dbReference type="GO" id="GO:0005615">
    <property type="term" value="C:extracellular space"/>
    <property type="evidence" value="ECO:0000314"/>
    <property type="project" value="UniProtKB"/>
</dbReference>
<dbReference type="GO" id="GO:0005794">
    <property type="term" value="C:Golgi apparatus"/>
    <property type="evidence" value="ECO:0000314"/>
    <property type="project" value="HPA"/>
</dbReference>
<dbReference type="GO" id="GO:0005634">
    <property type="term" value="C:nucleus"/>
    <property type="evidence" value="ECO:0007005"/>
    <property type="project" value="UniProtKB"/>
</dbReference>
<dbReference type="GO" id="GO:0031093">
    <property type="term" value="C:platelet alpha granule lumen"/>
    <property type="evidence" value="ECO:0000304"/>
    <property type="project" value="Reactome"/>
</dbReference>
<dbReference type="GO" id="GO:0032991">
    <property type="term" value="C:protein-containing complex"/>
    <property type="evidence" value="ECO:0000314"/>
    <property type="project" value="UniProtKB"/>
</dbReference>
<dbReference type="GO" id="GO:0016209">
    <property type="term" value="F:antioxidant activity"/>
    <property type="evidence" value="ECO:0000303"/>
    <property type="project" value="UniProtKB"/>
</dbReference>
<dbReference type="GO" id="GO:0005507">
    <property type="term" value="F:copper ion binding"/>
    <property type="evidence" value="ECO:0000303"/>
    <property type="project" value="UniProtKB"/>
</dbReference>
<dbReference type="GO" id="GO:0003677">
    <property type="term" value="F:DNA binding"/>
    <property type="evidence" value="ECO:0000314"/>
    <property type="project" value="UniProtKB"/>
</dbReference>
<dbReference type="GO" id="GO:1903981">
    <property type="term" value="F:enterobactin binding"/>
    <property type="evidence" value="ECO:0000314"/>
    <property type="project" value="UniProtKB"/>
</dbReference>
<dbReference type="GO" id="GO:0140272">
    <property type="term" value="F:exogenous protein binding"/>
    <property type="evidence" value="ECO:0000314"/>
    <property type="project" value="UniProtKB"/>
</dbReference>
<dbReference type="GO" id="GO:0005504">
    <property type="term" value="F:fatty acid binding"/>
    <property type="evidence" value="ECO:0000314"/>
    <property type="project" value="UniProtKB"/>
</dbReference>
<dbReference type="GO" id="GO:0042802">
    <property type="term" value="F:identical protein binding"/>
    <property type="evidence" value="ECO:0000353"/>
    <property type="project" value="IntAct"/>
</dbReference>
<dbReference type="GO" id="GO:0051087">
    <property type="term" value="F:protein-folding chaperone binding"/>
    <property type="evidence" value="ECO:0000353"/>
    <property type="project" value="BHF-UCL"/>
</dbReference>
<dbReference type="GO" id="GO:0030170">
    <property type="term" value="F:pyridoxal phosphate binding"/>
    <property type="evidence" value="ECO:0000314"/>
    <property type="project" value="UniProtKB"/>
</dbReference>
<dbReference type="GO" id="GO:0015643">
    <property type="term" value="F:toxic substance binding"/>
    <property type="evidence" value="ECO:0000314"/>
    <property type="project" value="UniProtKB"/>
</dbReference>
<dbReference type="GO" id="GO:0072732">
    <property type="term" value="P:cellular response to calcium ion starvation"/>
    <property type="evidence" value="ECO:0000314"/>
    <property type="project" value="UniProtKB"/>
</dbReference>
<dbReference type="GO" id="GO:0009267">
    <property type="term" value="P:cellular response to starvation"/>
    <property type="evidence" value="ECO:0000314"/>
    <property type="project" value="UniProtKB"/>
</dbReference>
<dbReference type="GO" id="GO:0051902">
    <property type="term" value="P:negative regulation of mitochondrial depolarization"/>
    <property type="evidence" value="ECO:0000314"/>
    <property type="project" value="UniProtKB"/>
</dbReference>
<dbReference type="CDD" id="cd00015">
    <property type="entry name" value="ALBUMIN"/>
    <property type="match status" value="3"/>
</dbReference>
<dbReference type="FunFam" id="1.10.246.10:FF:000001">
    <property type="entry name" value="Serum albumin"/>
    <property type="match status" value="2"/>
</dbReference>
<dbReference type="FunFam" id="1.10.246.10:FF:000002">
    <property type="entry name" value="Serum albumin"/>
    <property type="match status" value="2"/>
</dbReference>
<dbReference type="FunFam" id="1.10.246.10:FF:000003">
    <property type="entry name" value="Serum albumin"/>
    <property type="match status" value="1"/>
</dbReference>
<dbReference type="FunFam" id="1.10.246.10:FF:000005">
    <property type="entry name" value="Serum albumin"/>
    <property type="match status" value="1"/>
</dbReference>
<dbReference type="Gene3D" id="1.10.246.10">
    <property type="match status" value="6"/>
</dbReference>
<dbReference type="InterPro" id="IPR000264">
    <property type="entry name" value="ALB/AFP/VDB"/>
</dbReference>
<dbReference type="InterPro" id="IPR020858">
    <property type="entry name" value="Serum_albumin-like"/>
</dbReference>
<dbReference type="InterPro" id="IPR021177">
    <property type="entry name" value="Serum_albumin/AFP/Afamin"/>
</dbReference>
<dbReference type="InterPro" id="IPR020857">
    <property type="entry name" value="Serum_albumin_CS"/>
</dbReference>
<dbReference type="InterPro" id="IPR014760">
    <property type="entry name" value="Serum_albumin_N"/>
</dbReference>
<dbReference type="PANTHER" id="PTHR11385:SF15">
    <property type="entry name" value="ALBUMIN"/>
    <property type="match status" value="1"/>
</dbReference>
<dbReference type="PANTHER" id="PTHR11385">
    <property type="entry name" value="SERUM ALBUMIN-RELATED"/>
    <property type="match status" value="1"/>
</dbReference>
<dbReference type="Pfam" id="PF00273">
    <property type="entry name" value="Serum_albumin"/>
    <property type="match status" value="3"/>
</dbReference>
<dbReference type="PIRSF" id="PIRSF002520">
    <property type="entry name" value="Serum_albumin_subgroup"/>
    <property type="match status" value="1"/>
</dbReference>
<dbReference type="PRINTS" id="PR00802">
    <property type="entry name" value="SERUMALBUMIN"/>
</dbReference>
<dbReference type="SMART" id="SM00103">
    <property type="entry name" value="ALBUMIN"/>
    <property type="match status" value="3"/>
</dbReference>
<dbReference type="SUPFAM" id="SSF48552">
    <property type="entry name" value="Serum albumin-like"/>
    <property type="match status" value="3"/>
</dbReference>
<dbReference type="PROSITE" id="PS00212">
    <property type="entry name" value="ALBUMIN_1"/>
    <property type="match status" value="3"/>
</dbReference>
<dbReference type="PROSITE" id="PS51438">
    <property type="entry name" value="ALBUMIN_2"/>
    <property type="match status" value="3"/>
</dbReference>
<proteinExistence type="evidence at protein level"/>
<feature type="signal peptide">
    <location>
        <begin position="1"/>
        <end position="18"/>
    </location>
</feature>
<feature type="propeptide" id="PRO_0000001067">
    <location>
        <begin position="19"/>
        <end position="24"/>
    </location>
</feature>
<feature type="chain" id="PRO_0000001068" description="Albumin">
    <location>
        <begin position="25"/>
        <end position="609"/>
    </location>
</feature>
<feature type="domain" description="Albumin 1" evidence="4">
    <location>
        <begin position="19"/>
        <end position="210"/>
    </location>
</feature>
<feature type="domain" description="Albumin 2" evidence="4">
    <location>
        <begin position="211"/>
        <end position="403"/>
    </location>
</feature>
<feature type="domain" description="Albumin 3" evidence="4">
    <location>
        <begin position="404"/>
        <end position="601"/>
    </location>
</feature>
<feature type="binding site" evidence="2">
    <location>
        <position position="27"/>
    </location>
    <ligand>
        <name>Cu cation</name>
        <dbReference type="ChEBI" id="CHEBI:23378"/>
    </ligand>
</feature>
<feature type="binding site" evidence="1">
    <location>
        <position position="30"/>
    </location>
    <ligand>
        <name>Ca(2+)</name>
        <dbReference type="ChEBI" id="CHEBI:29108"/>
        <label>1</label>
    </ligand>
</feature>
<feature type="binding site" evidence="1">
    <location>
        <position position="37"/>
    </location>
    <ligand>
        <name>Ca(2+)</name>
        <dbReference type="ChEBI" id="CHEBI:29108"/>
        <label>2</label>
    </ligand>
</feature>
<feature type="binding site" evidence="18 46">
    <location>
        <position position="91"/>
    </location>
    <ligand>
        <name>Zn(2+)</name>
        <dbReference type="ChEBI" id="CHEBI:29105"/>
    </ligand>
</feature>
<feature type="binding site" evidence="27">
    <location>
        <position position="264"/>
    </location>
    <ligand>
        <name>(4Z,15Z)-bilirubin IXalpha</name>
        <dbReference type="ChEBI" id="CHEBI:57977"/>
    </ligand>
</feature>
<feature type="binding site" evidence="1">
    <location>
        <position position="268"/>
    </location>
    <ligand>
        <name>Ca(2+)</name>
        <dbReference type="ChEBI" id="CHEBI:29108"/>
        <label>1</label>
    </ligand>
</feature>
<feature type="binding site" evidence="18 46">
    <location>
        <position position="271"/>
    </location>
    <ligand>
        <name>Zn(2+)</name>
        <dbReference type="ChEBI" id="CHEBI:29105"/>
    </ligand>
</feature>
<feature type="binding site" evidence="1">
    <location>
        <position position="273"/>
    </location>
    <ligand>
        <name>Ca(2+)</name>
        <dbReference type="ChEBI" id="CHEBI:29108"/>
        <label>1</label>
    </ligand>
</feature>
<feature type="binding site" evidence="18 46">
    <location>
        <position position="273"/>
    </location>
    <ligand>
        <name>Zn(2+)</name>
        <dbReference type="ChEBI" id="CHEBI:29105"/>
    </ligand>
</feature>
<feature type="binding site" evidence="1">
    <location>
        <position position="276"/>
    </location>
    <ligand>
        <name>Ca(2+)</name>
        <dbReference type="ChEBI" id="CHEBI:29108"/>
        <label>1</label>
    </ligand>
</feature>
<feature type="binding site" evidence="1">
    <location>
        <position position="279"/>
    </location>
    <ligand>
        <name>Ca(2+)</name>
        <dbReference type="ChEBI" id="CHEBI:29108"/>
        <label>2</label>
    </ligand>
</feature>
<feature type="binding site" evidence="1">
    <location>
        <position position="283"/>
    </location>
    <ligand>
        <name>Ca(2+)</name>
        <dbReference type="ChEBI" id="CHEBI:29108"/>
        <label>2</label>
    </ligand>
</feature>
<feature type="site" description="Not glycated" evidence="7">
    <location>
        <position position="28"/>
    </location>
</feature>
<feature type="site" description="Not glycated" evidence="7">
    <location>
        <position position="44"/>
    </location>
</feature>
<feature type="site" description="Not glycated" evidence="7">
    <location>
        <position position="65"/>
    </location>
</feature>
<feature type="site" description="Not glycated" evidence="7">
    <location>
        <position position="88"/>
    </location>
</feature>
<feature type="site" description="Not glycated" evidence="7">
    <location>
        <position position="97"/>
    </location>
</feature>
<feature type="site" description="Not glycated" evidence="7">
    <location>
        <position position="117"/>
    </location>
</feature>
<feature type="site" description="Not glycated" evidence="7">
    <location>
        <position position="130"/>
    </location>
</feature>
<feature type="site" description="Not glycated" evidence="7">
    <location>
        <position position="160"/>
    </location>
</feature>
<feature type="site" description="Not glycated" evidence="7">
    <location>
        <position position="183"/>
    </location>
</feature>
<feature type="site" description="Not glycated" evidence="7">
    <location>
        <position position="198"/>
    </location>
</feature>
<feature type="site" description="Not glycated" evidence="7">
    <location>
        <position position="205"/>
    </location>
</feature>
<feature type="site" description="Not glycated" evidence="7">
    <location>
        <position position="214"/>
    </location>
</feature>
<feature type="site" description="Not glycated" evidence="7">
    <location>
        <position position="219"/>
    </location>
</feature>
<feature type="site" description="Aspirin-acetylated lysine">
    <location>
        <position position="223"/>
    </location>
</feature>
<feature type="site" description="Not glycated" evidence="7">
    <location>
        <position position="229"/>
    </location>
</feature>
<feature type="site" description="Not glycated" evidence="7">
    <location>
        <position position="236"/>
    </location>
</feature>
<feature type="site" description="Not glycated" evidence="7">
    <location>
        <position position="264"/>
    </location>
</feature>
<feature type="site" description="Not glycated" evidence="7">
    <location>
        <position position="286"/>
    </location>
</feature>
<feature type="site" description="Not glycated" evidence="7">
    <location>
        <position position="298"/>
    </location>
</feature>
<feature type="site" description="Not glycated" evidence="7">
    <location>
        <position position="310"/>
    </location>
</feature>
<feature type="site" description="Not glycated" evidence="7">
    <location>
        <position position="383"/>
    </location>
</feature>
<feature type="site" description="Not glycated" evidence="7">
    <location>
        <position position="396"/>
    </location>
</feature>
<feature type="site" description="Not glycated" evidence="7">
    <location>
        <position position="413"/>
    </location>
</feature>
<feature type="site" description="Not glycated" evidence="7">
    <location>
        <position position="426"/>
    </location>
</feature>
<feature type="site" description="Not glycated" evidence="7">
    <location>
        <position position="438"/>
    </location>
</feature>
<feature type="site" description="Not glycated" evidence="7">
    <location>
        <position position="456"/>
    </location>
</feature>
<feature type="site" description="Not glycated" evidence="7">
    <location>
        <position position="460"/>
    </location>
</feature>
<feature type="site" description="Not glycated" evidence="7">
    <location>
        <position position="490"/>
    </location>
</feature>
<feature type="site" description="Not glycated" evidence="7">
    <location>
        <position position="499"/>
    </location>
</feature>
<feature type="site" description="Not glycated" evidence="7">
    <location>
        <position position="524"/>
    </location>
</feature>
<feature type="site" description="Not glycated" evidence="7">
    <location>
        <position position="543"/>
    </location>
</feature>
<feature type="site" description="Not glycated" evidence="7">
    <location>
        <position position="548"/>
    </location>
</feature>
<feature type="site" description="Not glycated" evidence="7">
    <location>
        <position position="562"/>
    </location>
</feature>
<feature type="site" description="Not glycated" evidence="7">
    <location>
        <position position="565"/>
    </location>
</feature>
<feature type="site" description="Not glycated" evidence="7">
    <location>
        <position position="581"/>
    </location>
</feature>
<feature type="site" description="Not glycated" evidence="7">
    <location>
        <position position="584"/>
    </location>
</feature>
<feature type="site" description="Not glycated" evidence="7">
    <location>
        <position position="588"/>
    </location>
</feature>
<feature type="site" description="Not glycated" evidence="7">
    <location>
        <position position="598"/>
    </location>
</feature>
<feature type="modified residue" description="Phosphoserine; by FAM20C" evidence="15">
    <location>
        <position position="29"/>
    </location>
</feature>
<feature type="modified residue" description="Phosphoserine; by FAM20C" evidence="15 47 50">
    <location>
        <position position="82"/>
    </location>
</feature>
<feature type="modified residue" description="Phosphoserine; by FAM20C" evidence="15 50">
    <location>
        <position position="89"/>
    </location>
</feature>
<feature type="modified residue" description="Phosphothreonine; by FAM20C" evidence="15">
    <location>
        <position position="107"/>
    </location>
</feature>
<feature type="modified residue" description="N6-succinyllysine" evidence="3">
    <location>
        <position position="229"/>
    </location>
</feature>
<feature type="modified residue" description="Phosphoserine" evidence="3">
    <location>
        <position position="297"/>
    </location>
</feature>
<feature type="modified residue" description="Phosphoserine" evidence="48">
    <location>
        <position position="443"/>
    </location>
</feature>
<feature type="modified residue" description="Phosphothreonine" evidence="48">
    <location>
        <position position="444"/>
    </location>
</feature>
<feature type="modified residue" description="Phosphothreonine" evidence="48">
    <location>
        <position position="446"/>
    </location>
</feature>
<feature type="modified residue" description="N6-succinyllysine" evidence="3">
    <location>
        <position position="460"/>
    </location>
</feature>
<feature type="modified residue" description="Phosphoserine" evidence="50">
    <location>
        <position position="513"/>
    </location>
</feature>
<feature type="modified residue" description="N6-succinyllysine" evidence="3">
    <location>
        <position position="543"/>
    </location>
</feature>
<feature type="modified residue" description="N6-methyllysine; alternate" evidence="49">
    <location>
        <position position="558"/>
    </location>
</feature>
<feature type="modified residue" description="N6-succinyllysine" evidence="3">
    <location>
        <position position="588"/>
    </location>
</feature>
<feature type="glycosylation site" description="N-linked (Glc) (glycation) lysine" evidence="22">
    <location>
        <position position="36"/>
    </location>
</feature>
<feature type="glycosylation site" description="N-linked (Glc) (glycation) lysine; in vitro" evidence="7">
    <location>
        <position position="75"/>
    </location>
</feature>
<feature type="glycosylation site" description="N-linked (Glc) (glycation) lysine; in vitro" evidence="7">
    <location>
        <position position="161"/>
    </location>
</feature>
<feature type="glycosylation site" description="N-linked (Glc) (glycation) lysine; in vitro" evidence="7">
    <location>
        <position position="186"/>
    </location>
</feature>
<feature type="glycosylation site" description="N-linked (Glc) (glycation) lysine; in vitro" evidence="22 29">
    <location>
        <position position="223"/>
    </location>
</feature>
<feature type="glycosylation site" description="N-linked (Glc) (glycation) lysine; in vitro" evidence="7">
    <location>
        <position position="249"/>
    </location>
</feature>
<feature type="glycosylation site" description="N-linked (Glc) (glycation) lysine" evidence="7 22">
    <location>
        <position position="257"/>
    </location>
</feature>
<feature type="glycosylation site" description="N-linked (Glc) (glycation) lysine; in vitro" evidence="7">
    <location>
        <position position="300"/>
    </location>
</feature>
<feature type="glycosylation site" description="N-linked (Glc) (glycation) lysine" evidence="22">
    <location>
        <position position="305"/>
    </location>
</feature>
<feature type="glycosylation site" description="N-linked (Glc) (glycation) lysine; in vitro" evidence="7">
    <location>
        <position position="337"/>
    </location>
</feature>
<feature type="glycosylation site" description="N-linked (Glc) (glycation) lysine" evidence="22">
    <location>
        <position position="341"/>
    </location>
</feature>
<feature type="glycosylation site" id="CAR_000226" description="N-linked (GlcNAc...) asparagine; in variant Redhill">
    <location>
        <position position="342"/>
    </location>
</feature>
<feature type="glycosylation site" description="N-linked (Glc) (glycation) lysine; in vitro" evidence="7">
    <location>
        <position position="347"/>
    </location>
</feature>
<feature type="glycosylation site" description="N-linked (Glc) (glycation) lysine" evidence="7 22">
    <location>
        <position position="375"/>
    </location>
</feature>
<feature type="glycosylation site" description="N-linked (Glc) (glycation) lysine; in vitro" evidence="7">
    <location>
        <position position="402"/>
    </location>
</feature>
<feature type="glycosylation site" description="N-linked (Glc) (glycation) lysine; in vitro" evidence="7">
    <location>
        <position position="437"/>
    </location>
</feature>
<feature type="glycosylation site" description="N-linked (Glc) (glycation) lysine" evidence="22">
    <location>
        <position position="463"/>
    </location>
</feature>
<feature type="glycosylation site" description="N-linked (Glc) (glycation) lysine; in vitro" evidence="7">
    <location>
        <position position="468"/>
    </location>
</feature>
<feature type="glycosylation site" id="CAR_000069" description="N-linked (GlcNAc...) asparagine; in variant Casebrook">
    <location>
        <position position="518"/>
    </location>
</feature>
<feature type="glycosylation site" description="N-linked (Glc) (glycation) lysine" evidence="7 22 28 29">
    <location>
        <position position="549"/>
    </location>
</feature>
<feature type="glycosylation site" description="N-linked (Glc) (glycation) lysine; alternate" evidence="22">
    <location>
        <position position="558"/>
    </location>
</feature>
<feature type="glycosylation site" description="N-linked (Glc) (glycation) lysine; in vitro" evidence="7">
    <location>
        <position position="560"/>
    </location>
</feature>
<feature type="glycosylation site" description="N-linked (Glc) (glycation) lysine; in vitro" evidence="7">
    <location>
        <position position="569"/>
    </location>
</feature>
<feature type="glycosylation site" description="N-linked (Glc) (glycation) lysine; in vitro" evidence="7">
    <location>
        <position position="597"/>
    </location>
</feature>
<feature type="disulfide bond" evidence="4 18 40 46">
    <location>
        <begin position="77"/>
        <end position="86"/>
    </location>
</feature>
<feature type="disulfide bond" evidence="4 18 40 46">
    <location>
        <begin position="99"/>
        <end position="115"/>
    </location>
</feature>
<feature type="disulfide bond" evidence="4 18 40 46">
    <location>
        <begin position="114"/>
        <end position="125"/>
    </location>
</feature>
<feature type="disulfide bond" evidence="4 18 40 46">
    <location>
        <begin position="148"/>
        <end position="193"/>
    </location>
</feature>
<feature type="disulfide bond" evidence="4 18 40 46">
    <location>
        <begin position="192"/>
        <end position="201"/>
    </location>
</feature>
<feature type="disulfide bond" evidence="4 18 40 46">
    <location>
        <begin position="224"/>
        <end position="270"/>
    </location>
</feature>
<feature type="disulfide bond" evidence="4 18 40 46">
    <location>
        <begin position="269"/>
        <end position="277"/>
    </location>
</feature>
<feature type="disulfide bond" evidence="4 18 40 46">
    <location>
        <begin position="289"/>
        <end position="303"/>
    </location>
</feature>
<feature type="disulfide bond" evidence="4 18 40 46">
    <location>
        <begin position="302"/>
        <end position="313"/>
    </location>
</feature>
<feature type="disulfide bond" evidence="4 18 40 46">
    <location>
        <begin position="340"/>
        <end position="385"/>
    </location>
</feature>
<feature type="disulfide bond" evidence="4 18 40 46">
    <location>
        <begin position="384"/>
        <end position="393"/>
    </location>
</feature>
<feature type="disulfide bond" evidence="4 18 40 46">
    <location>
        <begin position="416"/>
        <end position="462"/>
    </location>
</feature>
<feature type="disulfide bond" evidence="4 18 40 46">
    <location>
        <begin position="461"/>
        <end position="472"/>
    </location>
</feature>
<feature type="disulfide bond" evidence="4 18 40 46">
    <location>
        <begin position="485"/>
        <end position="501"/>
    </location>
</feature>
<feature type="disulfide bond" evidence="4 18 40 46">
    <location>
        <begin position="500"/>
        <end position="511"/>
    </location>
</feature>
<feature type="disulfide bond" evidence="4 18 40 46">
    <location>
        <begin position="538"/>
        <end position="583"/>
    </location>
</feature>
<feature type="disulfide bond" evidence="4 18 40 46">
    <location>
        <begin position="582"/>
        <end position="591"/>
    </location>
</feature>
<feature type="splice variant" id="VSP_021275" description="In isoform 2." evidence="42 43">
    <location>
        <begin position="43"/>
        <end position="234"/>
    </location>
</feature>
<feature type="splice variant" id="VSP_057389" description="In isoform 3." evidence="42">
    <location>
        <begin position="164"/>
        <end position="376"/>
    </location>
</feature>
<feature type="sequence variant" id="VAR_000499" description="In Redhill/Malmo-I/Tradate; associated in cis with T-344 in Redhill; dbSNP:rs80008208." evidence="8">
    <original>R</original>
    <variation>C</variation>
    <location>
        <position position="23"/>
    </location>
</feature>
<feature type="sequence variant" id="VAR_000500" description="In Fukuoka-2/Lille/Taipei/Varese/Komagome-3; dbSNP:rs72552709." evidence="12 13 19">
    <original>R</original>
    <variation>H</variation>
    <location>
        <position position="23"/>
    </location>
</feature>
<feature type="sequence variant" id="VAR_000501" description="In Jaffna; dbSNP:rs74821926.">
    <original>R</original>
    <variation>L</variation>
    <location>
        <position position="24"/>
    </location>
</feature>
<feature type="sequence variant" id="VAR_000502" description="In Takefu/Honolulu-1; dbSNP:rs74821926." evidence="14">
    <original>R</original>
    <variation>P</variation>
    <location>
        <position position="24"/>
    </location>
</feature>
<feature type="sequence variant" id="VAR_000503" description="In Christchurch/Honolulu-2; dbSNP:rs74821926." evidence="14 16 19">
    <original>R</original>
    <variation>Q</variation>
    <location>
        <position position="24"/>
    </location>
</feature>
<feature type="sequence variant" id="VAR_000504" description="In Bleinheim/Iowa city-2; dbSNP:rs75353611." evidence="12">
    <original>D</original>
    <variation>V</variation>
    <location>
        <position position="25"/>
    </location>
</feature>
<feature type="sequence variant" id="VAR_000505" description="In Nagasaki-3; dbSNP:rs76285851.">
    <original>H</original>
    <variation>Q</variation>
    <location>
        <position position="27"/>
    </location>
</feature>
<feature type="sequence variant" id="VAR_000506" description="In Larino; dbSNP:rs141733599." evidence="9 32">
    <original>H</original>
    <variation>Y</variation>
    <location>
        <position position="27"/>
    </location>
</feature>
<feature type="sequence variant" id="VAR_010657" evidence="5">
    <original>F</original>
    <variation>Y</variation>
    <location>
        <position position="73"/>
    </location>
</feature>
<feature type="sequence variant" id="VAR_000507" description="In Torino; dbSNP:rs77050410." evidence="13">
    <original>E</original>
    <variation>K</variation>
    <location>
        <position position="84"/>
    </location>
</feature>
<feature type="sequence variant" id="VAR_000508" description="In Malmo-95/Dalakarlia; dbSNP:rs78574148." evidence="8">
    <original>D</original>
    <variation>N</variation>
    <location>
        <position position="87"/>
    </location>
</feature>
<feature type="sequence variant" id="VAR_013011" description="In FDAH; dbSNP:rs77892378." evidence="39">
    <original>L</original>
    <variation>P</variation>
    <location>
        <position position="90"/>
    </location>
</feature>
<feature type="sequence variant" id="VAR_000509" description="In Vibo Valentia; dbSNP:rs80296402." evidence="13">
    <original>E</original>
    <variation>K</variation>
    <location>
        <position position="106"/>
    </location>
</feature>
<feature type="sequence variant" id="VAR_014290" description="In dbSNP:rs1718794411." evidence="26">
    <original>E</original>
    <variation>G</variation>
    <location>
        <position position="121"/>
    </location>
</feature>
<feature type="sequence variant" id="VAR_000510" description="In Yanomama-2; dbSNP:rs77238412.">
    <original>R</original>
    <variation>G</variation>
    <location>
        <position position="138"/>
    </location>
</feature>
<feature type="sequence variant" id="VAR_000511" description="In Nagoya; dbSNP:rs75522063." evidence="14">
    <original>E</original>
    <variation>K</variation>
    <location>
        <position position="143"/>
    </location>
</feature>
<feature type="sequence variant" id="VAR_013012" description="In Tregasio; dbSNP:rs77752336.">
    <original>V</original>
    <variation>E</variation>
    <location>
        <position position="146"/>
    </location>
</feature>
<feature type="sequence variant" id="VAR_000512" description="In Komagome-2; dbSNP:rs80095457." evidence="12">
    <original>H</original>
    <variation>R</variation>
    <location>
        <position position="152"/>
    </location>
</feature>
<feature type="sequence variant" id="VAR_000513" description="In Hawkes bay; dbSNP:rs77656691." evidence="35">
    <original>C</original>
    <variation>F</variation>
    <location>
        <position position="201"/>
    </location>
</feature>
<feature type="sequence variant" id="VAR_014291" description="In dbSNP:rs3210154.">
    <original>A</original>
    <variation>T</variation>
    <location>
        <position position="215"/>
    </location>
</feature>
<feature type="sequence variant" id="VAR_014292" description="In dbSNP:rs3204504.">
    <original>A</original>
    <variation>V</variation>
    <location>
        <position position="215"/>
    </location>
</feature>
<feature type="sequence variant" id="VAR_014293" description="In dbSNP:rs3210163.">
    <original>Q</original>
    <variation>L</variation>
    <location>
        <position position="220"/>
    </location>
</feature>
<feature type="sequence variant" id="VAR_000514" description="In FDAH; dbSNP:rs75002628." evidence="30 33">
    <original>R</original>
    <variation>H</variation>
    <location>
        <position position="242"/>
    </location>
</feature>
<feature type="sequence variant" id="VAR_013013" description="In FDAH; dbSNP:rs75002628." evidence="38">
    <original>R</original>
    <variation>P</variation>
    <location>
        <position position="242"/>
    </location>
</feature>
<feature type="sequence variant" id="VAR_000515" description="In Tradate-2; dbSNP:rs79804069." evidence="32">
    <original>K</original>
    <variation>Q</variation>
    <location>
        <position position="249"/>
    </location>
</feature>
<feature type="sequence variant" id="VAR_000516" description="In Herborn; dbSNP:rs79377490." evidence="36">
    <original>K</original>
    <variation>E</variation>
    <location>
        <position position="264"/>
    </location>
</feature>
<feature type="sequence variant" id="VAR_000517" description="In Malmo-10; dbSNP:rs80002911." evidence="8">
    <original>Q</original>
    <variation>R</variation>
    <location>
        <position position="292"/>
    </location>
</feature>
<feature type="sequence variant" id="VAR_000518" description="In Nagasaki-1; dbSNP:rs79744198." evidence="16">
    <original>D</original>
    <variation>G</variation>
    <location>
        <position position="293"/>
    </location>
</feature>
<feature type="sequence variant" id="VAR_000519" description="In Caserta; dbSNP:rs74718349." evidence="32">
    <original>K</original>
    <variation>N</variation>
    <location>
        <position position="300"/>
    </location>
</feature>
<feature type="sequence variant" id="VAR_000520" description="In Canterbury/New Guinea/Tagliacozzo/Cuneo/Cooperstown; dbSNP:rs72552710." evidence="14 19 23">
    <original>K</original>
    <variation>N</variation>
    <location>
        <position position="337"/>
    </location>
</feature>
<feature type="sequence variant" id="VAR_013014" description="In Bergamo; dbSNP:rs76242087.">
    <original>D</original>
    <variation>G</variation>
    <location>
        <position position="338"/>
    </location>
</feature>
<feature type="sequence variant" id="VAR_013015" description="In Brest; dbSNP:rs76242087.">
    <original>D</original>
    <variation>V</variation>
    <location>
        <position position="338"/>
    </location>
</feature>
<feature type="sequence variant" id="VAR_000521" description="In Malmo-47; dbSNP:rs77544362." evidence="8">
    <original>N</original>
    <variation>K</variation>
    <location>
        <position position="342"/>
    </location>
</feature>
<feature type="sequence variant" id="VAR_000522" description="In Redhill; associated in cis with C-23; dbSNP:rs78953271.">
    <original>A</original>
    <variation>T</variation>
    <location>
        <position position="344"/>
    </location>
</feature>
<feature type="sequence variant" id="VAR_000523" description="In Roma; dbSNP:rs72552711.">
    <original>E</original>
    <variation>K</variation>
    <location>
        <position position="345"/>
    </location>
</feature>
<feature type="sequence variant" id="VAR_000524" description="In Sondrio; dbSNP:rs77354753." evidence="6">
    <original>E</original>
    <variation>K</variation>
    <location>
        <position position="357"/>
    </location>
</feature>
<feature type="sequence variant" id="VAR_000525" description="In Hiroshima-1; dbSNP:rs76593094." evidence="16 41">
    <original>E</original>
    <variation>K</variation>
    <location>
        <position position="378"/>
    </location>
</feature>
<feature type="sequence variant" id="VAR_000526" description="In Coari I/Porto Alegre; dbSNP:rs75791663.">
    <original>E</original>
    <variation>K</variation>
    <location>
        <position position="382"/>
    </location>
</feature>
<feature type="sequence variant" id="VAR_013016" description="In Trieste; dbSNP:rs75069738.">
    <original>K</original>
    <variation>N</variation>
    <location>
        <position position="383"/>
    </location>
</feature>
<feature type="sequence variant" id="VAR_000527" description="In Parklands; dbSNP:rs77187142.">
    <original>D</original>
    <variation>H</variation>
    <location>
        <position position="389"/>
    </location>
</feature>
<feature type="sequence variant" id="VAR_000528" description="In Iowa city-1; dbSNP:rs78538497." evidence="12">
    <original>D</original>
    <variation>V</variation>
    <location>
        <position position="389"/>
    </location>
</feature>
<feature type="sequence variant" id="VAR_000529" description="In Naskapi/Mersin/Komagome-1; dbSNP:rs78166690." evidence="12 20 21">
    <original>K</original>
    <variation>E</variation>
    <location>
        <position position="396"/>
    </location>
</feature>
<feature type="sequence variant" id="VAR_000530" description="In Nagasaki-2; dbSNP:rs77514449." evidence="21">
    <original>D</original>
    <variation>N</variation>
    <location>
        <position position="399"/>
    </location>
</feature>
<feature type="sequence variant" id="VAR_000531" description="In Tochigi; dbSNP:rs79047363." evidence="16">
    <original>E</original>
    <variation>K</variation>
    <location>
        <position position="400"/>
    </location>
</feature>
<feature type="sequence variant" id="VAR_000532" description="In Malmo-5; dbSNP:rs79047363." evidence="8">
    <original>E</original>
    <variation>Q</variation>
    <location>
        <position position="400"/>
    </location>
</feature>
<feature type="sequence variant" id="VAR_000533" description="In Hiroshima-2; dbSNP:rs76483862." evidence="16">
    <original>E</original>
    <variation>K</variation>
    <location>
        <position position="406"/>
    </location>
</feature>
<feature type="sequence variant" id="VAR_014294" evidence="24">
    <original>E</original>
    <variation>K</variation>
    <location>
        <position position="420"/>
    </location>
</feature>
<feature type="sequence variant" id="VAR_013017" description="In Liprizzi; dbSNP:rs78575701.">
    <original>R</original>
    <variation>C</variation>
    <location>
        <position position="434"/>
    </location>
</feature>
<feature type="sequence variant" id="VAR_014295" description="In dbSNP:rs1063469.">
    <original>K</original>
    <variation>E</variation>
    <location>
        <position position="490"/>
    </location>
</feature>
<feature type="sequence variant" id="VAR_000534" description="In Dublin; dbSNP:rs80259813.">
    <original>E</original>
    <variation>K</variation>
    <location>
        <position position="503"/>
    </location>
</feature>
<feature type="sequence variant" id="VAR_000535" description="In Casebrook; dbSNP:rs75920790." evidence="10">
    <original>D</original>
    <variation>N</variation>
    <location>
        <position position="518"/>
    </location>
</feature>
<feature type="sequence variant" id="VAR_000536" description="In Manaus-1/Adana/Lambadi/Vancouver; dbSNP:rs75523493." evidence="14">
    <original>E</original>
    <variation>K</variation>
    <location>
        <position position="525"/>
    </location>
</feature>
<feature type="sequence variant" id="VAR_000537" description="In Ortonovo; dbSNP:rs74826639." evidence="31">
    <original>E</original>
    <variation>K</variation>
    <location>
        <position position="529"/>
    </location>
</feature>
<feature type="sequence variant" id="VAR_013018" description="In Maddaloni; dbSNP:rs78284052.">
    <original>V</original>
    <variation>M</variation>
    <location>
        <position position="557"/>
    </location>
</feature>
<feature type="sequence variant" id="VAR_000538" description="In Castel di Sangro; dbSNP:rs77645174.">
    <original>K</original>
    <variation>E</variation>
    <location>
        <position position="560"/>
    </location>
</feature>
<feature type="sequence variant" id="VAR_000539" description="In Maku; dbSNP:rs80345158." evidence="21">
    <original>K</original>
    <variation>E</variation>
    <location>
        <position position="565"/>
    </location>
</feature>
<feature type="sequence variant" id="VAR_000541" description="In Malmo-61; dbSNP:rs79738788." evidence="8">
    <original>D</original>
    <variation>A</variation>
    <location>
        <position position="574"/>
    </location>
</feature>
<feature type="sequence variant" id="VAR_000540" description="In Mexico; dbSNP:rs79738788." evidence="20">
    <original>D</original>
    <variation>G</variation>
    <location>
        <position position="574"/>
    </location>
</feature>
<feature type="sequence variant" id="VAR_013019" description="In Church bay; dbSNP:rs76671808.">
    <original>K</original>
    <variation>E</variation>
    <location>
        <position position="584"/>
    </location>
</feature>
<feature type="sequence variant" id="VAR_000542" description="In Fukuoka-1/Paris-2; dbSNP:rs76587671." evidence="6 14">
    <original>D</original>
    <variation>N</variation>
    <location>
        <position position="587"/>
    </location>
</feature>
<feature type="sequence variant" id="VAR_000543" description="In Osaka-1; dbSNP:rs75709682." evidence="14">
    <original>E</original>
    <variation>K</variation>
    <location>
        <position position="589"/>
    </location>
</feature>
<feature type="sequence variant" id="VAR_000544" description="In Osaka-2/Phnom Phen/albumin B/Verona; dbSNP:rs79228041." evidence="14 16 19">
    <original>E</original>
    <variation>K</variation>
    <location>
        <position position="594"/>
    </location>
</feature>
<feature type="sequence variant" id="VAR_000547" description="In Venezia.">
    <original>GKKLVAASQAALGL</original>
    <variation>PTMRIRERK</variation>
    <location>
        <begin position="596"/>
        <end position="609"/>
    </location>
</feature>
<feature type="sequence variant" id="VAR_000545" description="In Gent/Milano Fast; dbSNP:rs80106970.">
    <original>K</original>
    <variation>E</variation>
    <location>
        <position position="597"/>
    </location>
</feature>
<feature type="sequence variant" id="VAR_000546" description="In Vanves; dbSNP:rs75738598.">
    <original>K</original>
    <variation>N</variation>
    <location>
        <position position="598"/>
    </location>
</feature>
<feature type="sequence variant" id="VAR_012981" description="In Kenitra.">
    <original>LVAASQAALGL</original>
    <variation>TCCCKSSCLRLITSHLKASQPTMRIRERK</variation>
    <location>
        <begin position="599"/>
        <end position="609"/>
    </location>
</feature>
<feature type="mutagenesis site" description="Impairs metal binding." evidence="18">
    <original>H</original>
    <variation>A</variation>
    <location>
        <position position="91"/>
    </location>
</feature>
<feature type="sequence conflict" description="In Ref. 11; CAH18185." evidence="44" ref="11">
    <original>L</original>
    <variation>P</variation>
    <location>
        <position position="55"/>
    </location>
</feature>
<feature type="sequence conflict" description="In Ref. 4; AAF01333." evidence="44" ref="4">
    <original>R</original>
    <variation>S</variation>
    <location>
        <position position="122"/>
    </location>
</feature>
<feature type="sequence conflict" description="In Ref. 19; AA sequence." evidence="44" ref="19">
    <original>E</original>
    <variation>Q</variation>
    <location>
        <position position="155"/>
    </location>
</feature>
<feature type="sequence conflict" description="In Ref. 24; AA sequence and 25; AA sequence." evidence="44" ref="24 25">
    <original>Y</original>
    <variation>L</variation>
    <location>
        <position position="174"/>
    </location>
</feature>
<feature type="sequence conflict" description="In Ref. 19; AA sequence." evidence="44" ref="19">
    <original>Q</original>
    <variation>E</variation>
    <location>
        <position position="194"/>
    </location>
</feature>
<feature type="sequence conflict" description="In Ref. 10; AAF71067." evidence="44" ref="10">
    <original>PSLAAD</original>
    <variation>MFVLLC</variation>
    <location>
        <begin position="327"/>
        <end position="332"/>
    </location>
</feature>
<feature type="sequence conflict" description="In Ref. 10; AAF71067." evidence="44" ref="10">
    <original>V</original>
    <variation>A</variation>
    <location>
        <position position="405"/>
    </location>
</feature>
<feature type="sequence conflict" description="In Ref. 15; AAH14308." evidence="44" ref="15">
    <original>Q</original>
    <variation>E</variation>
    <location>
        <position position="409"/>
    </location>
</feature>
<feature type="sequence conflict" description="In Ref. 2; CAA23753." evidence="44" ref="2">
    <original>Q</original>
    <variation>E</variation>
    <location>
        <position position="441"/>
    </location>
</feature>
<feature type="sequence conflict" description="In Ref. 4; AAF01333." evidence="44" ref="4">
    <original>E</original>
    <variation>G</variation>
    <location>
        <position position="466"/>
    </location>
</feature>
<feature type="sequence conflict" description="In Ref. 19; AA sequence." evidence="44" ref="19">
    <original>HE</original>
    <variation>EH</variation>
    <location>
        <begin position="488"/>
        <end position="489"/>
    </location>
</feature>
<feature type="sequence conflict" description="In Ref. 11; CAH18185." evidence="44" ref="11">
    <original>K</original>
    <variation>R</variation>
    <location>
        <position position="490"/>
    </location>
</feature>
<feature type="sequence conflict" description="In Ref. 19; AA sequence." evidence="44" ref="19">
    <original>E</original>
    <variation>Q</variation>
    <location>
        <position position="525"/>
    </location>
</feature>
<feature type="sequence conflict" description="In Ref. 11; CAH18185." evidence="44" ref="11">
    <original>T</original>
    <variation>A</variation>
    <location>
        <position position="551"/>
    </location>
</feature>
<feature type="sequence conflict" description="In Ref. 11; CAH18185." evidence="44" ref="11">
    <original>K</original>
    <variation>R</variation>
    <location>
        <position position="560"/>
    </location>
</feature>
<feature type="sequence conflict" description="In Ref. 5; AAN17825." evidence="44" ref="5">
    <original>Q</original>
    <variation>R</variation>
    <location>
        <position position="604"/>
    </location>
</feature>
<feature type="helix" evidence="62">
    <location>
        <begin position="30"/>
        <end position="38"/>
    </location>
</feature>
<feature type="helix" evidence="62">
    <location>
        <begin position="40"/>
        <end position="54"/>
    </location>
</feature>
<feature type="strand" evidence="54">
    <location>
        <begin position="55"/>
        <end position="58"/>
    </location>
</feature>
<feature type="helix" evidence="62">
    <location>
        <begin position="60"/>
        <end position="79"/>
    </location>
</feature>
<feature type="turn" evidence="62">
    <location>
        <begin position="84"/>
        <end position="87"/>
    </location>
</feature>
<feature type="helix" evidence="62">
    <location>
        <begin position="90"/>
        <end position="100"/>
    </location>
</feature>
<feature type="turn" evidence="54">
    <location>
        <begin position="101"/>
        <end position="103"/>
    </location>
</feature>
<feature type="helix" evidence="62">
    <location>
        <begin position="104"/>
        <end position="108"/>
    </location>
</feature>
<feature type="helix" evidence="62">
    <location>
        <begin position="109"/>
        <end position="116"/>
    </location>
</feature>
<feature type="strand" evidence="59">
    <location>
        <begin position="117"/>
        <end position="119"/>
    </location>
</feature>
<feature type="helix" evidence="62">
    <location>
        <begin position="121"/>
        <end position="128"/>
    </location>
</feature>
<feature type="strand" evidence="56">
    <location>
        <begin position="130"/>
        <end position="132"/>
    </location>
</feature>
<feature type="helix" evidence="62">
    <location>
        <begin position="144"/>
        <end position="153"/>
    </location>
</feature>
<feature type="helix" evidence="62">
    <location>
        <begin position="155"/>
        <end position="169"/>
    </location>
</feature>
<feature type="strand" evidence="57">
    <location>
        <begin position="171"/>
        <end position="173"/>
    </location>
</feature>
<feature type="helix" evidence="62">
    <location>
        <begin position="175"/>
        <end position="192"/>
    </location>
</feature>
<feature type="strand" evidence="62">
    <location>
        <begin position="195"/>
        <end position="197"/>
    </location>
</feature>
<feature type="helix" evidence="62">
    <location>
        <begin position="198"/>
        <end position="246"/>
    </location>
</feature>
<feature type="strand" evidence="60">
    <location>
        <begin position="248"/>
        <end position="250"/>
    </location>
</feature>
<feature type="helix" evidence="62">
    <location>
        <begin position="252"/>
        <end position="271"/>
    </location>
</feature>
<feature type="helix" evidence="62">
    <location>
        <begin position="274"/>
        <end position="289"/>
    </location>
</feature>
<feature type="helix" evidence="62">
    <location>
        <begin position="290"/>
        <end position="294"/>
    </location>
</feature>
<feature type="helix" evidence="58">
    <location>
        <begin position="297"/>
        <end position="299"/>
    </location>
</feature>
<feature type="helix" evidence="62">
    <location>
        <begin position="300"/>
        <end position="304"/>
    </location>
</feature>
<feature type="helix" evidence="62">
    <location>
        <begin position="307"/>
        <end position="315"/>
    </location>
</feature>
<feature type="helix" evidence="62">
    <location>
        <begin position="330"/>
        <end position="333"/>
    </location>
</feature>
<feature type="strand" evidence="55">
    <location>
        <begin position="336"/>
        <end position="338"/>
    </location>
</feature>
<feature type="helix" evidence="62">
    <location>
        <begin position="339"/>
        <end position="344"/>
    </location>
</feature>
<feature type="helix" evidence="62">
    <location>
        <begin position="347"/>
        <end position="361"/>
    </location>
</feature>
<feature type="strand" evidence="63">
    <location>
        <begin position="363"/>
        <end position="365"/>
    </location>
</feature>
<feature type="helix" evidence="62">
    <location>
        <begin position="367"/>
        <end position="384"/>
    </location>
</feature>
<feature type="strand" evidence="52">
    <location>
        <begin position="387"/>
        <end position="389"/>
    </location>
</feature>
<feature type="helix" evidence="52">
    <location>
        <begin position="390"/>
        <end position="394"/>
    </location>
</feature>
<feature type="turn" evidence="62">
    <location>
        <begin position="397"/>
        <end position="401"/>
    </location>
</feature>
<feature type="helix" evidence="62">
    <location>
        <begin position="402"/>
        <end position="419"/>
    </location>
</feature>
<feature type="turn" evidence="62">
    <location>
        <begin position="420"/>
        <end position="422"/>
    </location>
</feature>
<feature type="helix" evidence="62">
    <location>
        <begin position="423"/>
        <end position="438"/>
    </location>
</feature>
<feature type="strand" evidence="60">
    <location>
        <begin position="440"/>
        <end position="442"/>
    </location>
</feature>
<feature type="helix" evidence="62">
    <location>
        <begin position="444"/>
        <end position="461"/>
    </location>
</feature>
<feature type="strand" evidence="54">
    <location>
        <begin position="462"/>
        <end position="464"/>
    </location>
</feature>
<feature type="turn" evidence="62">
    <location>
        <begin position="466"/>
        <end position="468"/>
    </location>
</feature>
<feature type="helix" evidence="62">
    <location>
        <begin position="469"/>
        <end position="490"/>
    </location>
</feature>
<feature type="helix" evidence="62">
    <location>
        <begin position="495"/>
        <end position="502"/>
    </location>
</feature>
<feature type="turn" evidence="62">
    <location>
        <begin position="505"/>
        <end position="507"/>
    </location>
</feature>
<feature type="helix" evidence="62">
    <location>
        <begin position="508"/>
        <end position="513"/>
    </location>
</feature>
<feature type="strand" evidence="61">
    <location>
        <begin position="519"/>
        <end position="521"/>
    </location>
</feature>
<feature type="helix" evidence="62">
    <location>
        <begin position="528"/>
        <end position="530"/>
    </location>
</feature>
<feature type="helix" evidence="62">
    <location>
        <begin position="535"/>
        <end position="538"/>
    </location>
</feature>
<feature type="helix" evidence="62">
    <location>
        <begin position="542"/>
        <end position="559"/>
    </location>
</feature>
<feature type="strand" evidence="51">
    <location>
        <begin position="561"/>
        <end position="563"/>
    </location>
</feature>
<feature type="helix" evidence="52">
    <location>
        <begin position="565"/>
        <end position="583"/>
    </location>
</feature>
<feature type="strand" evidence="52">
    <location>
        <begin position="584"/>
        <end position="587"/>
    </location>
</feature>
<feature type="helix" evidence="53">
    <location>
        <begin position="588"/>
        <end position="590"/>
    </location>
</feature>
<feature type="turn" evidence="52">
    <location>
        <begin position="591"/>
        <end position="593"/>
    </location>
</feature>
<feature type="helix" evidence="62">
    <location>
        <begin position="596"/>
        <end position="602"/>
    </location>
</feature>
<feature type="turn" evidence="62">
    <location>
        <begin position="603"/>
        <end position="605"/>
    </location>
</feature>
<protein>
    <recommendedName>
        <fullName>Albumin</fullName>
    </recommendedName>
</protein>
<keyword id="KW-0002">3D-structure</keyword>
<keyword id="KW-0025">Alternative splicing</keyword>
<keyword id="KW-0106">Calcium</keyword>
<keyword id="KW-0165">Cleavage on pair of basic residues</keyword>
<keyword id="KW-0186">Copper</keyword>
<keyword id="KW-0903">Direct protein sequencing</keyword>
<keyword id="KW-0225">Disease variant</keyword>
<keyword id="KW-1015">Disulfide bond</keyword>
<keyword id="KW-0971">Glycation</keyword>
<keyword id="KW-0325">Glycoprotein</keyword>
<keyword id="KW-0446">Lipid-binding</keyword>
<keyword id="KW-0479">Metal-binding</keyword>
<keyword id="KW-0488">Methylation</keyword>
<keyword id="KW-0597">Phosphoprotein</keyword>
<keyword id="KW-1267">Proteomics identification</keyword>
<keyword id="KW-1185">Reference proteome</keyword>
<keyword id="KW-0677">Repeat</keyword>
<keyword id="KW-0964">Secreted</keyword>
<keyword id="KW-0732">Signal</keyword>
<keyword id="KW-0862">Zinc</keyword>
<accession>P02768</accession>
<accession>E7ESS9</accession>
<accession>O95574</accession>
<accession>P04277</accession>
<accession>Q13140</accession>
<accession>Q645G4</accession>
<accession>Q68DN5</accession>
<accession>Q6UXK4</accession>
<accession>Q86YG0</accession>
<accession>Q8IUK7</accession>
<accession>Q9P157</accession>
<accession>Q9P1I7</accession>
<accession>Q9UHS3</accession>
<accession>Q9UJZ0</accession>
<gene>
    <name type="primary">ALB</name>
    <name type="ORF">GIG20</name>
    <name type="ORF">GIG42</name>
    <name type="ORF">PRO0903</name>
    <name type="ORF">PRO1708</name>
    <name type="ORF">PRO2044</name>
    <name type="ORF">PRO2619</name>
    <name type="ORF">PRO2675</name>
    <name type="ORF">UNQ696/PRO1341</name>
</gene>
<organism>
    <name type="scientific">Homo sapiens</name>
    <name type="common">Human</name>
    <dbReference type="NCBI Taxonomy" id="9606"/>
    <lineage>
        <taxon>Eukaryota</taxon>
        <taxon>Metazoa</taxon>
        <taxon>Chordata</taxon>
        <taxon>Craniata</taxon>
        <taxon>Vertebrata</taxon>
        <taxon>Euteleostomi</taxon>
        <taxon>Mammalia</taxon>
        <taxon>Eutheria</taxon>
        <taxon>Euarchontoglires</taxon>
        <taxon>Primates</taxon>
        <taxon>Haplorrhini</taxon>
        <taxon>Catarrhini</taxon>
        <taxon>Hominidae</taxon>
        <taxon>Homo</taxon>
    </lineage>
</organism>
<comment type="function">
    <text evidence="1 11 25 45">Binds water, Ca(2+), Na(+), K(+), fatty acids, hormones, bilirubin and drugs (Probable). Its main function is the regulation of the colloidal osmotic pressure of blood (Probable). Major zinc transporter in plasma, typically binds about 80% of all plasma zinc (PubMed:19021548). Major calcium and magnesium transporter in plasma, binds approximately 45% of circulating calcium and magnesium in plasma (By similarity). Potentially has more than two calcium-binding sites and might additionally bind calcium in a non-specific manner (By similarity). The shared binding site between zinc and calcium at residue Asp-273 suggests a crosstalk between zinc and calcium transport in the blood (By similarity). The rank order of affinity is zinc &gt; calcium &gt; magnesium (By similarity). Binds to the bacterial siderophore enterobactin and inhibits enterobactin-mediated iron uptake of E.coli from ferric transferrin, and may thereby limit the utilization of iron and growth of enteric bacteria such as E.coli (PubMed:6234017). Does not prevent iron uptake by the bacterial siderophore aerobactin (PubMed:6234017).</text>
</comment>
<comment type="subunit">
    <text evidence="3 17 37">Interacts with FCGRT; this interaction regulates ALB homeostasis (PubMed:28330995). Interacts with TASOR (By similarity). In plasma, occurs in a covalently-linked complex with chromophore-bound alpha-1-microglobulin with molar ratio 1:2 and 1:1; this interaction does not prevent fatty acid binding to ALB.</text>
</comment>
<comment type="interaction">
    <interactant intactId="EBI-714423">
        <id>P02768</id>
    </interactant>
    <interactant intactId="EBI-714423">
        <id>P02768</id>
        <label>ALB</label>
    </interactant>
    <organismsDiffer>false</organismsDiffer>
    <experiments>8</experiments>
</comment>
<comment type="interaction">
    <interactant intactId="EBI-714423">
        <id>P02768</id>
    </interactant>
    <interactant intactId="EBI-355727">
        <id>P02786</id>
        <label>TFRC</label>
    </interactant>
    <organismsDiffer>false</organismsDiffer>
    <experiments>2</experiments>
</comment>
<comment type="interaction">
    <interactant intactId="EBI-25830928">
        <id>P02768-3</id>
    </interactant>
    <interactant intactId="EBI-743960">
        <id>Q8N5Z5</id>
        <label>KCTD17</label>
    </interactant>
    <organismsDiffer>false</organismsDiffer>
    <experiments>3</experiments>
</comment>
<comment type="interaction">
    <interactant intactId="EBI-25830928">
        <id>P02768-3</id>
    </interactant>
    <interactant intactId="EBI-25830200">
        <id>Q6GQQ9-2</id>
        <label>OTUD7B</label>
    </interactant>
    <organismsDiffer>false</organismsDiffer>
    <experiments>3</experiments>
</comment>
<comment type="interaction">
    <interactant intactId="EBI-25830928">
        <id>P02768-3</id>
    </interactant>
    <interactant intactId="EBI-78615">
        <id>Q07869</id>
        <label>PPARA</label>
    </interactant>
    <organismsDiffer>false</organismsDiffer>
    <experiments>3</experiments>
</comment>
<comment type="interaction">
    <interactant intactId="EBI-25830928">
        <id>P02768-3</id>
    </interactant>
    <interactant intactId="EBI-620823">
        <id>Q09028</id>
        <label>RBBP4</label>
    </interactant>
    <organismsDiffer>false</organismsDiffer>
    <experiments>3</experiments>
</comment>
<comment type="interaction">
    <interactant intactId="EBI-25830928">
        <id>P02768-3</id>
    </interactant>
    <interactant intactId="EBI-11525489">
        <id>Q86WT6-2</id>
        <label>TRIM69</label>
    </interactant>
    <organismsDiffer>false</organismsDiffer>
    <experiments>3</experiments>
</comment>
<comment type="interaction">
    <interactant intactId="EBI-25830928">
        <id>P02768-3</id>
    </interactant>
    <interactant intactId="EBI-720609">
        <id>O76024</id>
        <label>WFS1</label>
    </interactant>
    <organismsDiffer>false</organismsDiffer>
    <experiments>3</experiments>
</comment>
<comment type="subcellular location">
    <subcellularLocation>
        <location>Secreted</location>
    </subcellularLocation>
</comment>
<comment type="alternative products">
    <event type="alternative splicing"/>
    <isoform>
        <id>P02768-1</id>
        <name>1</name>
        <sequence type="displayed"/>
    </isoform>
    <isoform>
        <id>P02768-2</id>
        <name>2</name>
        <sequence type="described" ref="VSP_021275"/>
    </isoform>
    <isoform>
        <id>P02768-3</id>
        <name>3</name>
        <sequence type="described" ref="VSP_057389"/>
    </isoform>
</comment>
<comment type="tissue specificity">
    <text>Plasma.</text>
</comment>
<comment type="PTM">
    <text>Kenitra variant is partially O-glycosylated at Thr-620. It has two new disulfide bonds Cys-600 to Cys-602 and Cys-601 to Cys-606.</text>
</comment>
<comment type="PTM">
    <text>Glycated in diabetic patients.</text>
</comment>
<comment type="PTM">
    <text evidence="15">Phosphorylated by FAM20C in the extracellular medium.</text>
</comment>
<comment type="PTM">
    <text>Acetylated on Lys-223 by acetylsalicylic acid.</text>
</comment>
<comment type="polymorphism">
    <text>A variant structure of albumin could lead to increased binding of zinc resulting in an asymptomatic augmentation of zinc concentration in the blood. The sequence shown is that of variant albumin A.</text>
</comment>
<comment type="disease" evidence="30 33 38 39">
    <disease id="DI-01565">
        <name>Hyperthyroxinemia, familial dysalbuminemic</name>
        <acronym>FDAH</acronym>
        <description>A disorder characterized by abnormally elevated levels of total serum thyroxine (T4) in euthyroid patients. It is due to abnormal serum albumin that binds T4 with enhanced affinity.</description>
        <dbReference type="MIM" id="615999"/>
    </disease>
    <text>The disease is caused by variants affecting the gene represented in this entry.</text>
</comment>
<comment type="disease" evidence="34">
    <disease id="DI-04235">
        <name>Analbuminemia</name>
        <acronym>ANALBA</acronym>
        <description>A rare autosomal recessive disorder manifested by the presence of a very low amount of circulating serum albumin. Affected individuals manifest mild edema, hypotension, fatigue, and, occasionally, lower body lipodystrophy (mainly in adult females). The most common biochemical finding is hyperlipidemia, with a significant increase in the total and LDL cholesterol concentrations, but normal concentrations of HDL cholesterol and triglycerides.</description>
        <dbReference type="MIM" id="616000"/>
    </disease>
    <text>The disease is caused by variants affecting the gene represented in this entry.</text>
</comment>
<comment type="similarity">
    <text evidence="4">Belongs to the ALB/AFP/VDB family.</text>
</comment>
<comment type="caution">
    <text evidence="44">A peptide arising from positions 166 to 174 was originally (PubMed:3087352, PubMed:2437111) termed neurotensin-related peptide (NRP) or kinetensin and was thought to regulate fat digestion, lipid absorption, and blood flow.</text>
</comment>
<comment type="sequence caution" evidence="44">
    <conflict type="erroneous initiation">
        <sequence resource="EMBL-CDS" id="AAF22034"/>
    </conflict>
    <text>Truncated N-terminus.</text>
</comment>
<comment type="sequence caution" evidence="44">
    <conflict type="erroneous initiation">
        <sequence resource="EMBL-CDS" id="AAF69644"/>
    </conflict>
    <text>Truncated N-terminus.</text>
</comment>
<comment type="sequence caution" evidence="44">
    <conflict type="erroneous initiation">
        <sequence resource="EMBL-CDS" id="AAG35503"/>
    </conflict>
    <text>Truncated N-terminus.</text>
</comment>
<comment type="online information" name="Albumin Website">
    <link uri="https://albumin.org"/>
</comment>
<comment type="online information" name="Wikipedia">
    <link uri="https://en.wikipedia.org/wiki/Serum_albumin"/>
    <text>Serum albumin entry</text>
</comment>
<reference key="1">
    <citation type="journal article" date="1981" name="Nucleic Acids Res.">
        <title>The sequence of human serum albumin cDNA and its expression in E. coli.</title>
        <authorList>
            <person name="Lawn R.M."/>
            <person name="Adelman J."/>
            <person name="Bock S.C."/>
            <person name="Franke A.E."/>
            <person name="Houck C.M."/>
            <person name="Najarian R.C."/>
            <person name="Seeburg P.H."/>
            <person name="Wion K.L."/>
        </authorList>
    </citation>
    <scope>NUCLEOTIDE SEQUENCE [MRNA] (ISOFORM 1)</scope>
    <scope>VARIANT LYS-420</scope>
</reference>
<reference key="2">
    <citation type="journal article" date="1982" name="Proc. Natl. Acad. Sci. U.S.A.">
        <title>Nucleotide sequence and the encoded amino acids of human serum albumin mRNA.</title>
        <authorList>
            <person name="Dugaiczyk A."/>
            <person name="Law S.W."/>
            <person name="Dennison O.E."/>
        </authorList>
    </citation>
    <scope>NUCLEOTIDE SEQUENCE [MRNA] (ISOFORM 1)</scope>
    <scope>VARIANT GLY-121</scope>
</reference>
<reference key="3">
    <citation type="journal article" date="1986" name="J. Biol. Chem.">
        <title>Molecular structure of the human albumin gene is revealed by nucleotide sequence within q11-22 of chromosome 4.</title>
        <authorList>
            <person name="Minghetti P.P."/>
            <person name="Ruffner D.E."/>
            <person name="Kuang W.J."/>
            <person name="Dennison O.E."/>
            <person name="Hawkins J.W."/>
            <person name="Beattie W.G."/>
            <person name="Dugaiczyk A."/>
        </authorList>
    </citation>
    <scope>NUCLEOTIDE SEQUENCE [GENOMIC DNA]</scope>
</reference>
<reference key="4">
    <citation type="submission" date="1999-09" db="EMBL/GenBank/DDBJ databases">
        <title>Human serum albumin.</title>
        <authorList>
            <person name="Yang S."/>
            <person name="Zhang R.A."/>
            <person name="Qi Z.W."/>
            <person name="Yuan Z.Y."/>
        </authorList>
    </citation>
    <scope>NUCLEOTIDE SEQUENCE [MRNA] (ISOFORM 1)</scope>
    <source>
        <tissue>Liver</tissue>
    </source>
</reference>
<reference key="5">
    <citation type="submission" date="2002-08" db="EMBL/GenBank/DDBJ databases">
        <title>The cDNA sequences of human serum albumin.</title>
        <authorList>
            <person name="Huang M.C."/>
            <person name="Wu H.T."/>
        </authorList>
    </citation>
    <scope>NUCLEOTIDE SEQUENCE [MRNA] (ISOFORM 1)</scope>
    <scope>VARIANT HIROSHIMA-1 LYS-378</scope>
</reference>
<reference key="6">
    <citation type="patent" date="1987-12-09" number="EP0248637">
        <title>Induction of galactose regulated gene expression in yeast.</title>
        <authorList>
            <person name="Hinchliffe E."/>
        </authorList>
    </citation>
    <scope>NUCLEOTIDE SEQUENCE [MRNA] (ISOFORM 1)</scope>
</reference>
<reference key="7">
    <citation type="submission" date="2004-08" db="EMBL/GenBank/DDBJ databases">
        <title>High expression HSA in Pichia for Pharmaceutical Use.</title>
        <authorList>
            <person name="Yu Z."/>
            <person name="Fu Y."/>
        </authorList>
    </citation>
    <scope>NUCLEOTIDE SEQUENCE [MRNA] (ISOFORM 1)</scope>
    <source>
        <tissue>Liver</tissue>
    </source>
</reference>
<reference key="8">
    <citation type="submission" date="2006-09" db="EMBL/GenBank/DDBJ databases">
        <title>Cloning and sequence analysis of human albumin gene.</title>
        <authorList>
            <person name="Wang F."/>
            <person name="Huang L."/>
        </authorList>
    </citation>
    <scope>NUCLEOTIDE SEQUENCE [MRNA] (ISOFORM 1)</scope>
</reference>
<reference key="9">
    <citation type="submission" date="2004-02" db="EMBL/GenBank/DDBJ databases">
        <title>Identification of a human cell growth inhibition gene.</title>
        <authorList>
            <person name="Kim J.W."/>
        </authorList>
    </citation>
    <scope>NUCLEOTIDE SEQUENCE [LARGE SCALE MRNA] (ISOFORMS 1 AND 2)</scope>
</reference>
<reference key="10">
    <citation type="journal article" date="2001" name="Genome Res.">
        <title>Gene expression profiling in human fetal liver and identification of tissue- and developmental-stage-specific genes through compiled expression profiles and efficient cloning of full-length cDNAs.</title>
        <authorList>
            <person name="Yu Y."/>
            <person name="Zhang C."/>
            <person name="Zhou G."/>
            <person name="Wu S."/>
            <person name="Qu X."/>
            <person name="Wei H."/>
            <person name="Xing G."/>
            <person name="Dong C."/>
            <person name="Zhai Y."/>
            <person name="Wan J."/>
            <person name="Ouyang S."/>
            <person name="Li L."/>
            <person name="Zhang S."/>
            <person name="Zhou K."/>
            <person name="Zhang Y."/>
            <person name="Wu C."/>
            <person name="He F."/>
        </authorList>
    </citation>
    <scope>NUCLEOTIDE SEQUENCE [LARGE SCALE MRNA] (ISOFORM 1)</scope>
    <source>
        <tissue>Fetal liver</tissue>
    </source>
</reference>
<reference key="11">
    <citation type="journal article" date="2007" name="BMC Genomics">
        <title>The full-ORF clone resource of the German cDNA consortium.</title>
        <authorList>
            <person name="Bechtel S."/>
            <person name="Rosenfelder H."/>
            <person name="Duda A."/>
            <person name="Schmidt C.P."/>
            <person name="Ernst U."/>
            <person name="Wellenreuther R."/>
            <person name="Mehrle A."/>
            <person name="Schuster C."/>
            <person name="Bahr A."/>
            <person name="Bloecker H."/>
            <person name="Heubner D."/>
            <person name="Hoerlein A."/>
            <person name="Michel G."/>
            <person name="Wedler H."/>
            <person name="Koehrer K."/>
            <person name="Ottenwaelder B."/>
            <person name="Poustka A."/>
            <person name="Wiemann S."/>
            <person name="Schupp I."/>
        </authorList>
    </citation>
    <scope>NUCLEOTIDE SEQUENCE [LARGE SCALE MRNA] (ISOFORM 1)</scope>
    <scope>VARIANT TYR-27</scope>
    <source>
        <tissue>Liver</tissue>
    </source>
</reference>
<reference key="12">
    <citation type="journal article" date="2005" name="Nature">
        <title>Generation and annotation of the DNA sequences of human chromosomes 2 and 4.</title>
        <authorList>
            <person name="Hillier L.W."/>
            <person name="Graves T.A."/>
            <person name="Fulton R.S."/>
            <person name="Fulton L.A."/>
            <person name="Pepin K.H."/>
            <person name="Minx P."/>
            <person name="Wagner-McPherson C."/>
            <person name="Layman D."/>
            <person name="Wylie K."/>
            <person name="Sekhon M."/>
            <person name="Becker M.C."/>
            <person name="Fewell G.A."/>
            <person name="Delehaunty K.D."/>
            <person name="Miner T.L."/>
            <person name="Nash W.E."/>
            <person name="Kremitzki C."/>
            <person name="Oddy L."/>
            <person name="Du H."/>
            <person name="Sun H."/>
            <person name="Bradshaw-Cordum H."/>
            <person name="Ali J."/>
            <person name="Carter J."/>
            <person name="Cordes M."/>
            <person name="Harris A."/>
            <person name="Isak A."/>
            <person name="van Brunt A."/>
            <person name="Nguyen C."/>
            <person name="Du F."/>
            <person name="Courtney L."/>
            <person name="Kalicki J."/>
            <person name="Ozersky P."/>
            <person name="Abbott S."/>
            <person name="Armstrong J."/>
            <person name="Belter E.A."/>
            <person name="Caruso L."/>
            <person name="Cedroni M."/>
            <person name="Cotton M."/>
            <person name="Davidson T."/>
            <person name="Desai A."/>
            <person name="Elliott G."/>
            <person name="Erb T."/>
            <person name="Fronick C."/>
            <person name="Gaige T."/>
            <person name="Haakenson W."/>
            <person name="Haglund K."/>
            <person name="Holmes A."/>
            <person name="Harkins R."/>
            <person name="Kim K."/>
            <person name="Kruchowski S.S."/>
            <person name="Strong C.M."/>
            <person name="Grewal N."/>
            <person name="Goyea E."/>
            <person name="Hou S."/>
            <person name="Levy A."/>
            <person name="Martinka S."/>
            <person name="Mead K."/>
            <person name="McLellan M.D."/>
            <person name="Meyer R."/>
            <person name="Randall-Maher J."/>
            <person name="Tomlinson C."/>
            <person name="Dauphin-Kohlberg S."/>
            <person name="Kozlowicz-Reilly A."/>
            <person name="Shah N."/>
            <person name="Swearengen-Shahid S."/>
            <person name="Snider J."/>
            <person name="Strong J.T."/>
            <person name="Thompson J."/>
            <person name="Yoakum M."/>
            <person name="Leonard S."/>
            <person name="Pearman C."/>
            <person name="Trani L."/>
            <person name="Radionenko M."/>
            <person name="Waligorski J.E."/>
            <person name="Wang C."/>
            <person name="Rock S.M."/>
            <person name="Tin-Wollam A.-M."/>
            <person name="Maupin R."/>
            <person name="Latreille P."/>
            <person name="Wendl M.C."/>
            <person name="Yang S.-P."/>
            <person name="Pohl C."/>
            <person name="Wallis J.W."/>
            <person name="Spieth J."/>
            <person name="Bieri T.A."/>
            <person name="Berkowicz N."/>
            <person name="Nelson J.O."/>
            <person name="Osborne J."/>
            <person name="Ding L."/>
            <person name="Meyer R."/>
            <person name="Sabo A."/>
            <person name="Shotland Y."/>
            <person name="Sinha P."/>
            <person name="Wohldmann P.E."/>
            <person name="Cook L.L."/>
            <person name="Hickenbotham M.T."/>
            <person name="Eldred J."/>
            <person name="Williams D."/>
            <person name="Jones T.A."/>
            <person name="She X."/>
            <person name="Ciccarelli F.D."/>
            <person name="Izaurralde E."/>
            <person name="Taylor J."/>
            <person name="Schmutz J."/>
            <person name="Myers R.M."/>
            <person name="Cox D.R."/>
            <person name="Huang X."/>
            <person name="McPherson J.D."/>
            <person name="Mardis E.R."/>
            <person name="Clifton S.W."/>
            <person name="Warren W.C."/>
            <person name="Chinwalla A.T."/>
            <person name="Eddy S.R."/>
            <person name="Marra M.A."/>
            <person name="Ovcharenko I."/>
            <person name="Furey T.S."/>
            <person name="Miller W."/>
            <person name="Eichler E.E."/>
            <person name="Bork P."/>
            <person name="Suyama M."/>
            <person name="Torrents D."/>
            <person name="Waterston R.H."/>
            <person name="Wilson R.K."/>
        </authorList>
    </citation>
    <scope>NUCLEOTIDE SEQUENCE [LARGE SCALE GENOMIC DNA]</scope>
</reference>
<reference key="13">
    <citation type="submission" date="2007-06" db="EMBL/GenBank/DDBJ databases">
        <authorList>
            <consortium name="SeattleSNPs variation discovery resource"/>
        </authorList>
    </citation>
    <scope>NUCLEOTIDE SEQUENCE [GENOMIC DNA]</scope>
</reference>
<reference key="14">
    <citation type="submission" date="2005-07" db="EMBL/GenBank/DDBJ databases">
        <authorList>
            <person name="Mural R.J."/>
            <person name="Istrail S."/>
            <person name="Sutton G.G."/>
            <person name="Florea L."/>
            <person name="Halpern A.L."/>
            <person name="Mobarry C.M."/>
            <person name="Lippert R."/>
            <person name="Walenz B."/>
            <person name="Shatkay H."/>
            <person name="Dew I."/>
            <person name="Miller J.R."/>
            <person name="Flanigan M.J."/>
            <person name="Edwards N.J."/>
            <person name="Bolanos R."/>
            <person name="Fasulo D."/>
            <person name="Halldorsson B.V."/>
            <person name="Hannenhalli S."/>
            <person name="Turner R."/>
            <person name="Yooseph S."/>
            <person name="Lu F."/>
            <person name="Nusskern D.R."/>
            <person name="Shue B.C."/>
            <person name="Zheng X.H."/>
            <person name="Zhong F."/>
            <person name="Delcher A.L."/>
            <person name="Huson D.H."/>
            <person name="Kravitz S.A."/>
            <person name="Mouchard L."/>
            <person name="Reinert K."/>
            <person name="Remington K.A."/>
            <person name="Clark A.G."/>
            <person name="Waterman M.S."/>
            <person name="Eichler E.E."/>
            <person name="Adams M.D."/>
            <person name="Hunkapiller M.W."/>
            <person name="Myers E.W."/>
            <person name="Venter J.C."/>
        </authorList>
    </citation>
    <scope>NUCLEOTIDE SEQUENCE [LARGE SCALE GENOMIC DNA]</scope>
</reference>
<reference key="15">
    <citation type="journal article" date="2004" name="Genome Res.">
        <title>The status, quality, and expansion of the NIH full-length cDNA project: the Mammalian Gene Collection (MGC).</title>
        <authorList>
            <consortium name="The MGC Project Team"/>
        </authorList>
    </citation>
    <scope>NUCLEOTIDE SEQUENCE [LARGE SCALE MRNA] (ISOFORMS 1; 2 AND 3)</scope>
    <source>
        <tissue>Liver</tissue>
        <tissue>Skeletal muscle</tissue>
    </source>
</reference>
<reference key="16">
    <citation type="submission" date="1995-03" db="EMBL/GenBank/DDBJ databases">
        <authorList>
            <person name="Menaya J."/>
            <person name="Parrilla R."/>
            <person name="Ayuso M.S."/>
        </authorList>
    </citation>
    <scope>NUCLEOTIDE SEQUENCE [MRNA] OF 1-455</scope>
    <source>
        <tissue>Liver</tissue>
    </source>
</reference>
<reference key="17">
    <citation type="journal article" date="2003" name="Genome Res.">
        <title>The secreted protein discovery initiative (SPDI), a large-scale effort to identify novel human secreted and transmembrane proteins: a bioinformatics assessment.</title>
        <authorList>
            <person name="Clark H.F."/>
            <person name="Gurney A.L."/>
            <person name="Abaya E."/>
            <person name="Baker K."/>
            <person name="Baldwin D.T."/>
            <person name="Brush J."/>
            <person name="Chen J."/>
            <person name="Chow B."/>
            <person name="Chui C."/>
            <person name="Crowley C."/>
            <person name="Currell B."/>
            <person name="Deuel B."/>
            <person name="Dowd P."/>
            <person name="Eaton D."/>
            <person name="Foster J.S."/>
            <person name="Grimaldi C."/>
            <person name="Gu Q."/>
            <person name="Hass P.E."/>
            <person name="Heldens S."/>
            <person name="Huang A."/>
            <person name="Kim H.S."/>
            <person name="Klimowski L."/>
            <person name="Jin Y."/>
            <person name="Johnson S."/>
            <person name="Lee J."/>
            <person name="Lewis L."/>
            <person name="Liao D."/>
            <person name="Mark M.R."/>
            <person name="Robbie E."/>
            <person name="Sanchez C."/>
            <person name="Schoenfeld J."/>
            <person name="Seshagiri S."/>
            <person name="Simmons L."/>
            <person name="Singh J."/>
            <person name="Smith V."/>
            <person name="Stinson J."/>
            <person name="Vagts A."/>
            <person name="Vandlen R.L."/>
            <person name="Watanabe C."/>
            <person name="Wieand D."/>
            <person name="Woods K."/>
            <person name="Xie M.-H."/>
            <person name="Yansura D.G."/>
            <person name="Yi S."/>
            <person name="Yu G."/>
            <person name="Yuan J."/>
            <person name="Zhang M."/>
            <person name="Zhang Z."/>
            <person name="Goddard A.D."/>
            <person name="Wood W.I."/>
            <person name="Godowski P.J."/>
            <person name="Gray A.M."/>
        </authorList>
    </citation>
    <scope>NUCLEOTIDE SEQUENCE [LARGE SCALE MRNA] OF 1-167</scope>
</reference>
<reference key="18">
    <citation type="journal article" date="1986" name="J. Biol. Chem.">
        <title>The human albumin gene. Characterization of the 5' and 3' flanking regions and the polymorphic gene transcripts.</title>
        <authorList>
            <person name="Urano Y."/>
            <person name="Watanabe K."/>
            <person name="Sakai M."/>
            <person name="Tamaoki T."/>
        </authorList>
    </citation>
    <scope>NUCLEOTIDE SEQUENCE [GENOMIC DNA] OF 1-26</scope>
</reference>
<reference key="19">
    <citation type="journal article" date="1975" name="FEBS Lett.">
        <title>Complete amino acid sequence of human serum albumin.</title>
        <authorList>
            <person name="Meloun B."/>
            <person name="Moravek L."/>
            <person name="Kostka V."/>
        </authorList>
    </citation>
    <scope>PROTEIN SEQUENCE OF 25-609</scope>
</reference>
<reference key="20">
    <citation type="book" date="1979" name="The chemistry and physiology of the human plasma proteins">
        <editorList>
            <person name="Bing D.H."/>
        </editorList>
        <authorList>
            <person name="Brown J.R."/>
            <person name="Shockley P."/>
            <person name="Behrens P.Q."/>
        </authorList>
    </citation>
    <scope>PROTEIN SEQUENCE OF 25-609</scope>
</reference>
<reference key="21">
    <citation type="journal article" date="1994" name="Electrophoresis">
        <title>The human myocardial two-dimensional gel protein database: update 1994.</title>
        <authorList>
            <person name="Corbett J.M."/>
            <person name="Wheeler C.H."/>
            <person name="Baker C.S."/>
            <person name="Yacoub M.H."/>
            <person name="Dunn M.J."/>
        </authorList>
    </citation>
    <scope>PROTEIN SEQUENCE OF 25-44 AND 480-499</scope>
    <source>
        <tissue>Heart</tissue>
    </source>
</reference>
<reference key="22">
    <citation type="journal article" date="2003" name="Nat. Biotechnol.">
        <title>Exploring proteomes and analyzing protein processing by mass spectrometric identification of sorted N-terminal peptides.</title>
        <authorList>
            <person name="Gevaert K."/>
            <person name="Goethals M."/>
            <person name="Martens L."/>
            <person name="Van Damme J."/>
            <person name="Staes A."/>
            <person name="Thomas G.R."/>
            <person name="Vandekerckhove J."/>
        </authorList>
    </citation>
    <scope>PROTEIN SEQUENCE OF 25-34</scope>
    <source>
        <tissue>Platelet</tissue>
    </source>
</reference>
<reference key="23">
    <citation type="submission" date="2008-12" db="UniProtKB">
        <authorList>
            <person name="Lubec G."/>
            <person name="Vishwanath V."/>
            <person name="Chen W.-Q."/>
            <person name="Sun Y."/>
        </authorList>
    </citation>
    <scope>PROTEIN SEQUENCE OF 45-75; 98-130; 162-183; 239-254; 265-281; 287-298; 348-372; 397-434; 438-452; 500-543; 550-558; 570-581 AND 599-609</scope>
    <scope>IDENTIFICATION BY MASS SPECTROMETRY</scope>
    <source>
        <tissue>Brain</tissue>
        <tissue>Cajal-Retzius cell</tissue>
        <tissue>Fetal brain cortex</tissue>
    </source>
</reference>
<reference key="24">
    <citation type="journal article" date="1986" name="Biochem. Biophys. Res. Commun.">
        <title>The amino acid sequence of kinetensin, a novel peptide isolated from pepsin-treated human plasma: homology with human serum albumin, neurotensin and angiotensin.</title>
        <authorList>
            <person name="Mogard M.H."/>
            <person name="Kobayashi R."/>
            <person name="Chen C.F."/>
            <person name="Lee T.D."/>
            <person name="Reeve J.R. Jr."/>
            <person name="Shively J.E."/>
            <person name="Walsh J.H."/>
        </authorList>
    </citation>
    <scope>PROTEIN SEQUENCE OF 166-174</scope>
</reference>
<reference key="25">
    <citation type="journal article" date="1987" name="J. Biol. Chem.">
        <title>Structure of a biologically active neurotensin-related peptide obtained from pepsin-treated albumin(s).</title>
        <authorList>
            <person name="Carraway R.E."/>
            <person name="Mitra S.P."/>
            <person name="Cochrane D.E."/>
        </authorList>
    </citation>
    <scope>PROTEIN SEQUENCE OF 166-174</scope>
</reference>
<reference key="26">
    <citation type="journal article" date="1976" name="FEBS Lett.">
        <title>Lysine residue 199 of human serum albumin is modified by acetylsalicylic acid.</title>
        <authorList>
            <person name="Walker J.E."/>
        </authorList>
    </citation>
    <scope>PROTEIN SEQUENCE OF 222-229</scope>
    <scope>ASPIRIN-ACETYLATION AT LYS-223</scope>
</reference>
<reference key="27">
    <citation type="journal article" date="2004" name="J. Am. Soc. Mass Spectrom.">
        <title>Enzymatic digestion and mass spectrometry in the study of advanced glycation end products/peptides.</title>
        <authorList>
            <person name="Lapolla A."/>
            <person name="Fedele D."/>
            <person name="Reitano R."/>
            <person name="Arico N.C."/>
            <person name="Seraglia R."/>
            <person name="Traldi P."/>
            <person name="Marotta E."/>
            <person name="Tonani R."/>
        </authorList>
    </citation>
    <scope>PROTEIN SEQUENCE OF 250-264</scope>
    <scope>GLYCATION AT LYS-75; LYS-161; LYS-186; LYS-249; LYS-257; LYS-300; LYS-337; LYS-347; LYS-375; LYS-402; LYS-437; LYS-468; LYS-560; LYS-549; LYS-569 AND LYS-597</scope>
    <scope>LACK OF GLYCATION AT LYS-28; LYS-44; LYS-65; LYS-88; LYS-97; LYS-117; LYS-130; LYS-160; LYS-183; LYS-198; LYS-205; LYS-214; LYS-219; LYS-229; LYS-236; LYS-264; LYS-286; LYS-298; LYS-310; LYS-383; LYS-396; LYS-413; LYS-426; LYS-438; LYS-456; LYS-460; LYS-490; LYS-499; LYS-524; LYS-543; LYS-548; LYS-562; LYS-565; LYS-581; LYS-584; LYS-588 AND LYS-598</scope>
    <scope>IDENTIFICATION BY MASS SPECTROMETRY</scope>
</reference>
<reference key="28">
    <citation type="journal article" date="1977" name="Collect. Czech. Chem. Commun.">
        <title>Disulfide bonds in human serum albumin.</title>
        <authorList>
            <person name="Saber M.A."/>
            <person name="Stockbauer P."/>
            <person name="Moravek L."/>
            <person name="Meloun B."/>
        </authorList>
    </citation>
    <scope>DISULFIDE BONDS</scope>
</reference>
<reference key="29">
    <citation type="journal article" date="1978" name="Biochem. J.">
        <title>Lysine residue 240 of human serum albumin is involved in high-affinity binding of bilirubin.</title>
        <authorList>
            <person name="Jacobsen C."/>
        </authorList>
    </citation>
    <scope>BILIRUBIN-BINDING SITE</scope>
</reference>
<reference key="30">
    <citation type="journal article" date="1983" name="J. Biol. Chem.">
        <title>The principal site of nonenzymatic glycosylation of human serum albumin in vivo.</title>
        <authorList>
            <person name="Garlick R.L."/>
            <person name="Mazer J.S."/>
        </authorList>
    </citation>
    <scope>GLYCATION AT LYS-223 AND LYS-549</scope>
</reference>
<reference key="31">
    <citation type="journal article" date="1984" name="Biochemistry">
        <title>Effect of serum albumin on siderophore-mediated utilization of transferrin iron.</title>
        <authorList>
            <person name="Konopka K."/>
            <person name="Neilands J.B."/>
        </authorList>
    </citation>
    <scope>FUNCTION</scope>
</reference>
<reference key="32">
    <citation type="journal article" date="1984" name="J. Biol. Chem.">
        <title>Nonenzymatic glycosylation of human serum albumin alters its conformation and function.</title>
        <authorList>
            <person name="Shaklai N."/>
            <person name="Garlick R.L."/>
            <person name="Bunn H.F."/>
        </authorList>
    </citation>
    <scope>GLYCATION AT LYS-549</scope>
</reference>
<reference key="33">
    <citation type="journal article" date="1986" name="J. Biol. Chem.">
        <title>Nonenzymatic glycosylation of albumin in vivo. Identification of multiple glycosylated sites.</title>
        <authorList>
            <person name="Iberg N."/>
            <person name="Fluckiger R."/>
        </authorList>
    </citation>
    <scope>GLYCATION AT LYS-36; LYS-223; LYS-257; LYS-305; LYS-341; LYS-375; LYS-463; LYS-549 AND LYS-558</scope>
</reference>
<reference key="34">
    <citation type="journal article" date="1994" name="Proc. Natl. Acad. Sci. U.S.A.">
        <title>A nucleotide insertion and frameshift cause analbuminemia in an Italian family.</title>
        <authorList>
            <person name="Watkins S."/>
            <person name="Madison J."/>
            <person name="Galliano M."/>
            <person name="Minchiotti L."/>
            <person name="Putnam F.W."/>
        </authorList>
    </citation>
    <scope>INVOLVEMENT IN ANALBA</scope>
</reference>
<reference key="35">
    <citation type="journal article" date="1997" name="Eur. J. Biochem.">
        <title>Prothrombin, albumin and immunoglobulin A form covalent complexes with alpha1-microglobulin in human plasma.</title>
        <authorList>
            <person name="Berggaard T."/>
            <person name="Thelin N."/>
            <person name="Falkenberg C."/>
            <person name="Enghild J.J."/>
            <person name="Akerstroem B."/>
        </authorList>
    </citation>
    <scope>INTERACTION WITH ALPHA-1-MICROGLOBULIN</scope>
</reference>
<reference key="36">
    <citation type="journal article" date="2008" name="Biochem. Soc. Trans.">
        <title>Albumin as a zinc carrier: properties of its high-affinity zinc-binding site.</title>
        <authorList>
            <person name="Lu J."/>
            <person name="Stewart A.J."/>
            <person name="Sadler P.J."/>
            <person name="Pinheiro T.J."/>
            <person name="Blindauer C.A."/>
        </authorList>
    </citation>
    <scope>FUNCTION</scope>
</reference>
<reference key="37">
    <citation type="journal article" date="2008" name="Proteomics">
        <title>Large-scale phosphoproteome analysis of human liver tissue by enrichment and fractionation of phosphopeptides with strong anion exchange chromatography.</title>
        <authorList>
            <person name="Han G."/>
            <person name="Ye M."/>
            <person name="Zhou H."/>
            <person name="Jiang X."/>
            <person name="Feng S."/>
            <person name="Jiang X."/>
            <person name="Tian R."/>
            <person name="Wan D."/>
            <person name="Zou H."/>
            <person name="Gu J."/>
        </authorList>
    </citation>
    <scope>PHOSPHORYLATION [LARGE SCALE ANALYSIS] AT SER-82</scope>
    <scope>IDENTIFICATION BY MASS SPECTROMETRY [LARGE SCALE ANALYSIS]</scope>
    <source>
        <tissue>Liver</tissue>
    </source>
</reference>
<reference key="38">
    <citation type="journal article" date="2009" name="Sci. Signal.">
        <title>Quantitative phosphoproteomic analysis of T cell receptor signaling reveals system-wide modulation of protein-protein interactions.</title>
        <authorList>
            <person name="Mayya V."/>
            <person name="Lundgren D.H."/>
            <person name="Hwang S.-I."/>
            <person name="Rezaul K."/>
            <person name="Wu L."/>
            <person name="Eng J.K."/>
            <person name="Rodionov V."/>
            <person name="Han D.K."/>
        </authorList>
    </citation>
    <scope>PHOSPHORYLATION [LARGE SCALE ANALYSIS] AT SER-443; THR-444 AND THR-446</scope>
    <scope>IDENTIFICATION BY MASS SPECTROMETRY [LARGE SCALE ANALYSIS]</scope>
    <source>
        <tissue>Leukemic T-cell</tissue>
    </source>
</reference>
<reference key="39">
    <citation type="journal article" date="2011" name="BMC Syst. Biol.">
        <title>Initial characterization of the human central proteome.</title>
        <authorList>
            <person name="Burkard T.R."/>
            <person name="Planyavsky M."/>
            <person name="Kaupe I."/>
            <person name="Breitwieser F.P."/>
            <person name="Buerckstuemmer T."/>
            <person name="Bennett K.L."/>
            <person name="Superti-Furga G."/>
            <person name="Colinge J."/>
        </authorList>
    </citation>
    <scope>IDENTIFICATION BY MASS SPECTROMETRY [LARGE SCALE ANALYSIS]</scope>
</reference>
<reference key="40">
    <citation type="journal article" date="2014" name="J. Proteomics">
        <title>An enzyme assisted RP-RPLC approach for in-depth analysis of human liver phosphoproteome.</title>
        <authorList>
            <person name="Bian Y."/>
            <person name="Song C."/>
            <person name="Cheng K."/>
            <person name="Dong M."/>
            <person name="Wang F."/>
            <person name="Huang J."/>
            <person name="Sun D."/>
            <person name="Wang L."/>
            <person name="Ye M."/>
            <person name="Zou H."/>
        </authorList>
    </citation>
    <scope>PHOSPHORYLATION [LARGE SCALE ANALYSIS] AT SER-82; SER-89 AND SER-513</scope>
    <scope>IDENTIFICATION BY MASS SPECTROMETRY [LARGE SCALE ANALYSIS]</scope>
    <source>
        <tissue>Liver</tissue>
    </source>
</reference>
<reference key="41">
    <citation type="journal article" date="2014" name="Mol. Cell. Proteomics">
        <title>Immunoaffinity enrichment and mass spectrometry analysis of protein methylation.</title>
        <authorList>
            <person name="Guo A."/>
            <person name="Gu H."/>
            <person name="Zhou J."/>
            <person name="Mulhern D."/>
            <person name="Wang Y."/>
            <person name="Lee K.A."/>
            <person name="Yang V."/>
            <person name="Aguiar M."/>
            <person name="Kornhauser J."/>
            <person name="Jia X."/>
            <person name="Ren J."/>
            <person name="Beausoleil S.A."/>
            <person name="Silva J.C."/>
            <person name="Vemulapalli V."/>
            <person name="Bedford M.T."/>
            <person name="Comb M.J."/>
        </authorList>
    </citation>
    <scope>METHYLATION [LARGE SCALE ANALYSIS] AT LYS-558</scope>
    <scope>IDENTIFICATION BY MASS SPECTROMETRY [LARGE SCALE ANALYSIS]</scope>
    <source>
        <tissue>Colon carcinoma</tissue>
    </source>
</reference>
<reference key="42">
    <citation type="journal article" date="2015" name="Cell">
        <title>A single kinase generates the majority of the secreted phosphoproteome.</title>
        <authorList>
            <person name="Tagliabracci V.S."/>
            <person name="Wiley S.E."/>
            <person name="Guo X."/>
            <person name="Kinch L.N."/>
            <person name="Durrant E."/>
            <person name="Wen J."/>
            <person name="Xiao J."/>
            <person name="Cui J."/>
            <person name="Nguyen K.B."/>
            <person name="Engel J.L."/>
            <person name="Coon J.J."/>
            <person name="Grishin N."/>
            <person name="Pinna L.A."/>
            <person name="Pagliarini D.J."/>
            <person name="Dixon J.E."/>
        </authorList>
    </citation>
    <scope>PHOSPHORYLATION AT SER-29; SER-82; SER-89 AND THR-107</scope>
</reference>
<reference key="43">
    <citation type="journal article" date="2015" name="Proteomics">
        <title>N-terminome analysis of the human mitochondrial proteome.</title>
        <authorList>
            <person name="Vaca Jacome A.S."/>
            <person name="Rabilloud T."/>
            <person name="Schaeffer-Reiss C."/>
            <person name="Rompais M."/>
            <person name="Ayoub D."/>
            <person name="Lane L."/>
            <person name="Bairoch A."/>
            <person name="Van Dorsselaer A."/>
            <person name="Carapito C."/>
        </authorList>
    </citation>
    <scope>IDENTIFICATION BY MASS SPECTROMETRY [LARGE SCALE ANALYSIS]</scope>
</reference>
<reference key="44">
    <citation type="journal article" date="2017" name="Proc. Natl. Acad. Sci. U.S.A.">
        <title>Hepatic FcRn regulates albumin homeostasis and susceptibility to liver injury.</title>
        <authorList>
            <person name="Pyzik M."/>
            <person name="Rath T."/>
            <person name="Kuo T.T."/>
            <person name="Win S."/>
            <person name="Baker K."/>
            <person name="Hubbard J.J."/>
            <person name="Grenha R."/>
            <person name="Gandhi A."/>
            <person name="Kraemer T.D."/>
            <person name="Mezo A.R."/>
            <person name="Taylor Z.S."/>
            <person name="McDonnell K."/>
            <person name="Nienaber V."/>
            <person name="Andersen J.T."/>
            <person name="Mizoguchi A."/>
            <person name="Blumberg L."/>
            <person name="Purohit S."/>
            <person name="Jones S.D."/>
            <person name="Christianson G."/>
            <person name="Lencer W.I."/>
            <person name="Sandlie I."/>
            <person name="Kaplowitz N."/>
            <person name="Roopenian D.C."/>
            <person name="Blumberg R.S."/>
        </authorList>
    </citation>
    <scope>INTERACTION WITH FCGRT</scope>
</reference>
<reference key="45">
    <citation type="journal article" date="1989" name="Science">
        <title>Three-dimensional structure of human serum albumin.</title>
        <authorList>
            <person name="Carter D.C."/>
            <person name="He X.-M."/>
            <person name="Munson S.H."/>
            <person name="Twigg P.D."/>
            <person name="Gernert K.M."/>
            <person name="Broom M.B."/>
            <person name="Miller T.Y."/>
        </authorList>
    </citation>
    <scope>X-RAY CRYSTALLOGRAPHY (6.0 ANGSTROMS)</scope>
</reference>
<reference key="46">
    <citation type="journal article" date="1990" name="Science">
        <title>Structure of human serum albumin.</title>
        <authorList>
            <person name="Carter D.C."/>
            <person name="He X.-M."/>
        </authorList>
    </citation>
    <scope>X-RAY CRYSTALLOGRAPHY (4.0 ANGSTROMS)</scope>
</reference>
<reference key="47">
    <citation type="journal article" date="1992" name="Nature">
        <title>Atomic structure and chemistry of human serum albumin.</title>
        <authorList>
            <person name="He X.-M."/>
            <person name="Carter D.C."/>
        </authorList>
    </citation>
    <scope>X-RAY CRYSTALLOGRAPHY (2.8 ANGSTROMS)</scope>
    <scope>FUNCTION</scope>
</reference>
<reference key="48">
    <citation type="journal article" date="1993" name="Nature">
        <authorList>
            <person name="He X.-M."/>
            <person name="Carter D.C."/>
        </authorList>
    </citation>
    <scope>ERRATUM OF PUBMED:1630489</scope>
</reference>
<reference key="49">
    <citation type="journal article" date="1998" name="Nat. Struct. Biol.">
        <title>Crystal structure of human serum albumin complexed with fatty acid reveals an asymmetric distribution of binding sites.</title>
        <authorList>
            <person name="Curry S."/>
            <person name="Mandelkow H."/>
            <person name="Brick P."/>
            <person name="Franks N."/>
        </authorList>
    </citation>
    <scope>X-RAY CRYSTALLOGRAPHY (2.5 ANGSTROMS)</scope>
</reference>
<reference key="50">
    <citation type="journal article" date="1999" name="Protein Eng.">
        <title>Crystal structure of human serum albumin at 2.5-A resolution.</title>
        <authorList>
            <person name="Sugio S."/>
            <person name="Kashima A."/>
            <person name="Mochizuki S."/>
            <person name="Noda M."/>
            <person name="Kobayashi K."/>
        </authorList>
    </citation>
    <scope>X-RAY CRYSTALLOGRAPHY (2.5 ANGSTROMS)</scope>
</reference>
<reference key="51">
    <citation type="journal article" date="2000" name="J. Biol. Chem.">
        <title>Binding of the general anesthetics propofol and halothane to human serum albumin. High resolution crystal structures.</title>
        <authorList>
            <person name="Bhattacharya A.A."/>
            <person name="Curry S."/>
            <person name="Franks N.P."/>
        </authorList>
    </citation>
    <scope>X-RAY CRYSTALLOGRAPHY (2.2 ANGSTROMS) OF 25-609</scope>
</reference>
<reference key="52">
    <citation type="journal article" date="2001" name="J. Mol. Biol.">
        <title>Crystal structures of human serum albumin complexed with monounsaturated and polyunsaturated fatty acids.</title>
        <authorList>
            <person name="Petitpas I."/>
            <person name="Grune T."/>
            <person name="Bhattacharya A.A."/>
            <person name="Curry S."/>
        </authorList>
    </citation>
    <scope>X-RAY CRYSTALLOGRAPHY (2.4 ANGSTROMS)</scope>
</reference>
<reference evidence="46" key="53">
    <citation type="journal article" date="2016" name="Chem. Sci.">
        <title>Circulatory zinc transport is controlled by distinct interdomain sites on mammalian albumins.</title>
        <authorList>
            <person name="Handing K.B."/>
            <person name="Shabalin I.G."/>
            <person name="Kassaar O."/>
            <person name="Khazaipoul S."/>
            <person name="Blindauer C.A."/>
            <person name="Stewart A.J."/>
            <person name="Chruszcz M."/>
            <person name="Minor W."/>
        </authorList>
    </citation>
    <scope>X-RAY CRYSTALLOGRAPHY (2.65 ANGSTROMS) OF 25-609 IN COMPLEX WITH ZINC</scope>
    <scope>DISULFIDE BOND</scope>
    <scope>MUTAGENESIS OF HIS-91</scope>
</reference>
<reference key="54">
    <citation type="journal article" date="1987" name="Biochim. Biophys. Acta">
        <title>Albumin Canterbury (313 Lys--&gt;Asn). A point mutation in the second domain of serum albumin.</title>
        <authorList>
            <person name="Brennan S.O."/>
            <person name="Herbert P."/>
        </authorList>
    </citation>
    <scope>VARIANT CANTERBURY ASN-337</scope>
</reference>
<reference key="55">
    <citation type="journal article" date="1987" name="Proc. Natl. Acad. Sci. U.S.A.">
        <title>Amino acid substitutions in genetic variants of human serum albumin and in sequences inferred from molecular cloning.</title>
        <authorList>
            <person name="Takahashi N."/>
            <person name="Takahashi Y."/>
            <person name="Blumberg B.S."/>
            <person name="Putnam F.W."/>
        </authorList>
    </citation>
    <scope>VARIANT NASKAPI/MERSIN GLU-396</scope>
    <scope>VARIANT MEXICO GLY-574</scope>
</reference>
<reference key="56">
    <citation type="journal article" date="1987" name="Proc. Natl. Acad. Sci. U.S.A.">
        <title>Amino acid substitutions in inherited albumin variants from Amerindian and Japanese populations.</title>
        <authorList>
            <person name="Takshashi N."/>
            <person name="Takahashi Y."/>
            <person name="Isobe T."/>
            <person name="Putnam F.W."/>
            <person name="Fujita M."/>
            <person name="Satoh C."/>
            <person name="Neel J.V."/>
        </authorList>
    </citation>
    <scope>VARIANT NAGASAKI-3 GLN-27</scope>
    <scope>VARIANT YANOMAMA-2 GLU-396</scope>
    <scope>VARIANT NAGASAKI-2 ASN-399</scope>
    <scope>VARIANT MAKU GLU-565</scope>
</reference>
<reference key="57">
    <citation type="journal article" date="1989" name="Proc. Natl. Acad. Sci. U.S.A.">
        <title>Identical structural changes in inherited albumin variants from different populations.</title>
        <authorList>
            <person name="Arai K."/>
            <person name="Ishioka N."/>
            <person name="Huss K."/>
            <person name="Madison J."/>
            <person name="Putnam F.W."/>
        </authorList>
    </citation>
    <scope>VARIANT FUKUOKA-2 HIS-23</scope>
    <scope>VARIANT CHRISTCHURCH/HONOLULU-2 GLN-24</scope>
    <scope>VARIANT TAGLIACOZZO ASN-337</scope>
    <scope>VARIANT ALBUMIN B/OSAKA-2/PHNOM PHEN LYS-594</scope>
</reference>
<reference key="58">
    <citation type="journal article" date="1989" name="Proc. Natl. Acad. Sci. U.S.A.">
        <title>Point substitutions in Japanese alloalbumins.</title>
        <authorList>
            <person name="Arai K."/>
            <person name="Madison J."/>
            <person name="Huss K."/>
            <person name="Ishioka N."/>
            <person name="Satoh C."/>
            <person name="Fujita M."/>
            <person name="Neel J.V."/>
            <person name="Sakurabayashi I."/>
            <person name="Putnam F.W."/>
        </authorList>
    </citation>
    <scope>VARIANT HONOLULU-2 GLN-24</scope>
    <scope>VARIANT NAGASAKI-1 GLY-293</scope>
    <scope>VARIANT HIROSHIMA-1 LYS-378</scope>
    <scope>VARIANT TOCHIGI LYS-400</scope>
    <scope>VARIANT HIROSHIMA-2 LYS-406</scope>
    <scope>VARIANT OSAKA-2 LYS-594</scope>
</reference>
<reference key="59">
    <citation type="journal article" date="1990" name="Proc. Natl. Acad. Sci. U.S.A.">
        <title>Point substitutions in albumin genetic variants from Asia.</title>
        <authorList>
            <person name="Arai K."/>
            <person name="Madison J."/>
            <person name="Shimuzu A."/>
            <person name="Putnam F.W."/>
        </authorList>
    </citation>
    <scope>VARIANT HONOLULU-1 PRO-24</scope>
    <scope>VARIANT HONOLULU-2 GLN-24</scope>
    <scope>VARIANT NAGOYA LYS-143</scope>
    <scope>VARIANT NEW GUINEA ASN-337</scope>
    <scope>VARIANT MANAUS-1/LAMBADI LYS-525</scope>
    <scope>VARIANT FUKUOKA-1 ASN-587</scope>
    <scope>VARIANT OSAKA-1 LYS-589</scope>
    <scope>VARIANT OSAKA-2 LYS-594</scope>
</reference>
<reference key="60">
    <citation type="journal article" date="1990" name="Proc. Natl. Acad. Sci. U.S.A.">
        <title>Albumin Redhill (-1 Arg, 320 Ala--&gt;Thr): a glycoprotein variant of human serum albumin whose precursor has an aberrant signal peptidase cleavage site.</title>
        <authorList>
            <person name="Brennan S.O."/>
            <person name="Myles T."/>
            <person name="Peach R.J."/>
            <person name="Donaldson D."/>
            <person name="George P.M."/>
        </authorList>
    </citation>
    <scope>CHARACTERIZATION OF VARIANT REDHILL</scope>
</reference>
<reference key="61">
    <citation type="journal article" date="1990" name="Proc. Natl. Acad. Sci. U.S.A.">
        <title>Mutations in genetic variants of human serum albumin found in Italy.</title>
        <authorList>
            <person name="Galliano M."/>
            <person name="Minchiotti L."/>
            <person name="Porta F."/>
            <person name="Rossi A."/>
            <person name="Ferri G."/>
            <person name="Madison J."/>
            <person name="Watkins S."/>
            <person name="Putnam F.W."/>
        </authorList>
    </citation>
    <scope>VARIANT VARESE HIS-23</scope>
    <scope>VARIANT TORINO LYS-84</scope>
    <scope>VARIANT VIBO VALENTIA LYS-106</scope>
</reference>
<reference key="62">
    <citation type="journal article" date="1991" name="Proc. Natl. Acad. Sci. U.S.A.">
        <title>A donor splice mutation and a single-base deletion produce two carboxyl-terminal variants of human serum albumin.</title>
        <authorList>
            <person name="Watkins S."/>
            <person name="Madison J."/>
            <person name="Davis E."/>
            <person name="Sakamoto Y."/>
            <person name="Galliano M."/>
            <person name="Minchiotti L."/>
            <person name="Putnam F.W."/>
        </authorList>
    </citation>
    <scope>CHARACTERIZATION OF VARIANT VENEZIA</scope>
</reference>
<reference key="63">
    <citation type="journal article" date="1991" name="Proc. Natl. Acad. Sci. U.S.A.">
        <title>Genetic variants of serum albumin in Americans and Japanese.</title>
        <authorList>
            <person name="Madison J."/>
            <person name="Arai K."/>
            <person name="Feld R.D."/>
            <person name="Kyle R.A."/>
            <person name="Watkins S."/>
            <person name="Davis E."/>
            <person name="Matsuda Y."/>
            <person name="Amaki I."/>
            <person name="Putnam F.W."/>
        </authorList>
    </citation>
    <scope>VARIANT KOMAGOME-3 HIS-23</scope>
    <scope>VARIANT IOWA CITY-2 VAL-25</scope>
    <scope>VARIANT KOMAGOME-2 ARG-152</scope>
    <scope>VARIANT IOWA CITY-1 VAL-389</scope>
    <scope>VARIANT KOMAGOME-1 GLU-396</scope>
</reference>
<reference key="64">
    <citation type="journal article" date="1991" name="Biochim. Biophys. Acta">
        <title>Structural characterization of a glycoprotein variant of human serum albumin: albumin Casebrook (494 Asp--&gt;Asn).</title>
        <authorList>
            <person name="Peach R.J."/>
            <person name="Brennan S.O."/>
        </authorList>
    </citation>
    <scope>VARIANT CASEBROOK ASN-518</scope>
</reference>
<reference key="65">
    <citation type="journal article" date="1992" name="Biochim. Biophys. Acta">
        <title>Two alloalbumins with identical electrophoretic mobility are produced by differently charged amino acid substitutions.</title>
        <authorList>
            <person name="Minchiotti L."/>
            <person name="Galliano M."/>
            <person name="Stoppini M."/>
            <person name="Ferri G."/>
            <person name="Crespeau H."/>
            <person name="Rochu D."/>
            <person name="Porta F."/>
        </authorList>
    </citation>
    <scope>VARIANT SONDRIO LYS-357</scope>
    <scope>VARIANT PARIS-2 ASN-587</scope>
</reference>
<reference key="66">
    <citation type="journal article" date="1992" name="Proc. Natl. Acad. Sci. U.S.A.">
        <title>Alloalbuminemia in Sweden: structural study and phenotypic distribution of nine albumin variants.</title>
        <authorList>
            <person name="Carlson J."/>
            <person name="Sakamoto Y."/>
            <person name="Laurell C.-B."/>
            <person name="Madison J."/>
            <person name="Watkins S."/>
            <person name="Putnam F.W."/>
        </authorList>
    </citation>
    <scope>VARIANT MALMO-I CYS-23</scope>
    <scope>VARIANT MALMO-95 ASN-87</scope>
    <scope>VARIANT MALMO-10 ARG-292</scope>
    <scope>VARIANT MALMO-47 LYS-342</scope>
    <scope>VARIANT MALMO-5 GLN-400</scope>
    <scope>VARIANT MALMO-61 ALA-574</scope>
</reference>
<reference key="67">
    <citation type="journal article" date="1993" name="Eur. J. Biochem.">
        <title>The structural characterization and bilirubin-binding properties of albumin Herborn, a [Lys240--&gt;Glu] albumin mutant.</title>
        <authorList>
            <person name="Minchiotti L."/>
            <person name="Galliano M."/>
            <person name="Zapponi M.C."/>
            <person name="Tenni R."/>
        </authorList>
    </citation>
    <scope>VARIANT HERBORN GLU-264</scope>
</reference>
<reference key="68">
    <citation type="journal article" date="1993" name="Biochim. Biophys. Acta">
        <title>Albumin Hawkes Bay; a low level variant caused by loss of a sulphydryl group at position 177.</title>
        <authorList>
            <person name="Brennan S.O."/>
            <person name="Fellowes A.P."/>
        </authorList>
    </citation>
    <scope>VARIANT HAWKES BAY PHE-201</scope>
</reference>
<reference key="69">
    <citation type="journal article" date="1993" name="Biochim. Biophys. Acta">
        <title>Protein and DNA sequence analysis of a 'private' genetic variant: albumin Ortonovo (Glu-505--&gt;Lys).</title>
        <authorList>
            <person name="Galliano M."/>
            <person name="Minchiotti L."/>
            <person name="Iadarola P."/>
            <person name="Stoppini M."/>
            <person name="Giagnoni P."/>
            <person name="Watkins S."/>
            <person name="Madison J."/>
            <person name="Putnam F.W."/>
        </authorList>
    </citation>
    <scope>VARIANT ORTONOVO LYS-529</scope>
</reference>
<reference key="70">
    <citation type="journal article" date="1994" name="Proc. Natl. Acad. Sci. U.S.A.">
        <title>Genetic variants of human serum albumin in Italy: point mutants and a carboxyl-terminal variant.</title>
        <authorList>
            <person name="Madison J."/>
            <person name="Galliano M."/>
            <person name="Watkins S."/>
            <person name="Minchiotti L."/>
            <person name="Porta F."/>
            <person name="Rossi A."/>
            <person name="Putnam F.W."/>
        </authorList>
    </citation>
    <scope>VARIANT LARINO TYR-27</scope>
    <scope>VARIANT TRADATE-2 GLN-249</scope>
    <scope>VARIANT CASERTA ASN-300</scope>
</reference>
<reference key="71">
    <citation type="journal article" date="1994" name="Biochem. Biophys. Res. Commun.">
        <title>An identical missense mutation in the albumin gene results in familial dysalbuminemic hyperthyroxinemia in 8 unrelated families.</title>
        <authorList>
            <person name="Sunthornthepvarakul T."/>
            <person name="Angkeow P."/>
            <person name="Weiss R.E."/>
            <person name="Hayashi Y."/>
            <person name="Retetoff S."/>
        </authorList>
    </citation>
    <scope>VARIANT FDAH HIS-242</scope>
</reference>
<reference key="72">
    <citation type="journal article" date="1995" name="J. Clin. Endocrinol. Metab.">
        <title>Identification of a human serum albumin species associated with familial dysalbuminemic hyperthyroxinemia.</title>
        <authorList>
            <person name="Rushbrook J.I."/>
            <person name="Becker E."/>
            <person name="Schussler G.C."/>
            <person name="Divino C.M."/>
        </authorList>
    </citation>
    <scope>VARIANT FDAH HIS-242</scope>
    <scope>PROTEIN SEQUENCE OF 25-51</scope>
</reference>
<reference key="73">
    <citation type="journal article" date="1997" name="J. Clin. Endocrinol. Metab.">
        <title>A novel missense mutation in codon 218 of the albumin gene in a distinct phenotype of familial dysalbuminemic hyperthyroxinemia in a Japanese kindred.</title>
        <authorList>
            <person name="Wada N."/>
            <person name="Chiba H."/>
            <person name="Shimizu C."/>
            <person name="Kijima H."/>
            <person name="Kubo M."/>
            <person name="Koike T."/>
        </authorList>
    </citation>
    <scope>VARIANT FDAH PRO-242</scope>
</reference>
<reference key="74">
    <citation type="journal article" date="1998" name="J. Clin. Endocrinol. Metab.">
        <title>Familial dysalbuminemic hypertriiodothyroninemia: a new, dominantly inherited albumin defect.</title>
        <authorList>
            <person name="Sunthornthepvarakul T."/>
            <person name="Likitmaskul S."/>
            <person name="Ngowngarmratana S."/>
            <person name="Angsusingha K."/>
            <person name="Kitvitayasak S."/>
            <person name="Scherberg N.H."/>
            <person name="Refetoff S."/>
        </authorList>
    </citation>
    <scope>VARIANT FDAH PRO-90</scope>
</reference>
<reference key="75">
    <citation type="journal article" date="2001" name="Proteomics">
        <title>Towards defining the urinary proteome using liquid chromatography-tandem mass spectrometry I. Profiling an unfractionated tryptic digest.</title>
        <authorList>
            <person name="Spahr C.S."/>
            <person name="Davis M.T."/>
            <person name="McGinley M.D."/>
            <person name="Robinson J.H."/>
            <person name="Bures E.J."/>
            <person name="Beierle J."/>
            <person name="Mort J."/>
            <person name="Courchesne P.L."/>
            <person name="Chen K."/>
            <person name="Wahl R.C."/>
            <person name="Yu W."/>
            <person name="Luethy R."/>
            <person name="Patterson S.D."/>
        </authorList>
    </citation>
    <scope>VARIANT TYR-73</scope>
    <scope>IDENTIFICATION BY MASS SPECTROMETRY</scope>
    <source>
        <tissue>Urine</tissue>
    </source>
</reference>
<reference key="76">
    <citation type="journal article" date="2001" name="Eur. J. Biochem.">
        <title>A nucleotide insertion and frameshift cause albumin Kenitra, an extended and O-glycosylated mutant of human serum albumin with two additional disulfide bridges.</title>
        <authorList>
            <person name="Minchiotti L."/>
            <person name="Campagnoli M."/>
            <person name="Rossi A."/>
            <person name="Cosulich M.E."/>
            <person name="Monti M."/>
            <person name="Pucci P."/>
            <person name="Kragh-Hansen U."/>
            <person name="Granel B."/>
            <person name="Disdier P."/>
            <person name="Weiller P.J."/>
            <person name="Galliano M."/>
        </authorList>
    </citation>
    <scope>CHARACTERIZATION OF VARIANT KENITRA</scope>
</reference>
<sequence>MKWVTFISLLFLFSSAYSRGVFRRDAHKSEVAHRFKDLGEENFKALVLIAFAQYLQQCPFEDHVKLVNEVTEFAKTCVADESAENCDKSLHTLFGDKLCTVATLRETYGEMADCCAKQEPERNECFLQHKDDNPNLPRLVRPEVDVMCTAFHDNEETFLKKYLYEIARRHPYFYAPELLFFAKRYKAAFTECCQAADKAACLLPKLDELRDEGKASSAKQRLKCASLQKFGERAFKAWAVARLSQRFPKAEFAEVSKLVTDLTKVHTECCHGDLLECADDRADLAKYICENQDSISSKLKECCEKPLLEKSHCIAEVENDEMPADLPSLAADFVESKDVCKNYAEAKDVFLGMFLYEYARRHPDYSVVLLLRLAKTYETTLEKCCAAADPHECYAKVFDEFKPLVEEPQNLIKQNCELFEQLGEYKFQNALLVRYTKKVPQVSTPTLVEVSRNLGKVGSKCCKHPEAKRMPCAEDYLSVVLNQLCVLHEKTPVSDRVTKCCTESLVNRRPCFSALEVDETYVPKEFNAETFTFHADICTLSEKERQIKKQTALVELVKHKPKATKEQLKAVMDDFAAFVEKCCKADDKETCFAEEGKKLVAASQAALGL</sequence>
<evidence type="ECO:0000250" key="1">
    <source>
        <dbReference type="UniProtKB" id="P02769"/>
    </source>
</evidence>
<evidence type="ECO:0000250" key="2">
    <source>
        <dbReference type="UniProtKB" id="P02770"/>
    </source>
</evidence>
<evidence type="ECO:0000250" key="3">
    <source>
        <dbReference type="UniProtKB" id="P07724"/>
    </source>
</evidence>
<evidence type="ECO:0000255" key="4">
    <source>
        <dbReference type="PROSITE-ProRule" id="PRU00769"/>
    </source>
</evidence>
<evidence type="ECO:0000269" key="5">
    <source>
    </source>
</evidence>
<evidence type="ECO:0000269" key="6">
    <source>
    </source>
</evidence>
<evidence type="ECO:0000269" key="7">
    <source>
    </source>
</evidence>
<evidence type="ECO:0000269" key="8">
    <source>
    </source>
</evidence>
<evidence type="ECO:0000269" key="9">
    <source>
    </source>
</evidence>
<evidence type="ECO:0000269" key="10">
    <source>
    </source>
</evidence>
<evidence type="ECO:0000269" key="11">
    <source>
    </source>
</evidence>
<evidence type="ECO:0000269" key="12">
    <source>
    </source>
</evidence>
<evidence type="ECO:0000269" key="13">
    <source>
    </source>
</evidence>
<evidence type="ECO:0000269" key="14">
    <source>
    </source>
</evidence>
<evidence type="ECO:0000269" key="15">
    <source>
    </source>
</evidence>
<evidence type="ECO:0000269" key="16">
    <source>
    </source>
</evidence>
<evidence type="ECO:0000269" key="17">
    <source>
    </source>
</evidence>
<evidence type="ECO:0000269" key="18">
    <source>
    </source>
</evidence>
<evidence type="ECO:0000269" key="19">
    <source>
    </source>
</evidence>
<evidence type="ECO:0000269" key="20">
    <source>
    </source>
</evidence>
<evidence type="ECO:0000269" key="21">
    <source>
    </source>
</evidence>
<evidence type="ECO:0000269" key="22">
    <source>
    </source>
</evidence>
<evidence type="ECO:0000269" key="23">
    <source>
    </source>
</evidence>
<evidence type="ECO:0000269" key="24">
    <source>
    </source>
</evidence>
<evidence type="ECO:0000269" key="25">
    <source>
    </source>
</evidence>
<evidence type="ECO:0000269" key="26">
    <source>
    </source>
</evidence>
<evidence type="ECO:0000269" key="27">
    <source>
    </source>
</evidence>
<evidence type="ECO:0000269" key="28">
    <source>
    </source>
</evidence>
<evidence type="ECO:0000269" key="29">
    <source>
    </source>
</evidence>
<evidence type="ECO:0000269" key="30">
    <source>
    </source>
</evidence>
<evidence type="ECO:0000269" key="31">
    <source>
    </source>
</evidence>
<evidence type="ECO:0000269" key="32">
    <source>
    </source>
</evidence>
<evidence type="ECO:0000269" key="33">
    <source>
    </source>
</evidence>
<evidence type="ECO:0000269" key="34">
    <source>
    </source>
</evidence>
<evidence type="ECO:0000269" key="35">
    <source>
    </source>
</evidence>
<evidence type="ECO:0000269" key="36">
    <source>
    </source>
</evidence>
<evidence type="ECO:0000269" key="37">
    <source>
    </source>
</evidence>
<evidence type="ECO:0000269" key="38">
    <source>
    </source>
</evidence>
<evidence type="ECO:0000269" key="39">
    <source>
    </source>
</evidence>
<evidence type="ECO:0000269" key="40">
    <source ref="28"/>
</evidence>
<evidence type="ECO:0000269" key="41">
    <source ref="5"/>
</evidence>
<evidence type="ECO:0000303" key="42">
    <source>
    </source>
</evidence>
<evidence type="ECO:0000303" key="43">
    <source ref="9"/>
</evidence>
<evidence type="ECO:0000305" key="44"/>
<evidence type="ECO:0000305" key="45">
    <source>
    </source>
</evidence>
<evidence type="ECO:0007744" key="46">
    <source>
        <dbReference type="PDB" id="5IJF"/>
    </source>
</evidence>
<evidence type="ECO:0007744" key="47">
    <source>
    </source>
</evidence>
<evidence type="ECO:0007744" key="48">
    <source>
    </source>
</evidence>
<evidence type="ECO:0007744" key="49">
    <source>
    </source>
</evidence>
<evidence type="ECO:0007744" key="50">
    <source>
    </source>
</evidence>
<evidence type="ECO:0007829" key="51">
    <source>
        <dbReference type="PDB" id="1E7A"/>
    </source>
</evidence>
<evidence type="ECO:0007829" key="52">
    <source>
        <dbReference type="PDB" id="1N5U"/>
    </source>
</evidence>
<evidence type="ECO:0007829" key="53">
    <source>
        <dbReference type="PDB" id="2BXG"/>
    </source>
</evidence>
<evidence type="ECO:0007829" key="54">
    <source>
        <dbReference type="PDB" id="2BXH"/>
    </source>
</evidence>
<evidence type="ECO:0007829" key="55">
    <source>
        <dbReference type="PDB" id="2BXP"/>
    </source>
</evidence>
<evidence type="ECO:0007829" key="56">
    <source>
        <dbReference type="PDB" id="4N0F"/>
    </source>
</evidence>
<evidence type="ECO:0007829" key="57">
    <source>
        <dbReference type="PDB" id="5ID7"/>
    </source>
</evidence>
<evidence type="ECO:0007829" key="58">
    <source>
        <dbReference type="PDB" id="5Z0B"/>
    </source>
</evidence>
<evidence type="ECO:0007829" key="59">
    <source>
        <dbReference type="PDB" id="6A7P"/>
    </source>
</evidence>
<evidence type="ECO:0007829" key="60">
    <source>
        <dbReference type="PDB" id="6EZQ"/>
    </source>
</evidence>
<evidence type="ECO:0007829" key="61">
    <source>
        <dbReference type="PDB" id="6R7S"/>
    </source>
</evidence>
<evidence type="ECO:0007829" key="62">
    <source>
        <dbReference type="PDB" id="6YG9"/>
    </source>
</evidence>
<evidence type="ECO:0007829" key="63">
    <source>
        <dbReference type="PDB" id="7WKZ"/>
    </source>
</evidence>
<name>ALBU_HUMAN</name>